<name>CARP_CRYPA</name>
<organism>
    <name type="scientific">Cryphonectria parasitica</name>
    <name type="common">Chestnut blight fungus</name>
    <name type="synonym">Endothia parasitica</name>
    <dbReference type="NCBI Taxonomy" id="5116"/>
    <lineage>
        <taxon>Eukaryota</taxon>
        <taxon>Fungi</taxon>
        <taxon>Dikarya</taxon>
        <taxon>Ascomycota</taxon>
        <taxon>Pezizomycotina</taxon>
        <taxon>Sordariomycetes</taxon>
        <taxon>Sordariomycetidae</taxon>
        <taxon>Diaporthales</taxon>
        <taxon>Cryphonectriaceae</taxon>
        <taxon>Cryphonectria-Endothia species complex</taxon>
        <taxon>Cryphonectria</taxon>
    </lineage>
</organism>
<feature type="signal peptide" evidence="1">
    <location>
        <begin position="1"/>
        <end position="20"/>
    </location>
</feature>
<feature type="propeptide" id="PRO_0000025879" description="Activation peptide" evidence="3">
    <location>
        <begin position="21"/>
        <end position="89"/>
    </location>
</feature>
<feature type="chain" id="PRO_0000025880" description="Endothiapepsin">
    <location>
        <begin position="90"/>
        <end position="419"/>
    </location>
</feature>
<feature type="domain" description="Peptidase A1" evidence="2">
    <location>
        <begin position="106"/>
        <end position="417"/>
    </location>
</feature>
<feature type="active site">
    <location>
        <position position="124"/>
    </location>
</feature>
<feature type="active site">
    <location>
        <position position="288"/>
    </location>
</feature>
<feature type="disulfide bond">
    <location>
        <begin position="344"/>
        <end position="379"/>
    </location>
</feature>
<feature type="strand" evidence="8">
    <location>
        <begin position="92"/>
        <end position="100"/>
    </location>
</feature>
<feature type="strand" evidence="8">
    <location>
        <begin position="106"/>
        <end position="112"/>
    </location>
</feature>
<feature type="turn" evidence="8">
    <location>
        <begin position="113"/>
        <end position="116"/>
    </location>
</feature>
<feature type="strand" evidence="8">
    <location>
        <begin position="117"/>
        <end position="124"/>
    </location>
</feature>
<feature type="strand" evidence="8">
    <location>
        <begin position="130"/>
        <end position="132"/>
    </location>
</feature>
<feature type="strand" evidence="9">
    <location>
        <begin position="134"/>
        <end position="137"/>
    </location>
</feature>
<feature type="helix" evidence="8">
    <location>
        <begin position="139"/>
        <end position="141"/>
    </location>
</feature>
<feature type="strand" evidence="5">
    <location>
        <begin position="143"/>
        <end position="145"/>
    </location>
</feature>
<feature type="helix" evidence="8">
    <location>
        <begin position="150"/>
        <end position="152"/>
    </location>
</feature>
<feature type="strand" evidence="8">
    <location>
        <begin position="157"/>
        <end position="167"/>
    </location>
</feature>
<feature type="strand" evidence="7">
    <location>
        <begin position="169"/>
        <end position="171"/>
    </location>
</feature>
<feature type="strand" evidence="8">
    <location>
        <begin position="173"/>
        <end position="185"/>
    </location>
</feature>
<feature type="strand" evidence="8">
    <location>
        <begin position="188"/>
        <end position="201"/>
    </location>
</feature>
<feature type="helix" evidence="8">
    <location>
        <begin position="203"/>
        <end position="206"/>
    </location>
</feature>
<feature type="strand" evidence="8">
    <location>
        <begin position="213"/>
        <end position="216"/>
    </location>
</feature>
<feature type="helix" evidence="8">
    <location>
        <begin position="220"/>
        <end position="222"/>
    </location>
</feature>
<feature type="strand" evidence="8">
    <location>
        <begin position="226"/>
        <end position="228"/>
    </location>
</feature>
<feature type="helix" evidence="8">
    <location>
        <begin position="233"/>
        <end position="237"/>
    </location>
</feature>
<feature type="turn" evidence="8">
    <location>
        <begin position="238"/>
        <end position="240"/>
    </location>
</feature>
<feature type="strand" evidence="8">
    <location>
        <begin position="241"/>
        <end position="249"/>
    </location>
</feature>
<feature type="strand" evidence="8">
    <location>
        <begin position="252"/>
        <end position="254"/>
    </location>
</feature>
<feature type="strand" evidence="8">
    <location>
        <begin position="256"/>
        <end position="261"/>
    </location>
</feature>
<feature type="strand" evidence="8">
    <location>
        <begin position="267"/>
        <end position="270"/>
    </location>
</feature>
<feature type="strand" evidence="8">
    <location>
        <begin position="273"/>
        <end position="276"/>
    </location>
</feature>
<feature type="strand" evidence="6">
    <location>
        <begin position="280"/>
        <end position="283"/>
    </location>
</feature>
<feature type="strand" evidence="8">
    <location>
        <begin position="285"/>
        <end position="293"/>
    </location>
</feature>
<feature type="strand" evidence="8">
    <location>
        <begin position="299"/>
        <end position="307"/>
    </location>
</feature>
<feature type="strand" evidence="8">
    <location>
        <begin position="313"/>
        <end position="316"/>
    </location>
</feature>
<feature type="helix" evidence="8">
    <location>
        <begin position="318"/>
        <end position="325"/>
    </location>
</feature>
<feature type="strand" evidence="8">
    <location>
        <begin position="332"/>
        <end position="334"/>
    </location>
</feature>
<feature type="turn" evidence="8">
    <location>
        <begin position="335"/>
        <end position="338"/>
    </location>
</feature>
<feature type="strand" evidence="8">
    <location>
        <begin position="339"/>
        <end position="343"/>
    </location>
</feature>
<feature type="strand" evidence="8">
    <location>
        <begin position="351"/>
        <end position="355"/>
    </location>
</feature>
<feature type="strand" evidence="8">
    <location>
        <begin position="358"/>
        <end position="362"/>
    </location>
</feature>
<feature type="helix" evidence="8">
    <location>
        <begin position="364"/>
        <end position="367"/>
    </location>
</feature>
<feature type="strand" evidence="8">
    <location>
        <begin position="368"/>
        <end position="373"/>
    </location>
</feature>
<feature type="strand" evidence="8">
    <location>
        <begin position="377"/>
        <end position="385"/>
    </location>
</feature>
<feature type="turn" evidence="8">
    <location>
        <begin position="387"/>
        <end position="389"/>
    </location>
</feature>
<feature type="strand" evidence="8">
    <location>
        <begin position="390"/>
        <end position="394"/>
    </location>
</feature>
<feature type="helix" evidence="8">
    <location>
        <begin position="396"/>
        <end position="399"/>
    </location>
</feature>
<feature type="strand" evidence="8">
    <location>
        <begin position="402"/>
        <end position="407"/>
    </location>
</feature>
<feature type="strand" evidence="8">
    <location>
        <begin position="409"/>
        <end position="411"/>
    </location>
</feature>
<feature type="strand" evidence="8">
    <location>
        <begin position="413"/>
        <end position="417"/>
    </location>
</feature>
<dbReference type="EC" id="3.4.23.22"/>
<dbReference type="EMBL" id="X63351">
    <property type="protein sequence ID" value="CAA44952.1"/>
    <property type="molecule type" value="Genomic_DNA"/>
</dbReference>
<dbReference type="EMBL" id="X53997">
    <property type="protein sequence ID" value="CAA37944.1"/>
    <property type="molecule type" value="Genomic_DNA"/>
</dbReference>
<dbReference type="PIR" id="S22136">
    <property type="entry name" value="S22136"/>
</dbReference>
<dbReference type="PDB" id="1E5O">
    <property type="method" value="X-ray"/>
    <property type="resolution" value="2.05 A"/>
    <property type="chains" value="E=90-419"/>
</dbReference>
<dbReference type="PDB" id="1E80">
    <property type="method" value="X-ray"/>
    <property type="resolution" value="2.05 A"/>
    <property type="chains" value="E=90-419"/>
</dbReference>
<dbReference type="PDB" id="1E81">
    <property type="method" value="X-ray"/>
    <property type="resolution" value="2.05 A"/>
    <property type="chains" value="E=90-419"/>
</dbReference>
<dbReference type="PDB" id="1E82">
    <property type="method" value="X-ray"/>
    <property type="resolution" value="2.05 A"/>
    <property type="chains" value="E=90-419"/>
</dbReference>
<dbReference type="PDB" id="1EED">
    <property type="method" value="X-ray"/>
    <property type="resolution" value="2.00 A"/>
    <property type="chains" value="P=90-419"/>
</dbReference>
<dbReference type="PDB" id="1ENT">
    <property type="method" value="X-ray"/>
    <property type="resolution" value="1.90 A"/>
    <property type="chains" value="E=90-419"/>
</dbReference>
<dbReference type="PDB" id="1EPL">
    <property type="method" value="X-ray"/>
    <property type="resolution" value="2.00 A"/>
    <property type="chains" value="E=90-419"/>
</dbReference>
<dbReference type="PDB" id="1EPM">
    <property type="method" value="X-ray"/>
    <property type="resolution" value="1.60 A"/>
    <property type="chains" value="E=90-419"/>
</dbReference>
<dbReference type="PDB" id="1EPN">
    <property type="method" value="X-ray"/>
    <property type="resolution" value="1.60 A"/>
    <property type="chains" value="E=90-419"/>
</dbReference>
<dbReference type="PDB" id="1EPO">
    <property type="method" value="X-ray"/>
    <property type="resolution" value="2.00 A"/>
    <property type="chains" value="E=90-419"/>
</dbReference>
<dbReference type="PDB" id="1EPP">
    <property type="method" value="X-ray"/>
    <property type="resolution" value="1.90 A"/>
    <property type="chains" value="E=90-419"/>
</dbReference>
<dbReference type="PDB" id="1EPQ">
    <property type="method" value="X-ray"/>
    <property type="resolution" value="1.90 A"/>
    <property type="chains" value="E=90-419"/>
</dbReference>
<dbReference type="PDB" id="1EPR">
    <property type="method" value="X-ray"/>
    <property type="resolution" value="2.30 A"/>
    <property type="chains" value="E=90-419"/>
</dbReference>
<dbReference type="PDB" id="1ER8">
    <property type="method" value="X-ray"/>
    <property type="resolution" value="2.00 A"/>
    <property type="chains" value="E=90-419"/>
</dbReference>
<dbReference type="PDB" id="1GKT">
    <property type="method" value="Neutron"/>
    <property type="resolution" value="2.10 A"/>
    <property type="chains" value="A=90-419"/>
</dbReference>
<dbReference type="PDB" id="1GVT">
    <property type="method" value="X-ray"/>
    <property type="resolution" value="0.98 A"/>
    <property type="chains" value="A=90-419"/>
</dbReference>
<dbReference type="PDB" id="1GVU">
    <property type="method" value="X-ray"/>
    <property type="resolution" value="0.94 A"/>
    <property type="chains" value="A=90-419"/>
</dbReference>
<dbReference type="PDB" id="1GVV">
    <property type="method" value="X-ray"/>
    <property type="resolution" value="1.05 A"/>
    <property type="chains" value="A=90-419"/>
</dbReference>
<dbReference type="PDB" id="1GVW">
    <property type="method" value="X-ray"/>
    <property type="resolution" value="1.00 A"/>
    <property type="chains" value="A=90-419"/>
</dbReference>
<dbReference type="PDB" id="1GVX">
    <property type="method" value="X-ray"/>
    <property type="resolution" value="1.00 A"/>
    <property type="chains" value="A=90-419"/>
</dbReference>
<dbReference type="PDB" id="1OD1">
    <property type="method" value="X-ray"/>
    <property type="resolution" value="1.37 A"/>
    <property type="chains" value="A=90-419"/>
</dbReference>
<dbReference type="PDB" id="1OEW">
    <property type="method" value="X-ray"/>
    <property type="resolution" value="0.90 A"/>
    <property type="chains" value="A=90-419"/>
</dbReference>
<dbReference type="PDB" id="1OEX">
    <property type="method" value="X-ray"/>
    <property type="resolution" value="1.10 A"/>
    <property type="chains" value="A=90-419"/>
</dbReference>
<dbReference type="PDB" id="2ER0">
    <property type="method" value="X-ray"/>
    <property type="resolution" value="3.00 A"/>
    <property type="chains" value="E=90-419"/>
</dbReference>
<dbReference type="PDB" id="2ER6">
    <property type="method" value="X-ray"/>
    <property type="resolution" value="2.00 A"/>
    <property type="chains" value="E=90-419"/>
</dbReference>
<dbReference type="PDB" id="2ER7">
    <property type="method" value="X-ray"/>
    <property type="resolution" value="1.60 A"/>
    <property type="chains" value="E=90-419"/>
</dbReference>
<dbReference type="PDB" id="2ER9">
    <property type="method" value="X-ray"/>
    <property type="resolution" value="2.20 A"/>
    <property type="chains" value="E=90-419"/>
</dbReference>
<dbReference type="PDB" id="2JJI">
    <property type="method" value="X-ray"/>
    <property type="resolution" value="1.57 A"/>
    <property type="chains" value="A=90-419"/>
</dbReference>
<dbReference type="PDB" id="2JJJ">
    <property type="method" value="X-ray"/>
    <property type="resolution" value="1.00 A"/>
    <property type="chains" value="A=90-419"/>
</dbReference>
<dbReference type="PDB" id="2V00">
    <property type="method" value="X-ray"/>
    <property type="resolution" value="1.55 A"/>
    <property type="chains" value="A=90-419"/>
</dbReference>
<dbReference type="PDB" id="2VS2">
    <property type="method" value="Neutron"/>
    <property type="resolution" value="2.00 A"/>
    <property type="chains" value="A=90-419"/>
</dbReference>
<dbReference type="PDB" id="3ER3">
    <property type="method" value="X-ray"/>
    <property type="resolution" value="2.00 A"/>
    <property type="chains" value="E=90-419"/>
</dbReference>
<dbReference type="PDB" id="3ER5">
    <property type="method" value="X-ray"/>
    <property type="resolution" value="1.80 A"/>
    <property type="chains" value="E=90-419"/>
</dbReference>
<dbReference type="PDB" id="3LZY">
    <property type="method" value="X-ray"/>
    <property type="resolution" value="1.80 A"/>
    <property type="chains" value="A=90-419"/>
</dbReference>
<dbReference type="PDB" id="3PB5">
    <property type="method" value="X-ray"/>
    <property type="resolution" value="1.90 A"/>
    <property type="chains" value="A=90-419"/>
</dbReference>
<dbReference type="PDB" id="3PBD">
    <property type="method" value="X-ray"/>
    <property type="resolution" value="1.70 A"/>
    <property type="chains" value="A=90-419"/>
</dbReference>
<dbReference type="PDB" id="3PBZ">
    <property type="method" value="X-ray"/>
    <property type="resolution" value="1.48 A"/>
    <property type="chains" value="A=90-419"/>
</dbReference>
<dbReference type="PDB" id="3PCW">
    <property type="method" value="X-ray"/>
    <property type="resolution" value="1.25 A"/>
    <property type="chains" value="A=90-419"/>
</dbReference>
<dbReference type="PDB" id="3PCZ">
    <property type="method" value="X-ray"/>
    <property type="resolution" value="1.50 A"/>
    <property type="chains" value="A=90-419"/>
</dbReference>
<dbReference type="PDB" id="3PGI">
    <property type="method" value="X-ray"/>
    <property type="resolution" value="1.90 A"/>
    <property type="chains" value="A=90-419"/>
</dbReference>
<dbReference type="PDB" id="3PI0">
    <property type="method" value="X-ray"/>
    <property type="resolution" value="1.64 A"/>
    <property type="chains" value="A=90-419"/>
</dbReference>
<dbReference type="PDB" id="3PLD">
    <property type="method" value="X-ray"/>
    <property type="resolution" value="1.40 A"/>
    <property type="chains" value="A=90-419"/>
</dbReference>
<dbReference type="PDB" id="3PLL">
    <property type="method" value="X-ray"/>
    <property type="resolution" value="1.73 A"/>
    <property type="chains" value="A=90-419"/>
</dbReference>
<dbReference type="PDB" id="3PM4">
    <property type="method" value="X-ray"/>
    <property type="resolution" value="1.68 A"/>
    <property type="chains" value="A=90-419"/>
</dbReference>
<dbReference type="PDB" id="3PMU">
    <property type="method" value="X-ray"/>
    <property type="resolution" value="1.43 A"/>
    <property type="chains" value="A=90-419"/>
</dbReference>
<dbReference type="PDB" id="3PMY">
    <property type="method" value="X-ray"/>
    <property type="resolution" value="1.38 A"/>
    <property type="chains" value="A=90-419"/>
</dbReference>
<dbReference type="PDB" id="3PRS">
    <property type="method" value="X-ray"/>
    <property type="resolution" value="1.38 A"/>
    <property type="chains" value="A=90-419"/>
</dbReference>
<dbReference type="PDB" id="3PSY">
    <property type="method" value="X-ray"/>
    <property type="resolution" value="1.43 A"/>
    <property type="chains" value="A=90-419"/>
</dbReference>
<dbReference type="PDB" id="3PWW">
    <property type="method" value="X-ray"/>
    <property type="resolution" value="1.22 A"/>
    <property type="chains" value="A=90-419"/>
</dbReference>
<dbReference type="PDB" id="3Q6Y">
    <property type="method" value="X-ray"/>
    <property type="resolution" value="1.35 A"/>
    <property type="chains" value="A=90-419"/>
</dbReference>
<dbReference type="PDB" id="3T6I">
    <property type="method" value="X-ray"/>
    <property type="resolution" value="1.32 A"/>
    <property type="chains" value="A=90-419"/>
</dbReference>
<dbReference type="PDB" id="3T7P">
    <property type="method" value="X-ray"/>
    <property type="resolution" value="1.35 A"/>
    <property type="chains" value="A=90-419"/>
</dbReference>
<dbReference type="PDB" id="3T7Q">
    <property type="method" value="X-ray"/>
    <property type="resolution" value="1.30 A"/>
    <property type="chains" value="A=90-419"/>
</dbReference>
<dbReference type="PDB" id="3T7X">
    <property type="method" value="X-ray"/>
    <property type="resolution" value="1.27 A"/>
    <property type="chains" value="A=90-419"/>
</dbReference>
<dbReference type="PDB" id="3URI">
    <property type="method" value="X-ray"/>
    <property type="resolution" value="2.10 A"/>
    <property type="chains" value="A=90-419"/>
</dbReference>
<dbReference type="PDB" id="3URJ">
    <property type="method" value="X-ray"/>
    <property type="resolution" value="1.90 A"/>
    <property type="chains" value="A=90-419"/>
</dbReference>
<dbReference type="PDB" id="3URL">
    <property type="method" value="X-ray"/>
    <property type="resolution" value="2.00 A"/>
    <property type="chains" value="A=90-419"/>
</dbReference>
<dbReference type="PDB" id="3WZ6">
    <property type="method" value="X-ray"/>
    <property type="resolution" value="1.40 A"/>
    <property type="chains" value="A=90-419"/>
</dbReference>
<dbReference type="PDB" id="3WZ7">
    <property type="method" value="X-ray"/>
    <property type="resolution" value="1.90 A"/>
    <property type="chains" value="A=90-419"/>
</dbReference>
<dbReference type="PDB" id="3WZ8">
    <property type="method" value="X-ray"/>
    <property type="resolution" value="1.45 A"/>
    <property type="chains" value="A=90-419"/>
</dbReference>
<dbReference type="PDB" id="4APE">
    <property type="method" value="X-ray"/>
    <property type="resolution" value="2.10 A"/>
    <property type="chains" value="A=90-419"/>
</dbReference>
<dbReference type="PDB" id="4ER1">
    <property type="method" value="X-ray"/>
    <property type="resolution" value="2.00 A"/>
    <property type="chains" value="E=90-419"/>
</dbReference>
<dbReference type="PDB" id="4ER2">
    <property type="method" value="X-ray"/>
    <property type="resolution" value="2.00 A"/>
    <property type="chains" value="E=90-419"/>
</dbReference>
<dbReference type="PDB" id="4ER4">
    <property type="method" value="X-ray"/>
    <property type="resolution" value="2.10 A"/>
    <property type="chains" value="E=90-419"/>
</dbReference>
<dbReference type="PDB" id="4KUP">
    <property type="method" value="X-ray"/>
    <property type="resolution" value="1.31 A"/>
    <property type="chains" value="A=90-419"/>
</dbReference>
<dbReference type="PDB" id="4L6B">
    <property type="method" value="X-ray"/>
    <property type="resolution" value="1.37 A"/>
    <property type="chains" value="A=90-419"/>
</dbReference>
<dbReference type="PDB" id="4LAP">
    <property type="method" value="X-ray"/>
    <property type="resolution" value="1.12 A"/>
    <property type="chains" value="A=90-419"/>
</dbReference>
<dbReference type="PDB" id="4LBT">
    <property type="method" value="X-ray"/>
    <property type="resolution" value="1.25 A"/>
    <property type="chains" value="A=90-419"/>
</dbReference>
<dbReference type="PDB" id="4LHH">
    <property type="method" value="X-ray"/>
    <property type="resolution" value="1.73 A"/>
    <property type="chains" value="A=90-419"/>
</dbReference>
<dbReference type="PDB" id="4LP9">
    <property type="method" value="X-ray"/>
    <property type="resolution" value="1.35 A"/>
    <property type="chains" value="A=90-419"/>
</dbReference>
<dbReference type="PDB" id="4Y35">
    <property type="method" value="X-ray"/>
    <property type="resolution" value="1.46 A"/>
    <property type="chains" value="A=90-419"/>
</dbReference>
<dbReference type="PDB" id="4Y36">
    <property type="method" value="X-ray"/>
    <property type="resolution" value="1.59 A"/>
    <property type="chains" value="A=90-419"/>
</dbReference>
<dbReference type="PDB" id="4Y37">
    <property type="method" value="X-ray"/>
    <property type="resolution" value="1.69 A"/>
    <property type="chains" value="A=90-419"/>
</dbReference>
<dbReference type="PDB" id="4Y38">
    <property type="method" value="X-ray"/>
    <property type="resolution" value="1.10 A"/>
    <property type="chains" value="A=90-419"/>
</dbReference>
<dbReference type="PDB" id="4Y39">
    <property type="method" value="X-ray"/>
    <property type="resolution" value="1.20 A"/>
    <property type="chains" value="A=90-419"/>
</dbReference>
<dbReference type="PDB" id="4Y3A">
    <property type="method" value="X-ray"/>
    <property type="resolution" value="1.17 A"/>
    <property type="chains" value="A=90-419"/>
</dbReference>
<dbReference type="PDB" id="4Y3D">
    <property type="method" value="X-ray"/>
    <property type="resolution" value="1.48 A"/>
    <property type="chains" value="A=90-419"/>
</dbReference>
<dbReference type="PDB" id="4Y3E">
    <property type="method" value="X-ray"/>
    <property type="resolution" value="1.25 A"/>
    <property type="chains" value="A=90-419"/>
</dbReference>
<dbReference type="PDB" id="4Y3F">
    <property type="method" value="X-ray"/>
    <property type="resolution" value="1.40 A"/>
    <property type="chains" value="A=90-419"/>
</dbReference>
<dbReference type="PDB" id="4Y3G">
    <property type="method" value="X-ray"/>
    <property type="resolution" value="1.13 A"/>
    <property type="chains" value="A=90-419"/>
</dbReference>
<dbReference type="PDB" id="4Y3H">
    <property type="method" value="X-ray"/>
    <property type="resolution" value="1.23 A"/>
    <property type="chains" value="A=90-419"/>
</dbReference>
<dbReference type="PDB" id="4Y3J">
    <property type="method" value="X-ray"/>
    <property type="resolution" value="1.31 A"/>
    <property type="chains" value="A=90-419"/>
</dbReference>
<dbReference type="PDB" id="4Y3L">
    <property type="method" value="X-ray"/>
    <property type="resolution" value="1.16 A"/>
    <property type="chains" value="A=90-419"/>
</dbReference>
<dbReference type="PDB" id="4Y3M">
    <property type="method" value="X-ray"/>
    <property type="resolution" value="1.55 A"/>
    <property type="chains" value="A=90-419"/>
</dbReference>
<dbReference type="PDB" id="4Y3N">
    <property type="method" value="X-ray"/>
    <property type="resolution" value="1.34 A"/>
    <property type="chains" value="A=90-419"/>
</dbReference>
<dbReference type="PDB" id="4Y3P">
    <property type="method" value="X-ray"/>
    <property type="resolution" value="1.55 A"/>
    <property type="chains" value="A=90-419"/>
</dbReference>
<dbReference type="PDB" id="4Y3Q">
    <property type="method" value="X-ray"/>
    <property type="resolution" value="1.17 A"/>
    <property type="chains" value="A=90-419"/>
</dbReference>
<dbReference type="PDB" id="4Y3R">
    <property type="method" value="X-ray"/>
    <property type="resolution" value="1.13 A"/>
    <property type="chains" value="A=90-419"/>
</dbReference>
<dbReference type="PDB" id="4Y3S">
    <property type="method" value="X-ray"/>
    <property type="resolution" value="1.10 A"/>
    <property type="chains" value="A=90-419"/>
</dbReference>
<dbReference type="PDB" id="4Y3T">
    <property type="method" value="X-ray"/>
    <property type="resolution" value="1.42 A"/>
    <property type="chains" value="A=90-419"/>
</dbReference>
<dbReference type="PDB" id="4Y3W">
    <property type="method" value="X-ray"/>
    <property type="resolution" value="1.58 A"/>
    <property type="chains" value="A=90-419"/>
</dbReference>
<dbReference type="PDB" id="4Y3X">
    <property type="method" value="X-ray"/>
    <property type="resolution" value="1.25 A"/>
    <property type="chains" value="A=90-419"/>
</dbReference>
<dbReference type="PDB" id="4Y3Y">
    <property type="method" value="X-ray"/>
    <property type="resolution" value="1.35 A"/>
    <property type="chains" value="A=90-419"/>
</dbReference>
<dbReference type="PDB" id="4Y3Z">
    <property type="method" value="X-ray"/>
    <property type="resolution" value="1.12 A"/>
    <property type="chains" value="A=90-419"/>
</dbReference>
<dbReference type="PDB" id="4Y41">
    <property type="method" value="X-ray"/>
    <property type="resolution" value="1.40 A"/>
    <property type="chains" value="A=90-419"/>
</dbReference>
<dbReference type="PDB" id="4Y43">
    <property type="method" value="X-ray"/>
    <property type="resolution" value="1.48 A"/>
    <property type="chains" value="A=90-419"/>
</dbReference>
<dbReference type="PDB" id="4Y44">
    <property type="method" value="X-ray"/>
    <property type="resolution" value="1.24 A"/>
    <property type="chains" value="A=90-419"/>
</dbReference>
<dbReference type="PDB" id="4Y45">
    <property type="method" value="X-ray"/>
    <property type="resolution" value="1.06 A"/>
    <property type="chains" value="A=90-419"/>
</dbReference>
<dbReference type="PDB" id="4Y47">
    <property type="method" value="X-ray"/>
    <property type="resolution" value="1.19 A"/>
    <property type="chains" value="A=90-419"/>
</dbReference>
<dbReference type="PDB" id="4Y48">
    <property type="method" value="X-ray"/>
    <property type="resolution" value="1.25 A"/>
    <property type="chains" value="A=90-419"/>
</dbReference>
<dbReference type="PDB" id="4Y4A">
    <property type="method" value="X-ray"/>
    <property type="resolution" value="1.28 A"/>
    <property type="chains" value="A=90-419"/>
</dbReference>
<dbReference type="PDB" id="4Y4B">
    <property type="method" value="X-ray"/>
    <property type="resolution" value="1.11 A"/>
    <property type="chains" value="A=90-419"/>
</dbReference>
<dbReference type="PDB" id="4Y4D">
    <property type="method" value="X-ray"/>
    <property type="resolution" value="1.27 A"/>
    <property type="chains" value="A=90-419"/>
</dbReference>
<dbReference type="PDB" id="4Y4E">
    <property type="method" value="X-ray"/>
    <property type="resolution" value="1.30 A"/>
    <property type="chains" value="A=90-419"/>
</dbReference>
<dbReference type="PDB" id="4Y4G">
    <property type="method" value="X-ray"/>
    <property type="resolution" value="1.44 A"/>
    <property type="chains" value="A=90-419"/>
</dbReference>
<dbReference type="PDB" id="4Y4J">
    <property type="method" value="X-ray"/>
    <property type="resolution" value="1.03 A"/>
    <property type="chains" value="A=90-419"/>
</dbReference>
<dbReference type="PDB" id="4Y4T">
    <property type="method" value="X-ray"/>
    <property type="resolution" value="1.30 A"/>
    <property type="chains" value="A=90-419"/>
</dbReference>
<dbReference type="PDB" id="4Y4U">
    <property type="method" value="X-ray"/>
    <property type="resolution" value="1.75 A"/>
    <property type="chains" value="A=90-419"/>
</dbReference>
<dbReference type="PDB" id="4Y4W">
    <property type="method" value="X-ray"/>
    <property type="resolution" value="1.45 A"/>
    <property type="chains" value="A=90-419"/>
</dbReference>
<dbReference type="PDB" id="4Y4X">
    <property type="method" value="X-ray"/>
    <property type="resolution" value="1.67 A"/>
    <property type="chains" value="A=90-419"/>
</dbReference>
<dbReference type="PDB" id="4Y4Z">
    <property type="method" value="X-ray"/>
    <property type="resolution" value="1.48 A"/>
    <property type="chains" value="A=90-419"/>
</dbReference>
<dbReference type="PDB" id="4Y50">
    <property type="method" value="X-ray"/>
    <property type="resolution" value="1.32 A"/>
    <property type="chains" value="A=90-419"/>
</dbReference>
<dbReference type="PDB" id="4Y51">
    <property type="method" value="X-ray"/>
    <property type="resolution" value="1.60 A"/>
    <property type="chains" value="A=90-419"/>
</dbReference>
<dbReference type="PDB" id="4Y53">
    <property type="method" value="X-ray"/>
    <property type="resolution" value="1.62 A"/>
    <property type="chains" value="A=90-419"/>
</dbReference>
<dbReference type="PDB" id="4Y54">
    <property type="method" value="X-ray"/>
    <property type="resolution" value="1.61 A"/>
    <property type="chains" value="A=90-419"/>
</dbReference>
<dbReference type="PDB" id="4Y56">
    <property type="method" value="X-ray"/>
    <property type="resolution" value="1.63 A"/>
    <property type="chains" value="A=90-419"/>
</dbReference>
<dbReference type="PDB" id="4Y57">
    <property type="method" value="X-ray"/>
    <property type="resolution" value="1.49 A"/>
    <property type="chains" value="A=90-419"/>
</dbReference>
<dbReference type="PDB" id="4Y58">
    <property type="method" value="X-ray"/>
    <property type="resolution" value="1.17 A"/>
    <property type="chains" value="A=90-419"/>
</dbReference>
<dbReference type="PDB" id="4Y5A">
    <property type="method" value="X-ray"/>
    <property type="resolution" value="1.45 A"/>
    <property type="chains" value="A=90-419"/>
</dbReference>
<dbReference type="PDB" id="4Y5B">
    <property type="method" value="X-ray"/>
    <property type="resolution" value="1.24 A"/>
    <property type="chains" value="A=90-419"/>
</dbReference>
<dbReference type="PDB" id="4Y5C">
    <property type="method" value="X-ray"/>
    <property type="resolution" value="1.19 A"/>
    <property type="chains" value="A=90-419"/>
</dbReference>
<dbReference type="PDB" id="4Y5E">
    <property type="method" value="X-ray"/>
    <property type="resolution" value="1.12 A"/>
    <property type="chains" value="A=90-419"/>
</dbReference>
<dbReference type="PDB" id="4Y5G">
    <property type="method" value="X-ray"/>
    <property type="resolution" value="1.47 A"/>
    <property type="chains" value="A=90-419"/>
</dbReference>
<dbReference type="PDB" id="4Y5K">
    <property type="method" value="X-ray"/>
    <property type="resolution" value="1.44 A"/>
    <property type="chains" value="A=90-419"/>
</dbReference>
<dbReference type="PDB" id="4Y5L">
    <property type="method" value="X-ray"/>
    <property type="resolution" value="0.99 A"/>
    <property type="chains" value="A=90-419"/>
</dbReference>
<dbReference type="PDB" id="4Y5M">
    <property type="method" value="X-ray"/>
    <property type="resolution" value="1.28 A"/>
    <property type="chains" value="A=90-419"/>
</dbReference>
<dbReference type="PDB" id="4Y5N">
    <property type="method" value="X-ray"/>
    <property type="resolution" value="1.29 A"/>
    <property type="chains" value="A=90-419"/>
</dbReference>
<dbReference type="PDB" id="4Y5P">
    <property type="method" value="X-ray"/>
    <property type="resolution" value="1.23 A"/>
    <property type="chains" value="A=90-419"/>
</dbReference>
<dbReference type="PDB" id="4YCK">
    <property type="method" value="X-ray"/>
    <property type="resolution" value="1.07 A"/>
    <property type="chains" value="A=90-419"/>
</dbReference>
<dbReference type="PDB" id="4YCT">
    <property type="method" value="X-ray"/>
    <property type="resolution" value="1.13 A"/>
    <property type="chains" value="A=90-419"/>
</dbReference>
<dbReference type="PDB" id="4YCY">
    <property type="method" value="X-ray"/>
    <property type="resolution" value="1.70 A"/>
    <property type="chains" value="A=90-419"/>
</dbReference>
<dbReference type="PDB" id="4YD3">
    <property type="method" value="X-ray"/>
    <property type="resolution" value="1.25 A"/>
    <property type="chains" value="A=90-419"/>
</dbReference>
<dbReference type="PDB" id="4YD4">
    <property type="method" value="X-ray"/>
    <property type="resolution" value="1.27 A"/>
    <property type="chains" value="A=90-419"/>
</dbReference>
<dbReference type="PDB" id="4YD5">
    <property type="method" value="X-ray"/>
    <property type="resolution" value="1.21 A"/>
    <property type="chains" value="A=90-419"/>
</dbReference>
<dbReference type="PDB" id="4YD6">
    <property type="method" value="X-ray"/>
    <property type="resolution" value="1.30 A"/>
    <property type="chains" value="A=90-419"/>
</dbReference>
<dbReference type="PDB" id="4YD7">
    <property type="method" value="X-ray"/>
    <property type="resolution" value="1.42 A"/>
    <property type="chains" value="A=90-419"/>
</dbReference>
<dbReference type="PDB" id="4ZE6">
    <property type="method" value="X-ray"/>
    <property type="resolution" value="1.17 A"/>
    <property type="chains" value="A=90-419"/>
</dbReference>
<dbReference type="PDB" id="4ZEA">
    <property type="method" value="X-ray"/>
    <property type="resolution" value="1.20 A"/>
    <property type="chains" value="A=90-419"/>
</dbReference>
<dbReference type="PDB" id="5DPZ">
    <property type="method" value="X-ray"/>
    <property type="resolution" value="1.33 A"/>
    <property type="chains" value="A=90-419"/>
</dbReference>
<dbReference type="PDB" id="5DQ1">
    <property type="method" value="X-ray"/>
    <property type="resolution" value="1.49 A"/>
    <property type="chains" value="A=90-419"/>
</dbReference>
<dbReference type="PDB" id="5DQ2">
    <property type="method" value="X-ray"/>
    <property type="resolution" value="1.51 A"/>
    <property type="chains" value="A=90-419"/>
</dbReference>
<dbReference type="PDB" id="5DQ4">
    <property type="method" value="X-ray"/>
    <property type="resolution" value="1.15 A"/>
    <property type="chains" value="A=90-419"/>
</dbReference>
<dbReference type="PDB" id="5DQ5">
    <property type="method" value="X-ray"/>
    <property type="resolution" value="1.47 A"/>
    <property type="chains" value="A=90-419"/>
</dbReference>
<dbReference type="PDB" id="5DR0">
    <property type="method" value="X-ray"/>
    <property type="resolution" value="1.40 A"/>
    <property type="chains" value="A=90-419"/>
</dbReference>
<dbReference type="PDB" id="5DR1">
    <property type="method" value="X-ray"/>
    <property type="resolution" value="1.45 A"/>
    <property type="chains" value="A=90-419"/>
</dbReference>
<dbReference type="PDB" id="5DR3">
    <property type="method" value="X-ray"/>
    <property type="resolution" value="1.24 A"/>
    <property type="chains" value="A=90-419"/>
</dbReference>
<dbReference type="PDB" id="5DR4">
    <property type="method" value="X-ray"/>
    <property type="resolution" value="1.50 A"/>
    <property type="chains" value="A=90-419"/>
</dbReference>
<dbReference type="PDB" id="5DR7">
    <property type="method" value="X-ray"/>
    <property type="resolution" value="1.23 A"/>
    <property type="chains" value="A=90-419"/>
</dbReference>
<dbReference type="PDB" id="5DR8">
    <property type="method" value="X-ray"/>
    <property type="resolution" value="1.47 A"/>
    <property type="chains" value="A=90-419"/>
</dbReference>
<dbReference type="PDB" id="5ER1">
    <property type="method" value="X-ray"/>
    <property type="resolution" value="2.00 A"/>
    <property type="chains" value="E=90-419"/>
</dbReference>
<dbReference type="PDB" id="5ER2">
    <property type="method" value="X-ray"/>
    <property type="resolution" value="1.80 A"/>
    <property type="chains" value="E=90-419"/>
</dbReference>
<dbReference type="PDB" id="5HCO">
    <property type="method" value="X-ray"/>
    <property type="resolution" value="1.17 A"/>
    <property type="chains" value="A=90-419"/>
</dbReference>
<dbReference type="PDB" id="5HCT">
    <property type="method" value="X-ray"/>
    <property type="resolution" value="1.36 A"/>
    <property type="chains" value="A=1-419"/>
</dbReference>
<dbReference type="PDB" id="5IS4">
    <property type="method" value="X-ray"/>
    <property type="resolution" value="1.37 A"/>
    <property type="chains" value="A=90-419"/>
</dbReference>
<dbReference type="PDB" id="5ISJ">
    <property type="method" value="X-ray"/>
    <property type="resolution" value="1.65 A"/>
    <property type="chains" value="A=90-419"/>
</dbReference>
<dbReference type="PDB" id="5ISK">
    <property type="method" value="X-ray"/>
    <property type="resolution" value="1.14 A"/>
    <property type="chains" value="A=90-419"/>
</dbReference>
<dbReference type="PDB" id="5J25">
    <property type="method" value="X-ray"/>
    <property type="resolution" value="1.24 A"/>
    <property type="chains" value="A=90-419"/>
</dbReference>
<dbReference type="PDB" id="5LWR">
    <property type="method" value="X-ray"/>
    <property type="resolution" value="1.25 A"/>
    <property type="chains" value="A=90-419"/>
</dbReference>
<dbReference type="PDB" id="5LWS">
    <property type="method" value="X-ray"/>
    <property type="resolution" value="1.03 A"/>
    <property type="chains" value="A=90-419"/>
</dbReference>
<dbReference type="PDB" id="5LWT">
    <property type="method" value="X-ray"/>
    <property type="resolution" value="1.07 A"/>
    <property type="chains" value="A=90-419"/>
</dbReference>
<dbReference type="PDB" id="5LWU">
    <property type="method" value="X-ray"/>
    <property type="resolution" value="1.11 A"/>
    <property type="chains" value="A=90-419"/>
</dbReference>
<dbReference type="PDB" id="5MB0">
    <property type="method" value="X-ray"/>
    <property type="resolution" value="1.15 A"/>
    <property type="chains" value="A=90-419"/>
</dbReference>
<dbReference type="PDB" id="5MB3">
    <property type="method" value="X-ray"/>
    <property type="resolution" value="1.05 A"/>
    <property type="chains" value="A=90-419"/>
</dbReference>
<dbReference type="PDB" id="5MB5">
    <property type="method" value="X-ray"/>
    <property type="resolution" value="0.98 A"/>
    <property type="chains" value="A=90-419"/>
</dbReference>
<dbReference type="PDB" id="5MB6">
    <property type="method" value="X-ray"/>
    <property type="resolution" value="1.20 A"/>
    <property type="chains" value="A=90-419"/>
</dbReference>
<dbReference type="PDB" id="5MB7">
    <property type="method" value="X-ray"/>
    <property type="resolution" value="1.30 A"/>
    <property type="chains" value="A=90-419"/>
</dbReference>
<dbReference type="PDB" id="5OG7">
    <property type="method" value="X-ray"/>
    <property type="resolution" value="1.82 A"/>
    <property type="chains" value="A=90-419"/>
</dbReference>
<dbReference type="PDB" id="5OJE">
    <property type="method" value="X-ray"/>
    <property type="resolution" value="1.58 A"/>
    <property type="chains" value="A=90-419"/>
</dbReference>
<dbReference type="PDB" id="5OYQ">
    <property type="method" value="X-ray"/>
    <property type="resolution" value="1.49 A"/>
    <property type="chains" value="A=90-419"/>
</dbReference>
<dbReference type="PDB" id="5OYR">
    <property type="method" value="X-ray"/>
    <property type="resolution" value="1.49 A"/>
    <property type="chains" value="A=90-419"/>
</dbReference>
<dbReference type="PDB" id="5OYS">
    <property type="method" value="X-ray"/>
    <property type="resolution" value="1.65 A"/>
    <property type="chains" value="A=90-419"/>
</dbReference>
<dbReference type="PDB" id="5OYT">
    <property type="method" value="X-ray"/>
    <property type="resolution" value="1.59 A"/>
    <property type="chains" value="A=90-419"/>
</dbReference>
<dbReference type="PDB" id="5OYU">
    <property type="method" value="X-ray"/>
    <property type="resolution" value="1.25 A"/>
    <property type="chains" value="A=90-419"/>
</dbReference>
<dbReference type="PDB" id="5OYV">
    <property type="method" value="X-ray"/>
    <property type="resolution" value="1.44 A"/>
    <property type="chains" value="A=90-419"/>
</dbReference>
<dbReference type="PDB" id="5OYW">
    <property type="method" value="X-ray"/>
    <property type="resolution" value="1.48 A"/>
    <property type="chains" value="A=90-419"/>
</dbReference>
<dbReference type="PDB" id="5OYX">
    <property type="method" value="X-ray"/>
    <property type="resolution" value="1.65 A"/>
    <property type="chains" value="A=90-419"/>
</dbReference>
<dbReference type="PDB" id="5OYY">
    <property type="method" value="X-ray"/>
    <property type="resolution" value="1.45 A"/>
    <property type="chains" value="A=90-419"/>
</dbReference>
<dbReference type="PDB" id="5OYZ">
    <property type="method" value="X-ray"/>
    <property type="resolution" value="1.49 A"/>
    <property type="chains" value="A=90-419"/>
</dbReference>
<dbReference type="PDB" id="5OZ0">
    <property type="method" value="X-ray"/>
    <property type="resolution" value="1.45 A"/>
    <property type="chains" value="A=90-419"/>
</dbReference>
<dbReference type="PDB" id="5OZ1">
    <property type="method" value="X-ray"/>
    <property type="resolution" value="1.48 A"/>
    <property type="chains" value="A=90-419"/>
</dbReference>
<dbReference type="PDB" id="5OZ2">
    <property type="method" value="X-ray"/>
    <property type="resolution" value="1.61 A"/>
    <property type="chains" value="A=90-419"/>
</dbReference>
<dbReference type="PDB" id="5OZ3">
    <property type="method" value="X-ray"/>
    <property type="resolution" value="1.75 A"/>
    <property type="chains" value="A=90-419"/>
</dbReference>
<dbReference type="PDB" id="5OZ4">
    <property type="method" value="X-ray"/>
    <property type="resolution" value="1.48 A"/>
    <property type="chains" value="A=90-419"/>
</dbReference>
<dbReference type="PDB" id="5OZ5">
    <property type="method" value="X-ray"/>
    <property type="resolution" value="1.49 A"/>
    <property type="chains" value="A=90-419"/>
</dbReference>
<dbReference type="PDB" id="5OZ6">
    <property type="method" value="X-ray"/>
    <property type="resolution" value="1.55 A"/>
    <property type="chains" value="A=90-419"/>
</dbReference>
<dbReference type="PDB" id="5OZ7">
    <property type="method" value="X-ray"/>
    <property type="resolution" value="1.61 A"/>
    <property type="chains" value="A=90-419"/>
</dbReference>
<dbReference type="PDB" id="5OZ8">
    <property type="method" value="X-ray"/>
    <property type="resolution" value="1.56 A"/>
    <property type="chains" value="A=90-419"/>
</dbReference>
<dbReference type="PDB" id="5OZ9">
    <property type="method" value="X-ray"/>
    <property type="resolution" value="1.61 A"/>
    <property type="chains" value="A=90-419"/>
</dbReference>
<dbReference type="PDB" id="5OZA">
    <property type="method" value="X-ray"/>
    <property type="resolution" value="1.49 A"/>
    <property type="chains" value="A=90-419"/>
</dbReference>
<dbReference type="PDB" id="5OZB">
    <property type="method" value="X-ray"/>
    <property type="resolution" value="1.49 A"/>
    <property type="chains" value="A=90-419"/>
</dbReference>
<dbReference type="PDB" id="5OZC">
    <property type="method" value="X-ray"/>
    <property type="resolution" value="1.71 A"/>
    <property type="chains" value="A=90-419"/>
</dbReference>
<dbReference type="PDB" id="5OZD">
    <property type="method" value="X-ray"/>
    <property type="resolution" value="1.37 A"/>
    <property type="chains" value="A=90-419"/>
</dbReference>
<dbReference type="PDB" id="5OZE">
    <property type="method" value="X-ray"/>
    <property type="resolution" value="1.24 A"/>
    <property type="chains" value="A=90-419"/>
</dbReference>
<dbReference type="PDB" id="5OZF">
    <property type="method" value="X-ray"/>
    <property type="resolution" value="1.53 A"/>
    <property type="chains" value="A=90-419"/>
</dbReference>
<dbReference type="PDB" id="5OZG">
    <property type="method" value="X-ray"/>
    <property type="resolution" value="1.49 A"/>
    <property type="chains" value="A=90-419"/>
</dbReference>
<dbReference type="PDB" id="5OZH">
    <property type="method" value="X-ray"/>
    <property type="resolution" value="1.49 A"/>
    <property type="chains" value="A=90-419"/>
</dbReference>
<dbReference type="PDB" id="5OZI">
    <property type="method" value="X-ray"/>
    <property type="resolution" value="1.50 A"/>
    <property type="chains" value="A=90-419"/>
</dbReference>
<dbReference type="PDB" id="5OZJ">
    <property type="method" value="X-ray"/>
    <property type="resolution" value="1.49 A"/>
    <property type="chains" value="A=90-419"/>
</dbReference>
<dbReference type="PDB" id="5OZK">
    <property type="method" value="X-ray"/>
    <property type="resolution" value="1.33 A"/>
    <property type="chains" value="A=90-419"/>
</dbReference>
<dbReference type="PDB" id="5OZL">
    <property type="method" value="X-ray"/>
    <property type="resolution" value="1.74 A"/>
    <property type="chains" value="A=90-419"/>
</dbReference>
<dbReference type="PDB" id="5OZM">
    <property type="method" value="X-ray"/>
    <property type="resolution" value="1.49 A"/>
    <property type="chains" value="A=90-419"/>
</dbReference>
<dbReference type="PDB" id="5OZN">
    <property type="method" value="X-ray"/>
    <property type="resolution" value="1.49 A"/>
    <property type="chains" value="A=90-419"/>
</dbReference>
<dbReference type="PDB" id="5OZO">
    <property type="method" value="X-ray"/>
    <property type="resolution" value="1.58 A"/>
    <property type="chains" value="A=90-419"/>
</dbReference>
<dbReference type="PDB" id="5OZP">
    <property type="method" value="X-ray"/>
    <property type="resolution" value="1.49 A"/>
    <property type="chains" value="A=90-419"/>
</dbReference>
<dbReference type="PDB" id="5OZQ">
    <property type="method" value="X-ray"/>
    <property type="resolution" value="1.50 A"/>
    <property type="chains" value="A=90-419"/>
</dbReference>
<dbReference type="PDB" id="5OZR">
    <property type="method" value="X-ray"/>
    <property type="resolution" value="1.77 A"/>
    <property type="chains" value="A=90-419"/>
</dbReference>
<dbReference type="PDB" id="5OZS">
    <property type="method" value="X-ray"/>
    <property type="resolution" value="1.72 A"/>
    <property type="chains" value="A=90-419"/>
</dbReference>
<dbReference type="PDB" id="5OZT">
    <property type="method" value="X-ray"/>
    <property type="resolution" value="1.80 A"/>
    <property type="chains" value="A=90-419"/>
</dbReference>
<dbReference type="PDB" id="5OZU">
    <property type="method" value="X-ray"/>
    <property type="resolution" value="1.12 A"/>
    <property type="chains" value="A=90-419"/>
</dbReference>
<dbReference type="PDB" id="5OZV">
    <property type="method" value="X-ray"/>
    <property type="resolution" value="1.48 A"/>
    <property type="chains" value="A=90-419"/>
</dbReference>
<dbReference type="PDB" id="5OZW">
    <property type="method" value="X-ray"/>
    <property type="resolution" value="1.54 A"/>
    <property type="chains" value="A=90-419"/>
</dbReference>
<dbReference type="PDB" id="5OZX">
    <property type="method" value="X-ray"/>
    <property type="resolution" value="1.48 A"/>
    <property type="chains" value="A=90-419"/>
</dbReference>
<dbReference type="PDB" id="5OZY">
    <property type="method" value="X-ray"/>
    <property type="resolution" value="1.49 A"/>
    <property type="chains" value="A=90-419"/>
</dbReference>
<dbReference type="PDB" id="5OZZ">
    <property type="method" value="X-ray"/>
    <property type="resolution" value="1.53 A"/>
    <property type="chains" value="A=90-419"/>
</dbReference>
<dbReference type="PDB" id="5P00">
    <property type="method" value="X-ray"/>
    <property type="resolution" value="1.51 A"/>
    <property type="chains" value="A=90-419"/>
</dbReference>
<dbReference type="PDB" id="5P01">
    <property type="method" value="X-ray"/>
    <property type="resolution" value="1.51 A"/>
    <property type="chains" value="A=90-419"/>
</dbReference>
<dbReference type="PDB" id="5P02">
    <property type="method" value="X-ray"/>
    <property type="resolution" value="1.49 A"/>
    <property type="chains" value="A=90-419"/>
</dbReference>
<dbReference type="PDB" id="5P03">
    <property type="method" value="X-ray"/>
    <property type="resolution" value="1.49 A"/>
    <property type="chains" value="A=90-419"/>
</dbReference>
<dbReference type="PDB" id="5P04">
    <property type="method" value="X-ray"/>
    <property type="resolution" value="1.67 A"/>
    <property type="chains" value="A=90-419"/>
</dbReference>
<dbReference type="PDB" id="5P05">
    <property type="method" value="X-ray"/>
    <property type="resolution" value="1.60 A"/>
    <property type="chains" value="A=90-419"/>
</dbReference>
<dbReference type="PDB" id="5P06">
    <property type="method" value="X-ray"/>
    <property type="resolution" value="1.32 A"/>
    <property type="chains" value="A=90-419"/>
</dbReference>
<dbReference type="PDB" id="5P07">
    <property type="method" value="X-ray"/>
    <property type="resolution" value="1.62 A"/>
    <property type="chains" value="A=90-419"/>
</dbReference>
<dbReference type="PDB" id="5P08">
    <property type="method" value="X-ray"/>
    <property type="resolution" value="1.60 A"/>
    <property type="chains" value="A=90-419"/>
</dbReference>
<dbReference type="PDB" id="5P09">
    <property type="method" value="X-ray"/>
    <property type="resolution" value="1.61 A"/>
    <property type="chains" value="A=90-419"/>
</dbReference>
<dbReference type="PDB" id="5P0A">
    <property type="method" value="X-ray"/>
    <property type="resolution" value="1.82 A"/>
    <property type="chains" value="A=90-419"/>
</dbReference>
<dbReference type="PDB" id="5P0B">
    <property type="method" value="X-ray"/>
    <property type="resolution" value="1.63 A"/>
    <property type="chains" value="A=90-419"/>
</dbReference>
<dbReference type="PDB" id="5P0C">
    <property type="method" value="X-ray"/>
    <property type="resolution" value="1.82 A"/>
    <property type="chains" value="A=90-419"/>
</dbReference>
<dbReference type="PDB" id="5P0D">
    <property type="method" value="X-ray"/>
    <property type="resolution" value="1.85 A"/>
    <property type="chains" value="A=90-419"/>
</dbReference>
<dbReference type="PDB" id="5P0E">
    <property type="method" value="X-ray"/>
    <property type="resolution" value="1.80 A"/>
    <property type="chains" value="A=90-419"/>
</dbReference>
<dbReference type="PDB" id="5P0F">
    <property type="method" value="X-ray"/>
    <property type="resolution" value="1.25 A"/>
    <property type="chains" value="A=90-419"/>
</dbReference>
<dbReference type="PDB" id="5P0G">
    <property type="method" value="X-ray"/>
    <property type="resolution" value="1.49 A"/>
    <property type="chains" value="A=90-419"/>
</dbReference>
<dbReference type="PDB" id="5P0H">
    <property type="method" value="X-ray"/>
    <property type="resolution" value="1.80 A"/>
    <property type="chains" value="A=90-419"/>
</dbReference>
<dbReference type="PDB" id="5P0I">
    <property type="method" value="X-ray"/>
    <property type="resolution" value="1.15 A"/>
    <property type="chains" value="A=90-419"/>
</dbReference>
<dbReference type="PDB" id="5P0J">
    <property type="method" value="X-ray"/>
    <property type="resolution" value="1.15 A"/>
    <property type="chains" value="A=90-419"/>
</dbReference>
<dbReference type="PDB" id="5P0K">
    <property type="method" value="X-ray"/>
    <property type="resolution" value="1.60 A"/>
    <property type="chains" value="A=90-419"/>
</dbReference>
<dbReference type="PDB" id="5P0L">
    <property type="method" value="X-ray"/>
    <property type="resolution" value="1.51 A"/>
    <property type="chains" value="A=90-419"/>
</dbReference>
<dbReference type="PDB" id="5P0M">
    <property type="method" value="X-ray"/>
    <property type="resolution" value="1.12 A"/>
    <property type="chains" value="A=90-419"/>
</dbReference>
<dbReference type="PDB" id="5P0N">
    <property type="method" value="X-ray"/>
    <property type="resolution" value="1.14 A"/>
    <property type="chains" value="A=90-419"/>
</dbReference>
<dbReference type="PDB" id="5P0O">
    <property type="method" value="X-ray"/>
    <property type="resolution" value="1.33 A"/>
    <property type="chains" value="A=90-419"/>
</dbReference>
<dbReference type="PDB" id="5P0P">
    <property type="method" value="X-ray"/>
    <property type="resolution" value="1.30 A"/>
    <property type="chains" value="A=90-419"/>
</dbReference>
<dbReference type="PDB" id="5P0Q">
    <property type="method" value="X-ray"/>
    <property type="resolution" value="1.48 A"/>
    <property type="chains" value="A=90-419"/>
</dbReference>
<dbReference type="PDB" id="5P0R">
    <property type="method" value="X-ray"/>
    <property type="resolution" value="1.25 A"/>
    <property type="chains" value="A=90-419"/>
</dbReference>
<dbReference type="PDB" id="5P0S">
    <property type="method" value="X-ray"/>
    <property type="resolution" value="1.20 A"/>
    <property type="chains" value="A=90-419"/>
</dbReference>
<dbReference type="PDB" id="5P0T">
    <property type="method" value="X-ray"/>
    <property type="resolution" value="1.13 A"/>
    <property type="chains" value="A=90-419"/>
</dbReference>
<dbReference type="PDB" id="5P0U">
    <property type="method" value="X-ray"/>
    <property type="resolution" value="1.46 A"/>
    <property type="chains" value="A=90-419"/>
</dbReference>
<dbReference type="PDB" id="5P0V">
    <property type="method" value="X-ray"/>
    <property type="resolution" value="1.40 A"/>
    <property type="chains" value="A=90-419"/>
</dbReference>
<dbReference type="PDB" id="5P0W">
    <property type="method" value="X-ray"/>
    <property type="resolution" value="1.27 A"/>
    <property type="chains" value="A=90-419"/>
</dbReference>
<dbReference type="PDB" id="5P0X">
    <property type="method" value="X-ray"/>
    <property type="resolution" value="1.27 A"/>
    <property type="chains" value="A=90-419"/>
</dbReference>
<dbReference type="PDB" id="5P0Y">
    <property type="method" value="X-ray"/>
    <property type="resolution" value="1.32 A"/>
    <property type="chains" value="A=90-419"/>
</dbReference>
<dbReference type="PDB" id="5P0Z">
    <property type="method" value="X-ray"/>
    <property type="resolution" value="1.26 A"/>
    <property type="chains" value="A=90-419"/>
</dbReference>
<dbReference type="PDB" id="5P10">
    <property type="method" value="X-ray"/>
    <property type="resolution" value="1.49 A"/>
    <property type="chains" value="A=90-419"/>
</dbReference>
<dbReference type="PDB" id="5P11">
    <property type="method" value="X-ray"/>
    <property type="resolution" value="1.38 A"/>
    <property type="chains" value="A=90-419"/>
</dbReference>
<dbReference type="PDB" id="5P12">
    <property type="method" value="X-ray"/>
    <property type="resolution" value="1.55 A"/>
    <property type="chains" value="A=90-419"/>
</dbReference>
<dbReference type="PDB" id="5P13">
    <property type="method" value="X-ray"/>
    <property type="resolution" value="1.40 A"/>
    <property type="chains" value="A=90-419"/>
</dbReference>
<dbReference type="PDB" id="5P14">
    <property type="method" value="X-ray"/>
    <property type="resolution" value="1.24 A"/>
    <property type="chains" value="A=90-419"/>
</dbReference>
<dbReference type="PDB" id="5P15">
    <property type="method" value="X-ray"/>
    <property type="resolution" value="1.41 A"/>
    <property type="chains" value="A=90-419"/>
</dbReference>
<dbReference type="PDB" id="5P16">
    <property type="method" value="X-ray"/>
    <property type="resolution" value="1.64 A"/>
    <property type="chains" value="A=90-419"/>
</dbReference>
<dbReference type="PDB" id="5P17">
    <property type="method" value="X-ray"/>
    <property type="resolution" value="1.40 A"/>
    <property type="chains" value="A=90-419"/>
</dbReference>
<dbReference type="PDB" id="5P18">
    <property type="method" value="X-ray"/>
    <property type="resolution" value="1.35 A"/>
    <property type="chains" value="A=90-419"/>
</dbReference>
<dbReference type="PDB" id="5P19">
    <property type="method" value="X-ray"/>
    <property type="resolution" value="1.13 A"/>
    <property type="chains" value="A=90-419"/>
</dbReference>
<dbReference type="PDB" id="5P1A">
    <property type="method" value="X-ray"/>
    <property type="resolution" value="1.40 A"/>
    <property type="chains" value="A=90-419"/>
</dbReference>
<dbReference type="PDB" id="5P1B">
    <property type="method" value="X-ray"/>
    <property type="resolution" value="1.38 A"/>
    <property type="chains" value="A=90-419"/>
</dbReference>
<dbReference type="PDB" id="5P1C">
    <property type="method" value="X-ray"/>
    <property type="resolution" value="1.35 A"/>
    <property type="chains" value="A=90-419"/>
</dbReference>
<dbReference type="PDB" id="5P1D">
    <property type="method" value="X-ray"/>
    <property type="resolution" value="1.28 A"/>
    <property type="chains" value="A=90-419"/>
</dbReference>
<dbReference type="PDB" id="5P1E">
    <property type="method" value="X-ray"/>
    <property type="resolution" value="1.59 A"/>
    <property type="chains" value="A=90-419"/>
</dbReference>
<dbReference type="PDB" id="5P1F">
    <property type="method" value="X-ray"/>
    <property type="resolution" value="1.26 A"/>
    <property type="chains" value="A=90-419"/>
</dbReference>
<dbReference type="PDB" id="5P1G">
    <property type="method" value="X-ray"/>
    <property type="resolution" value="1.48 A"/>
    <property type="chains" value="A=90-419"/>
</dbReference>
<dbReference type="PDB" id="5P1H">
    <property type="method" value="X-ray"/>
    <property type="resolution" value="1.53 A"/>
    <property type="chains" value="A=90-419"/>
</dbReference>
<dbReference type="PDB" id="5P1I">
    <property type="method" value="X-ray"/>
    <property type="resolution" value="1.34 A"/>
    <property type="chains" value="A=90-419"/>
</dbReference>
<dbReference type="PDB" id="5P1J">
    <property type="method" value="X-ray"/>
    <property type="resolution" value="1.37 A"/>
    <property type="chains" value="A=90-419"/>
</dbReference>
<dbReference type="PDB" id="5P1K">
    <property type="method" value="X-ray"/>
    <property type="resolution" value="1.55 A"/>
    <property type="chains" value="A=90-419"/>
</dbReference>
<dbReference type="PDB" id="5P1L">
    <property type="method" value="X-ray"/>
    <property type="resolution" value="1.25 A"/>
    <property type="chains" value="A=90-419"/>
</dbReference>
<dbReference type="PDB" id="5P1M">
    <property type="method" value="X-ray"/>
    <property type="resolution" value="1.60 A"/>
    <property type="chains" value="A=90-419"/>
</dbReference>
<dbReference type="PDB" id="5P1N">
    <property type="method" value="X-ray"/>
    <property type="resolution" value="1.52 A"/>
    <property type="chains" value="A=90-419"/>
</dbReference>
<dbReference type="PDB" id="5P1O">
    <property type="method" value="X-ray"/>
    <property type="resolution" value="1.51 A"/>
    <property type="chains" value="A=90-419"/>
</dbReference>
<dbReference type="PDB" id="5P1P">
    <property type="method" value="X-ray"/>
    <property type="resolution" value="1.32 A"/>
    <property type="chains" value="A=90-419"/>
</dbReference>
<dbReference type="PDB" id="5P1Q">
    <property type="method" value="X-ray"/>
    <property type="resolution" value="1.17 A"/>
    <property type="chains" value="A=90-419"/>
</dbReference>
<dbReference type="PDB" id="5P1R">
    <property type="method" value="X-ray"/>
    <property type="resolution" value="1.33 A"/>
    <property type="chains" value="A=90-419"/>
</dbReference>
<dbReference type="PDB" id="5P1S">
    <property type="method" value="X-ray"/>
    <property type="resolution" value="1.32 A"/>
    <property type="chains" value="A=90-419"/>
</dbReference>
<dbReference type="PDB" id="5P1T">
    <property type="method" value="X-ray"/>
    <property type="resolution" value="1.40 A"/>
    <property type="chains" value="A=90-419"/>
</dbReference>
<dbReference type="PDB" id="5P1U">
    <property type="method" value="X-ray"/>
    <property type="resolution" value="1.50 A"/>
    <property type="chains" value="A=90-419"/>
</dbReference>
<dbReference type="PDB" id="5P1V">
    <property type="method" value="X-ray"/>
    <property type="resolution" value="1.30 A"/>
    <property type="chains" value="A=90-419"/>
</dbReference>
<dbReference type="PDB" id="5P1W">
    <property type="method" value="X-ray"/>
    <property type="resolution" value="1.23 A"/>
    <property type="chains" value="A=90-419"/>
</dbReference>
<dbReference type="PDB" id="5P1X">
    <property type="method" value="X-ray"/>
    <property type="resolution" value="1.20 A"/>
    <property type="chains" value="A=90-419"/>
</dbReference>
<dbReference type="PDB" id="5P1Y">
    <property type="method" value="X-ray"/>
    <property type="resolution" value="1.52 A"/>
    <property type="chains" value="A=90-419"/>
</dbReference>
<dbReference type="PDB" id="5P1Z">
    <property type="method" value="X-ray"/>
    <property type="resolution" value="1.46 A"/>
    <property type="chains" value="A=90-419"/>
</dbReference>
<dbReference type="PDB" id="5P20">
    <property type="method" value="X-ray"/>
    <property type="resolution" value="1.44 A"/>
    <property type="chains" value="A=90-419"/>
</dbReference>
<dbReference type="PDB" id="5P22">
    <property type="method" value="X-ray"/>
    <property type="resolution" value="1.31 A"/>
    <property type="chains" value="A=90-419"/>
</dbReference>
<dbReference type="PDB" id="5P23">
    <property type="method" value="X-ray"/>
    <property type="resolution" value="1.71 A"/>
    <property type="chains" value="A=90-419"/>
</dbReference>
<dbReference type="PDB" id="5P24">
    <property type="method" value="X-ray"/>
    <property type="resolution" value="1.71 A"/>
    <property type="chains" value="A=90-419"/>
</dbReference>
<dbReference type="PDB" id="5P25">
    <property type="method" value="X-ray"/>
    <property type="resolution" value="1.26 A"/>
    <property type="chains" value="A=90-419"/>
</dbReference>
<dbReference type="PDB" id="5P26">
    <property type="method" value="X-ray"/>
    <property type="resolution" value="1.41 A"/>
    <property type="chains" value="A=90-419"/>
</dbReference>
<dbReference type="PDB" id="5P27">
    <property type="method" value="X-ray"/>
    <property type="resolution" value="1.45 A"/>
    <property type="chains" value="A=90-419"/>
</dbReference>
<dbReference type="PDB" id="5P28">
    <property type="method" value="X-ray"/>
    <property type="resolution" value="1.34 A"/>
    <property type="chains" value="A=90-419"/>
</dbReference>
<dbReference type="PDB" id="5P29">
    <property type="method" value="X-ray"/>
    <property type="resolution" value="1.48 A"/>
    <property type="chains" value="A=90-419"/>
</dbReference>
<dbReference type="PDB" id="5P2A">
    <property type="method" value="X-ray"/>
    <property type="resolution" value="1.37 A"/>
    <property type="chains" value="A=90-419"/>
</dbReference>
<dbReference type="PDB" id="5P2B">
    <property type="method" value="X-ray"/>
    <property type="resolution" value="1.70 A"/>
    <property type="chains" value="A=90-419"/>
</dbReference>
<dbReference type="PDB" id="5P2C">
    <property type="method" value="X-ray"/>
    <property type="resolution" value="1.75 A"/>
    <property type="chains" value="A=90-419"/>
</dbReference>
<dbReference type="PDB" id="5P2D">
    <property type="method" value="X-ray"/>
    <property type="resolution" value="1.30 A"/>
    <property type="chains" value="A=90-419"/>
</dbReference>
<dbReference type="PDB" id="5P2E">
    <property type="method" value="X-ray"/>
    <property type="resolution" value="1.53 A"/>
    <property type="chains" value="A=90-419"/>
</dbReference>
<dbReference type="PDB" id="5P2F">
    <property type="method" value="X-ray"/>
    <property type="resolution" value="1.80 A"/>
    <property type="chains" value="A=90-419"/>
</dbReference>
<dbReference type="PDB" id="5P2G">
    <property type="method" value="X-ray"/>
    <property type="resolution" value="1.49 A"/>
    <property type="chains" value="A=90-419"/>
</dbReference>
<dbReference type="PDB" id="5P2H">
    <property type="method" value="X-ray"/>
    <property type="resolution" value="1.62 A"/>
    <property type="chains" value="A=90-419"/>
</dbReference>
<dbReference type="PDB" id="5P2I">
    <property type="method" value="X-ray"/>
    <property type="resolution" value="1.43 A"/>
    <property type="chains" value="A=90-419"/>
</dbReference>
<dbReference type="PDB" id="5P2J">
    <property type="method" value="X-ray"/>
    <property type="resolution" value="1.56 A"/>
    <property type="chains" value="A=90-419"/>
</dbReference>
<dbReference type="PDB" id="5P2K">
    <property type="method" value="X-ray"/>
    <property type="resolution" value="1.82 A"/>
    <property type="chains" value="A=90-419"/>
</dbReference>
<dbReference type="PDB" id="5P2L">
    <property type="method" value="X-ray"/>
    <property type="resolution" value="1.12 A"/>
    <property type="chains" value="A=90-419"/>
</dbReference>
<dbReference type="PDB" id="5P2M">
    <property type="method" value="X-ray"/>
    <property type="resolution" value="1.09 A"/>
    <property type="chains" value="A=90-419"/>
</dbReference>
<dbReference type="PDB" id="5P2N">
    <property type="method" value="X-ray"/>
    <property type="resolution" value="1.55 A"/>
    <property type="chains" value="A=90-419"/>
</dbReference>
<dbReference type="PDB" id="5P2O">
    <property type="method" value="X-ray"/>
    <property type="resolution" value="1.12 A"/>
    <property type="chains" value="A=90-419"/>
</dbReference>
<dbReference type="PDB" id="5P2Q">
    <property type="method" value="X-ray"/>
    <property type="resolution" value="1.35 A"/>
    <property type="chains" value="A=90-419"/>
</dbReference>
<dbReference type="PDB" id="5P2R">
    <property type="method" value="X-ray"/>
    <property type="resolution" value="1.17 A"/>
    <property type="chains" value="A=90-419"/>
</dbReference>
<dbReference type="PDB" id="5P2S">
    <property type="method" value="X-ray"/>
    <property type="resolution" value="1.08 A"/>
    <property type="chains" value="A=90-419"/>
</dbReference>
<dbReference type="PDB" id="5P2T">
    <property type="method" value="X-ray"/>
    <property type="resolution" value="1.10 A"/>
    <property type="chains" value="A=90-419"/>
</dbReference>
<dbReference type="PDB" id="5P2U">
    <property type="method" value="X-ray"/>
    <property type="resolution" value="1.38 A"/>
    <property type="chains" value="A=90-419"/>
</dbReference>
<dbReference type="PDB" id="5P2V">
    <property type="method" value="X-ray"/>
    <property type="resolution" value="1.32 A"/>
    <property type="chains" value="A=90-419"/>
</dbReference>
<dbReference type="PDB" id="5P2W">
    <property type="method" value="X-ray"/>
    <property type="resolution" value="1.52 A"/>
    <property type="chains" value="A=90-419"/>
</dbReference>
<dbReference type="PDB" id="5P2X">
    <property type="method" value="X-ray"/>
    <property type="resolution" value="1.40 A"/>
    <property type="chains" value="A=90-419"/>
</dbReference>
<dbReference type="PDB" id="5P2Y">
    <property type="method" value="X-ray"/>
    <property type="resolution" value="1.64 A"/>
    <property type="chains" value="A=90-419"/>
</dbReference>
<dbReference type="PDB" id="5P2Z">
    <property type="method" value="X-ray"/>
    <property type="resolution" value="1.52 A"/>
    <property type="chains" value="A=90-419"/>
</dbReference>
<dbReference type="PDB" id="5P30">
    <property type="method" value="X-ray"/>
    <property type="resolution" value="1.84 A"/>
    <property type="chains" value="A=90-419"/>
</dbReference>
<dbReference type="PDB" id="5P31">
    <property type="method" value="X-ray"/>
    <property type="resolution" value="1.25 A"/>
    <property type="chains" value="A=90-419"/>
</dbReference>
<dbReference type="PDB" id="5P32">
    <property type="method" value="X-ray"/>
    <property type="resolution" value="1.12 A"/>
    <property type="chains" value="A=90-419"/>
</dbReference>
<dbReference type="PDB" id="5P33">
    <property type="method" value="X-ray"/>
    <property type="resolution" value="1.26 A"/>
    <property type="chains" value="A=90-419"/>
</dbReference>
<dbReference type="PDB" id="5P34">
    <property type="method" value="X-ray"/>
    <property type="resolution" value="1.21 A"/>
    <property type="chains" value="A=90-419"/>
</dbReference>
<dbReference type="PDB" id="5P35">
    <property type="method" value="X-ray"/>
    <property type="resolution" value="1.24 A"/>
    <property type="chains" value="A=90-419"/>
</dbReference>
<dbReference type="PDB" id="5P36">
    <property type="method" value="X-ray"/>
    <property type="resolution" value="1.37 A"/>
    <property type="chains" value="A=90-419"/>
</dbReference>
<dbReference type="PDB" id="5P37">
    <property type="method" value="X-ray"/>
    <property type="resolution" value="1.42 A"/>
    <property type="chains" value="A=90-419"/>
</dbReference>
<dbReference type="PDB" id="5P38">
    <property type="method" value="X-ray"/>
    <property type="resolution" value="1.29 A"/>
    <property type="chains" value="A=90-419"/>
</dbReference>
<dbReference type="PDB" id="5P39">
    <property type="method" value="X-ray"/>
    <property type="resolution" value="1.19 A"/>
    <property type="chains" value="A=90-419"/>
</dbReference>
<dbReference type="PDB" id="5P3A">
    <property type="method" value="X-ray"/>
    <property type="resolution" value="1.18 A"/>
    <property type="chains" value="A=90-419"/>
</dbReference>
<dbReference type="PDB" id="5P3B">
    <property type="method" value="X-ray"/>
    <property type="resolution" value="1.24 A"/>
    <property type="chains" value="A=90-419"/>
</dbReference>
<dbReference type="PDB" id="5P3C">
    <property type="method" value="X-ray"/>
    <property type="resolution" value="1.27 A"/>
    <property type="chains" value="A=90-419"/>
</dbReference>
<dbReference type="PDB" id="5P3D">
    <property type="method" value="X-ray"/>
    <property type="resolution" value="1.18 A"/>
    <property type="chains" value="A=90-419"/>
</dbReference>
<dbReference type="PDB" id="5P3E">
    <property type="method" value="X-ray"/>
    <property type="resolution" value="1.17 A"/>
    <property type="chains" value="A=90-419"/>
</dbReference>
<dbReference type="PDB" id="5P3F">
    <property type="method" value="X-ray"/>
    <property type="resolution" value="1.26 A"/>
    <property type="chains" value="A=90-419"/>
</dbReference>
<dbReference type="PDB" id="5P3G">
    <property type="method" value="X-ray"/>
    <property type="resolution" value="1.39 A"/>
    <property type="chains" value="A=90-419"/>
</dbReference>
<dbReference type="PDB" id="5P3H">
    <property type="method" value="X-ray"/>
    <property type="resolution" value="1.39 A"/>
    <property type="chains" value="A=90-419"/>
</dbReference>
<dbReference type="PDB" id="5P3I">
    <property type="method" value="X-ray"/>
    <property type="resolution" value="1.25 A"/>
    <property type="chains" value="A=90-419"/>
</dbReference>
<dbReference type="PDB" id="5P3J">
    <property type="method" value="X-ray"/>
    <property type="resolution" value="1.34 A"/>
    <property type="chains" value="A=90-419"/>
</dbReference>
<dbReference type="PDB" id="5P3K">
    <property type="method" value="X-ray"/>
    <property type="resolution" value="1.75 A"/>
    <property type="chains" value="A=90-419"/>
</dbReference>
<dbReference type="PDB" id="5P3L">
    <property type="method" value="X-ray"/>
    <property type="resolution" value="1.25 A"/>
    <property type="chains" value="A=90-419"/>
</dbReference>
<dbReference type="PDB" id="5P3M">
    <property type="method" value="X-ray"/>
    <property type="resolution" value="1.19 A"/>
    <property type="chains" value="A=90-419"/>
</dbReference>
<dbReference type="PDB" id="5P3N">
    <property type="method" value="X-ray"/>
    <property type="resolution" value="1.44 A"/>
    <property type="chains" value="A=90-419"/>
</dbReference>
<dbReference type="PDB" id="5P3O">
    <property type="method" value="X-ray"/>
    <property type="resolution" value="1.25 A"/>
    <property type="chains" value="A=90-419"/>
</dbReference>
<dbReference type="PDB" id="5P3P">
    <property type="method" value="X-ray"/>
    <property type="resolution" value="1.46 A"/>
    <property type="chains" value="A=90-419"/>
</dbReference>
<dbReference type="PDB" id="5P3Q">
    <property type="method" value="X-ray"/>
    <property type="resolution" value="1.09 A"/>
    <property type="chains" value="A=90-419"/>
</dbReference>
<dbReference type="PDB" id="5P3R">
    <property type="method" value="X-ray"/>
    <property type="resolution" value="1.37 A"/>
    <property type="chains" value="A=90-419"/>
</dbReference>
<dbReference type="PDB" id="5P3S">
    <property type="method" value="X-ray"/>
    <property type="resolution" value="1.17 A"/>
    <property type="chains" value="A=90-419"/>
</dbReference>
<dbReference type="PDB" id="5P3T">
    <property type="method" value="X-ray"/>
    <property type="resolution" value="1.19 A"/>
    <property type="chains" value="A=90-419"/>
</dbReference>
<dbReference type="PDB" id="5P3U">
    <property type="method" value="X-ray"/>
    <property type="resolution" value="1.20 A"/>
    <property type="chains" value="A=90-419"/>
</dbReference>
<dbReference type="PDB" id="5P3V">
    <property type="method" value="X-ray"/>
    <property type="resolution" value="1.47 A"/>
    <property type="chains" value="A=90-419"/>
</dbReference>
<dbReference type="PDB" id="5P3W">
    <property type="method" value="X-ray"/>
    <property type="resolution" value="1.24 A"/>
    <property type="chains" value="A=90-419"/>
</dbReference>
<dbReference type="PDB" id="5P3X">
    <property type="method" value="X-ray"/>
    <property type="resolution" value="1.42 A"/>
    <property type="chains" value="A=90-419"/>
</dbReference>
<dbReference type="PDB" id="5P3Y">
    <property type="method" value="X-ray"/>
    <property type="resolution" value="1.22 A"/>
    <property type="chains" value="A=90-419"/>
</dbReference>
<dbReference type="PDB" id="5P3Z">
    <property type="method" value="X-ray"/>
    <property type="resolution" value="1.20 A"/>
    <property type="chains" value="A=90-419"/>
</dbReference>
<dbReference type="PDB" id="5P40">
    <property type="method" value="X-ray"/>
    <property type="resolution" value="1.23 A"/>
    <property type="chains" value="A=90-419"/>
</dbReference>
<dbReference type="PDB" id="5P41">
    <property type="method" value="X-ray"/>
    <property type="resolution" value="1.28 A"/>
    <property type="chains" value="A=90-419"/>
</dbReference>
<dbReference type="PDB" id="5P42">
    <property type="method" value="X-ray"/>
    <property type="resolution" value="1.18 A"/>
    <property type="chains" value="A=90-419"/>
</dbReference>
<dbReference type="PDB" id="5P43">
    <property type="method" value="X-ray"/>
    <property type="resolution" value="1.19 A"/>
    <property type="chains" value="A=90-419"/>
</dbReference>
<dbReference type="PDB" id="5P44">
    <property type="method" value="X-ray"/>
    <property type="resolution" value="1.18 A"/>
    <property type="chains" value="A=90-419"/>
</dbReference>
<dbReference type="PDB" id="5P45">
    <property type="method" value="X-ray"/>
    <property type="resolution" value="1.19 A"/>
    <property type="chains" value="A=90-419"/>
</dbReference>
<dbReference type="PDB" id="5P46">
    <property type="method" value="X-ray"/>
    <property type="resolution" value="1.18 A"/>
    <property type="chains" value="A=90-419"/>
</dbReference>
<dbReference type="PDB" id="5P47">
    <property type="method" value="X-ray"/>
    <property type="resolution" value="1.18 A"/>
    <property type="chains" value="A=90-419"/>
</dbReference>
<dbReference type="PDB" id="5P48">
    <property type="method" value="X-ray"/>
    <property type="resolution" value="1.17 A"/>
    <property type="chains" value="A=90-419"/>
</dbReference>
<dbReference type="PDB" id="5P49">
    <property type="method" value="X-ray"/>
    <property type="resolution" value="1.26 A"/>
    <property type="chains" value="A=90-419"/>
</dbReference>
<dbReference type="PDB" id="5P4A">
    <property type="method" value="X-ray"/>
    <property type="resolution" value="1.35 A"/>
    <property type="chains" value="A=90-419"/>
</dbReference>
<dbReference type="PDB" id="5P4B">
    <property type="method" value="X-ray"/>
    <property type="resolution" value="1.20 A"/>
    <property type="chains" value="A=90-419"/>
</dbReference>
<dbReference type="PDB" id="5P4C">
    <property type="method" value="X-ray"/>
    <property type="resolution" value="1.26 A"/>
    <property type="chains" value="A=90-419"/>
</dbReference>
<dbReference type="PDB" id="5P4D">
    <property type="method" value="X-ray"/>
    <property type="resolution" value="1.25 A"/>
    <property type="chains" value="A=90-419"/>
</dbReference>
<dbReference type="PDB" id="5P4E">
    <property type="method" value="X-ray"/>
    <property type="resolution" value="1.40 A"/>
    <property type="chains" value="A=90-419"/>
</dbReference>
<dbReference type="PDB" id="5P4F">
    <property type="method" value="X-ray"/>
    <property type="resolution" value="1.41 A"/>
    <property type="chains" value="A=90-419"/>
</dbReference>
<dbReference type="PDB" id="5P4G">
    <property type="method" value="X-ray"/>
    <property type="resolution" value="1.16 A"/>
    <property type="chains" value="A=90-419"/>
</dbReference>
<dbReference type="PDB" id="5P4H">
    <property type="method" value="X-ray"/>
    <property type="resolution" value="1.45 A"/>
    <property type="chains" value="A=90-419"/>
</dbReference>
<dbReference type="PDB" id="5P4I">
    <property type="method" value="X-ray"/>
    <property type="resolution" value="1.42 A"/>
    <property type="chains" value="A=90-419"/>
</dbReference>
<dbReference type="PDB" id="5P4J">
    <property type="method" value="X-ray"/>
    <property type="resolution" value="1.52 A"/>
    <property type="chains" value="A=90-419"/>
</dbReference>
<dbReference type="PDB" id="5P4K">
    <property type="method" value="X-ray"/>
    <property type="resolution" value="1.47 A"/>
    <property type="chains" value="A=90-419"/>
</dbReference>
<dbReference type="PDB" id="5P4L">
    <property type="method" value="X-ray"/>
    <property type="resolution" value="1.08 A"/>
    <property type="chains" value="A=90-419"/>
</dbReference>
<dbReference type="PDB" id="5P4M">
    <property type="method" value="X-ray"/>
    <property type="resolution" value="1.07 A"/>
    <property type="chains" value="A=90-419"/>
</dbReference>
<dbReference type="PDB" id="5P4N">
    <property type="method" value="X-ray"/>
    <property type="resolution" value="1.25 A"/>
    <property type="chains" value="A=90-419"/>
</dbReference>
<dbReference type="PDB" id="5P4O">
    <property type="method" value="X-ray"/>
    <property type="resolution" value="1.06 A"/>
    <property type="chains" value="A=90-419"/>
</dbReference>
<dbReference type="PDB" id="5P4P">
    <property type="method" value="X-ray"/>
    <property type="resolution" value="1.57 A"/>
    <property type="chains" value="A=90-419"/>
</dbReference>
<dbReference type="PDB" id="5P4Q">
    <property type="method" value="X-ray"/>
    <property type="resolution" value="1.59 A"/>
    <property type="chains" value="A=90-419"/>
</dbReference>
<dbReference type="PDB" id="5P4R">
    <property type="method" value="X-ray"/>
    <property type="resolution" value="1.13 A"/>
    <property type="chains" value="A=90-419"/>
</dbReference>
<dbReference type="PDB" id="5P4S">
    <property type="method" value="X-ray"/>
    <property type="resolution" value="1.31 A"/>
    <property type="chains" value="A=90-419"/>
</dbReference>
<dbReference type="PDB" id="5P4T">
    <property type="method" value="X-ray"/>
    <property type="resolution" value="1.70 A"/>
    <property type="chains" value="A=90-419"/>
</dbReference>
<dbReference type="PDB" id="5P4U">
    <property type="method" value="X-ray"/>
    <property type="resolution" value="1.32 A"/>
    <property type="chains" value="A=90-419"/>
</dbReference>
<dbReference type="PDB" id="5P4V">
    <property type="method" value="X-ray"/>
    <property type="resolution" value="1.33 A"/>
    <property type="chains" value="A=90-419"/>
</dbReference>
<dbReference type="PDB" id="5P4W">
    <property type="method" value="X-ray"/>
    <property type="resolution" value="1.15 A"/>
    <property type="chains" value="A=90-419"/>
</dbReference>
<dbReference type="PDB" id="5P4X">
    <property type="method" value="X-ray"/>
    <property type="resolution" value="1.58 A"/>
    <property type="chains" value="A=90-419"/>
</dbReference>
<dbReference type="PDB" id="5P4Y">
    <property type="method" value="X-ray"/>
    <property type="resolution" value="1.41 A"/>
    <property type="chains" value="A=90-419"/>
</dbReference>
<dbReference type="PDB" id="5P4Z">
    <property type="method" value="X-ray"/>
    <property type="resolution" value="1.25 A"/>
    <property type="chains" value="A=90-419"/>
</dbReference>
<dbReference type="PDB" id="5P50">
    <property type="method" value="X-ray"/>
    <property type="resolution" value="1.12 A"/>
    <property type="chains" value="A=90-419"/>
</dbReference>
<dbReference type="PDB" id="5P51">
    <property type="method" value="X-ray"/>
    <property type="resolution" value="1.12 A"/>
    <property type="chains" value="A=90-419"/>
</dbReference>
<dbReference type="PDB" id="5P52">
    <property type="method" value="X-ray"/>
    <property type="resolution" value="1.27 A"/>
    <property type="chains" value="A=90-419"/>
</dbReference>
<dbReference type="PDB" id="5P53">
    <property type="method" value="X-ray"/>
    <property type="resolution" value="1.12 A"/>
    <property type="chains" value="A=90-419"/>
</dbReference>
<dbReference type="PDB" id="5P54">
    <property type="method" value="X-ray"/>
    <property type="resolution" value="1.09 A"/>
    <property type="chains" value="A=90-419"/>
</dbReference>
<dbReference type="PDB" id="5P55">
    <property type="method" value="X-ray"/>
    <property type="resolution" value="1.30 A"/>
    <property type="chains" value="A=90-419"/>
</dbReference>
<dbReference type="PDB" id="5P56">
    <property type="method" value="X-ray"/>
    <property type="resolution" value="1.50 A"/>
    <property type="chains" value="A=90-419"/>
</dbReference>
<dbReference type="PDB" id="5P57">
    <property type="method" value="X-ray"/>
    <property type="resolution" value="1.42 A"/>
    <property type="chains" value="A=90-419"/>
</dbReference>
<dbReference type="PDB" id="5P58">
    <property type="method" value="X-ray"/>
    <property type="resolution" value="1.12 A"/>
    <property type="chains" value="A=90-419"/>
</dbReference>
<dbReference type="PDB" id="5P59">
    <property type="method" value="X-ray"/>
    <property type="resolution" value="1.18 A"/>
    <property type="chains" value="A=90-419"/>
</dbReference>
<dbReference type="PDB" id="5P5A">
    <property type="method" value="X-ray"/>
    <property type="resolution" value="1.27 A"/>
    <property type="chains" value="A=90-419"/>
</dbReference>
<dbReference type="PDB" id="5P5B">
    <property type="method" value="X-ray"/>
    <property type="resolution" value="1.21 A"/>
    <property type="chains" value="A=90-419"/>
</dbReference>
<dbReference type="PDB" id="5P5C">
    <property type="method" value="X-ray"/>
    <property type="resolution" value="1.34 A"/>
    <property type="chains" value="A=90-419"/>
</dbReference>
<dbReference type="PDB" id="5P5D">
    <property type="method" value="X-ray"/>
    <property type="resolution" value="1.58 A"/>
    <property type="chains" value="A=90-419"/>
</dbReference>
<dbReference type="PDB" id="5P5E">
    <property type="method" value="X-ray"/>
    <property type="resolution" value="1.27 A"/>
    <property type="chains" value="A=90-419"/>
</dbReference>
<dbReference type="PDB" id="5P5F">
    <property type="method" value="X-ray"/>
    <property type="resolution" value="1.30 A"/>
    <property type="chains" value="A=90-419"/>
</dbReference>
<dbReference type="PDB" id="5P5G">
    <property type="method" value="X-ray"/>
    <property type="resolution" value="1.66 A"/>
    <property type="chains" value="A=90-419"/>
</dbReference>
<dbReference type="PDB" id="5P5H">
    <property type="method" value="X-ray"/>
    <property type="resolution" value="1.09 A"/>
    <property type="chains" value="A=90-419"/>
</dbReference>
<dbReference type="PDB" id="5P5I">
    <property type="method" value="X-ray"/>
    <property type="resolution" value="1.18 A"/>
    <property type="chains" value="A=90-419"/>
</dbReference>
<dbReference type="PDB" id="5P5J">
    <property type="method" value="X-ray"/>
    <property type="resolution" value="1.17 A"/>
    <property type="chains" value="A=90-419"/>
</dbReference>
<dbReference type="PDB" id="5P5K">
    <property type="method" value="X-ray"/>
    <property type="resolution" value="1.26 A"/>
    <property type="chains" value="A=90-419"/>
</dbReference>
<dbReference type="PDB" id="5P5L">
    <property type="method" value="X-ray"/>
    <property type="resolution" value="1.73 A"/>
    <property type="chains" value="A=90-419"/>
</dbReference>
<dbReference type="PDB" id="5P5M">
    <property type="method" value="X-ray"/>
    <property type="resolution" value="1.18 A"/>
    <property type="chains" value="A=90-419"/>
</dbReference>
<dbReference type="PDB" id="5P5N">
    <property type="method" value="X-ray"/>
    <property type="resolution" value="1.69 A"/>
    <property type="chains" value="A=90-419"/>
</dbReference>
<dbReference type="PDB" id="5P5O">
    <property type="method" value="X-ray"/>
    <property type="resolution" value="1.20 A"/>
    <property type="chains" value="A=90-419"/>
</dbReference>
<dbReference type="PDB" id="5P5P">
    <property type="method" value="X-ray"/>
    <property type="resolution" value="1.09 A"/>
    <property type="chains" value="A=90-419"/>
</dbReference>
<dbReference type="PDB" id="5P5Q">
    <property type="method" value="X-ray"/>
    <property type="resolution" value="1.28 A"/>
    <property type="chains" value="A=90-419"/>
</dbReference>
<dbReference type="PDB" id="5P5R">
    <property type="method" value="X-ray"/>
    <property type="resolution" value="1.31 A"/>
    <property type="chains" value="A=90-419"/>
</dbReference>
<dbReference type="PDB" id="5P5S">
    <property type="method" value="X-ray"/>
    <property type="resolution" value="1.14 A"/>
    <property type="chains" value="A=90-419"/>
</dbReference>
<dbReference type="PDB" id="5P5T">
    <property type="method" value="X-ray"/>
    <property type="resolution" value="1.18 A"/>
    <property type="chains" value="A=90-419"/>
</dbReference>
<dbReference type="PDB" id="5P5U">
    <property type="method" value="X-ray"/>
    <property type="resolution" value="1.42 A"/>
    <property type="chains" value="A=90-419"/>
</dbReference>
<dbReference type="PDB" id="5P5V">
    <property type="method" value="X-ray"/>
    <property type="resolution" value="1.06 A"/>
    <property type="chains" value="A=90-419"/>
</dbReference>
<dbReference type="PDB" id="5P5W">
    <property type="method" value="X-ray"/>
    <property type="resolution" value="1.30 A"/>
    <property type="chains" value="A=90-419"/>
</dbReference>
<dbReference type="PDB" id="5P5X">
    <property type="method" value="X-ray"/>
    <property type="resolution" value="1.07 A"/>
    <property type="chains" value="A=90-419"/>
</dbReference>
<dbReference type="PDB" id="5P5Y">
    <property type="method" value="X-ray"/>
    <property type="resolution" value="1.14 A"/>
    <property type="chains" value="A=90-419"/>
</dbReference>
<dbReference type="PDB" id="5P5Z">
    <property type="method" value="X-ray"/>
    <property type="resolution" value="1.17 A"/>
    <property type="chains" value="A=90-419"/>
</dbReference>
<dbReference type="PDB" id="5P60">
    <property type="method" value="X-ray"/>
    <property type="resolution" value="1.24 A"/>
    <property type="chains" value="A=90-419"/>
</dbReference>
<dbReference type="PDB" id="5P61">
    <property type="method" value="X-ray"/>
    <property type="resolution" value="1.09 A"/>
    <property type="chains" value="A=90-419"/>
</dbReference>
<dbReference type="PDB" id="5P62">
    <property type="method" value="X-ray"/>
    <property type="resolution" value="1.28 A"/>
    <property type="chains" value="A=90-419"/>
</dbReference>
<dbReference type="PDB" id="5P63">
    <property type="method" value="X-ray"/>
    <property type="resolution" value="1.20 A"/>
    <property type="chains" value="A=90-419"/>
</dbReference>
<dbReference type="PDB" id="5P64">
    <property type="method" value="X-ray"/>
    <property type="resolution" value="1.07 A"/>
    <property type="chains" value="A=90-419"/>
</dbReference>
<dbReference type="PDB" id="5P65">
    <property type="method" value="X-ray"/>
    <property type="resolution" value="1.10 A"/>
    <property type="chains" value="A=90-419"/>
</dbReference>
<dbReference type="PDB" id="5P66">
    <property type="method" value="X-ray"/>
    <property type="resolution" value="1.19 A"/>
    <property type="chains" value="A=90-419"/>
</dbReference>
<dbReference type="PDB" id="5P67">
    <property type="method" value="X-ray"/>
    <property type="resolution" value="1.12 A"/>
    <property type="chains" value="A=90-419"/>
</dbReference>
<dbReference type="PDB" id="5P68">
    <property type="method" value="X-ray"/>
    <property type="resolution" value="1.25 A"/>
    <property type="chains" value="A=90-419"/>
</dbReference>
<dbReference type="PDB" id="5P69">
    <property type="method" value="X-ray"/>
    <property type="resolution" value="1.44 A"/>
    <property type="chains" value="A=90-419"/>
</dbReference>
<dbReference type="PDB" id="5P6A">
    <property type="method" value="X-ray"/>
    <property type="resolution" value="1.16 A"/>
    <property type="chains" value="A=90-419"/>
</dbReference>
<dbReference type="PDB" id="5P6B">
    <property type="method" value="X-ray"/>
    <property type="resolution" value="1.47 A"/>
    <property type="chains" value="A=90-419"/>
</dbReference>
<dbReference type="PDB" id="5P6C">
    <property type="method" value="X-ray"/>
    <property type="resolution" value="1.34 A"/>
    <property type="chains" value="A=90-419"/>
</dbReference>
<dbReference type="PDB" id="5P6D">
    <property type="method" value="X-ray"/>
    <property type="resolution" value="1.44 A"/>
    <property type="chains" value="A=90-419"/>
</dbReference>
<dbReference type="PDB" id="5P6E">
    <property type="method" value="X-ray"/>
    <property type="resolution" value="1.21 A"/>
    <property type="chains" value="A=90-419"/>
</dbReference>
<dbReference type="PDB" id="5P6F">
    <property type="method" value="X-ray"/>
    <property type="resolution" value="1.13 A"/>
    <property type="chains" value="A=90-419"/>
</dbReference>
<dbReference type="PDB" id="5P6G">
    <property type="method" value="X-ray"/>
    <property type="resolution" value="1.09 A"/>
    <property type="chains" value="A=90-419"/>
</dbReference>
<dbReference type="PDB" id="5P6H">
    <property type="method" value="X-ray"/>
    <property type="resolution" value="1.45 A"/>
    <property type="chains" value="A=90-419"/>
</dbReference>
<dbReference type="PDB" id="5P6I">
    <property type="method" value="X-ray"/>
    <property type="resolution" value="1.20 A"/>
    <property type="chains" value="A=90-419"/>
</dbReference>
<dbReference type="PDB" id="5P6J">
    <property type="method" value="X-ray"/>
    <property type="resolution" value="1.26 A"/>
    <property type="chains" value="A=90-419"/>
</dbReference>
<dbReference type="PDB" id="5P6K">
    <property type="method" value="X-ray"/>
    <property type="resolution" value="1.61 A"/>
    <property type="chains" value="A=90-419"/>
</dbReference>
<dbReference type="PDB" id="5P6L">
    <property type="method" value="X-ray"/>
    <property type="resolution" value="1.05 A"/>
    <property type="chains" value="A=90-419"/>
</dbReference>
<dbReference type="PDB" id="5P6M">
    <property type="method" value="X-ray"/>
    <property type="resolution" value="1.34 A"/>
    <property type="chains" value="A=90-419"/>
</dbReference>
<dbReference type="PDB" id="5P6N">
    <property type="method" value="X-ray"/>
    <property type="resolution" value="1.11 A"/>
    <property type="chains" value="A=90-419"/>
</dbReference>
<dbReference type="PDB" id="5P6O">
    <property type="method" value="X-ray"/>
    <property type="resolution" value="1.13 A"/>
    <property type="chains" value="A=90-419"/>
</dbReference>
<dbReference type="PDB" id="5P6P">
    <property type="method" value="X-ray"/>
    <property type="resolution" value="1.28 A"/>
    <property type="chains" value="A=90-419"/>
</dbReference>
<dbReference type="PDB" id="5P6Q">
    <property type="method" value="X-ray"/>
    <property type="resolution" value="1.24 A"/>
    <property type="chains" value="A=90-419"/>
</dbReference>
<dbReference type="PDB" id="5P6R">
    <property type="method" value="X-ray"/>
    <property type="resolution" value="1.27 A"/>
    <property type="chains" value="A=90-419"/>
</dbReference>
<dbReference type="PDB" id="5P6S">
    <property type="method" value="X-ray"/>
    <property type="resolution" value="1.34 A"/>
    <property type="chains" value="A=90-419"/>
</dbReference>
<dbReference type="PDB" id="5P6T">
    <property type="method" value="X-ray"/>
    <property type="resolution" value="1.46 A"/>
    <property type="chains" value="A=90-419"/>
</dbReference>
<dbReference type="PDB" id="5P6U">
    <property type="method" value="X-ray"/>
    <property type="resolution" value="1.06 A"/>
    <property type="chains" value="A=90-419"/>
</dbReference>
<dbReference type="PDB" id="5P6V">
    <property type="method" value="X-ray"/>
    <property type="resolution" value="1.28 A"/>
    <property type="chains" value="A=90-419"/>
</dbReference>
<dbReference type="PDB" id="5P6W">
    <property type="method" value="X-ray"/>
    <property type="resolution" value="1.61 A"/>
    <property type="chains" value="A=90-419"/>
</dbReference>
<dbReference type="PDB" id="5P6X">
    <property type="method" value="X-ray"/>
    <property type="resolution" value="1.40 A"/>
    <property type="chains" value="A=90-419"/>
</dbReference>
<dbReference type="PDB" id="5P6Y">
    <property type="method" value="X-ray"/>
    <property type="resolution" value="1.18 A"/>
    <property type="chains" value="A=90-419"/>
</dbReference>
<dbReference type="PDB" id="5P6Z">
    <property type="method" value="X-ray"/>
    <property type="resolution" value="1.28 A"/>
    <property type="chains" value="A=90-419"/>
</dbReference>
<dbReference type="PDB" id="5P70">
    <property type="method" value="X-ray"/>
    <property type="resolution" value="1.02 A"/>
    <property type="chains" value="A=90-419"/>
</dbReference>
<dbReference type="PDB" id="5P71">
    <property type="method" value="X-ray"/>
    <property type="resolution" value="1.03 A"/>
    <property type="chains" value="A=90-419"/>
</dbReference>
<dbReference type="PDB" id="5P72">
    <property type="method" value="X-ray"/>
    <property type="resolution" value="1.05 A"/>
    <property type="chains" value="A=90-419"/>
</dbReference>
<dbReference type="PDB" id="5P73">
    <property type="method" value="X-ray"/>
    <property type="resolution" value="1.02 A"/>
    <property type="chains" value="A=90-419"/>
</dbReference>
<dbReference type="PDB" id="5P74">
    <property type="method" value="X-ray"/>
    <property type="resolution" value="1.04 A"/>
    <property type="chains" value="A=90-419"/>
</dbReference>
<dbReference type="PDB" id="5P75">
    <property type="method" value="X-ray"/>
    <property type="resolution" value="1.43 A"/>
    <property type="chains" value="A=90-419"/>
</dbReference>
<dbReference type="PDB" id="5P76">
    <property type="method" value="X-ray"/>
    <property type="resolution" value="1.04 A"/>
    <property type="chains" value="A=90-419"/>
</dbReference>
<dbReference type="PDB" id="5P77">
    <property type="method" value="X-ray"/>
    <property type="resolution" value="1.03 A"/>
    <property type="chains" value="A=90-419"/>
</dbReference>
<dbReference type="PDB" id="5P78">
    <property type="method" value="X-ray"/>
    <property type="resolution" value="1.69 A"/>
    <property type="chains" value="A=90-419"/>
</dbReference>
<dbReference type="PDB" id="5P79">
    <property type="method" value="X-ray"/>
    <property type="resolution" value="1.13 A"/>
    <property type="chains" value="A=90-419"/>
</dbReference>
<dbReference type="PDB" id="5P7A">
    <property type="method" value="X-ray"/>
    <property type="resolution" value="1.25 A"/>
    <property type="chains" value="A=90-419"/>
</dbReference>
<dbReference type="PDB" id="5P7B">
    <property type="method" value="X-ray"/>
    <property type="resolution" value="1.41 A"/>
    <property type="chains" value="A=90-419"/>
</dbReference>
<dbReference type="PDB" id="5P7C">
    <property type="method" value="X-ray"/>
    <property type="resolution" value="1.27 A"/>
    <property type="chains" value="A=90-419"/>
</dbReference>
<dbReference type="PDB" id="5P7D">
    <property type="method" value="X-ray"/>
    <property type="resolution" value="1.17 A"/>
    <property type="chains" value="A=90-419"/>
</dbReference>
<dbReference type="PDB" id="5P7E">
    <property type="method" value="X-ray"/>
    <property type="resolution" value="1.23 A"/>
    <property type="chains" value="A=90-419"/>
</dbReference>
<dbReference type="PDB" id="5P7F">
    <property type="method" value="X-ray"/>
    <property type="resolution" value="1.08 A"/>
    <property type="chains" value="A=90-419"/>
</dbReference>
<dbReference type="PDB" id="5P7G">
    <property type="method" value="X-ray"/>
    <property type="resolution" value="1.10 A"/>
    <property type="chains" value="A=90-419"/>
</dbReference>
<dbReference type="PDB" id="5P7H">
    <property type="method" value="X-ray"/>
    <property type="resolution" value="1.19 A"/>
    <property type="chains" value="A=90-419"/>
</dbReference>
<dbReference type="PDB" id="5P7I">
    <property type="method" value="X-ray"/>
    <property type="resolution" value="1.19 A"/>
    <property type="chains" value="A=90-419"/>
</dbReference>
<dbReference type="PDB" id="5P7J">
    <property type="method" value="X-ray"/>
    <property type="resolution" value="1.31 A"/>
    <property type="chains" value="A=90-419"/>
</dbReference>
<dbReference type="PDB" id="5P7K">
    <property type="method" value="X-ray"/>
    <property type="resolution" value="1.10 A"/>
    <property type="chains" value="A=90-419"/>
</dbReference>
<dbReference type="PDB" id="5P7L">
    <property type="method" value="X-ray"/>
    <property type="resolution" value="1.17 A"/>
    <property type="chains" value="A=90-419"/>
</dbReference>
<dbReference type="PDB" id="5P7M">
    <property type="method" value="X-ray"/>
    <property type="resolution" value="1.33 A"/>
    <property type="chains" value="A=90-419"/>
</dbReference>
<dbReference type="PDB" id="5P7N">
    <property type="method" value="X-ray"/>
    <property type="resolution" value="1.65 A"/>
    <property type="chains" value="A=90-419"/>
</dbReference>
<dbReference type="PDB" id="5P7O">
    <property type="method" value="X-ray"/>
    <property type="resolution" value="1.48 A"/>
    <property type="chains" value="A=90-419"/>
</dbReference>
<dbReference type="PDB" id="5P7P">
    <property type="method" value="X-ray"/>
    <property type="resolution" value="1.44 A"/>
    <property type="chains" value="A=90-419"/>
</dbReference>
<dbReference type="PDB" id="5P7Q">
    <property type="method" value="X-ray"/>
    <property type="resolution" value="1.11 A"/>
    <property type="chains" value="A=90-419"/>
</dbReference>
<dbReference type="PDB" id="5P7R">
    <property type="method" value="X-ray"/>
    <property type="resolution" value="1.48 A"/>
    <property type="chains" value="A=90-419"/>
</dbReference>
<dbReference type="PDB" id="5P7S">
    <property type="method" value="X-ray"/>
    <property type="resolution" value="1.19 A"/>
    <property type="chains" value="A=90-419"/>
</dbReference>
<dbReference type="PDB" id="5P7T">
    <property type="method" value="X-ray"/>
    <property type="resolution" value="1.46 A"/>
    <property type="chains" value="A=90-419"/>
</dbReference>
<dbReference type="PDB" id="5P7U">
    <property type="method" value="X-ray"/>
    <property type="resolution" value="1.10 A"/>
    <property type="chains" value="A=90-419"/>
</dbReference>
<dbReference type="PDB" id="5P7V">
    <property type="method" value="X-ray"/>
    <property type="resolution" value="1.28 A"/>
    <property type="chains" value="A=90-419"/>
</dbReference>
<dbReference type="PDB" id="5P7W">
    <property type="method" value="X-ray"/>
    <property type="resolution" value="1.36 A"/>
    <property type="chains" value="A=90-419"/>
</dbReference>
<dbReference type="PDB" id="5P7X">
    <property type="method" value="X-ray"/>
    <property type="resolution" value="1.47 A"/>
    <property type="chains" value="A=90-419"/>
</dbReference>
<dbReference type="PDB" id="5P7Y">
    <property type="method" value="X-ray"/>
    <property type="resolution" value="1.65 A"/>
    <property type="chains" value="A=90-419"/>
</dbReference>
<dbReference type="PDB" id="5P7Z">
    <property type="method" value="X-ray"/>
    <property type="resolution" value="1.26 A"/>
    <property type="chains" value="A=90-419"/>
</dbReference>
<dbReference type="PDB" id="5P80">
    <property type="method" value="X-ray"/>
    <property type="resolution" value="1.24 A"/>
    <property type="chains" value="A=90-419"/>
</dbReference>
<dbReference type="PDB" id="5P81">
    <property type="method" value="X-ray"/>
    <property type="resolution" value="1.60 A"/>
    <property type="chains" value="A=90-419"/>
</dbReference>
<dbReference type="PDB" id="5P82">
    <property type="method" value="X-ray"/>
    <property type="resolution" value="1.22 A"/>
    <property type="chains" value="A=90-419"/>
</dbReference>
<dbReference type="PDB" id="5P83">
    <property type="method" value="X-ray"/>
    <property type="resolution" value="1.52 A"/>
    <property type="chains" value="A=90-419"/>
</dbReference>
<dbReference type="PDB" id="5P84">
    <property type="method" value="X-ray"/>
    <property type="resolution" value="1.29 A"/>
    <property type="chains" value="A=90-419"/>
</dbReference>
<dbReference type="PDB" id="5P85">
    <property type="method" value="X-ray"/>
    <property type="resolution" value="1.23 A"/>
    <property type="chains" value="A=90-419"/>
</dbReference>
<dbReference type="PDB" id="5P86">
    <property type="method" value="X-ray"/>
    <property type="resolution" value="1.33 A"/>
    <property type="chains" value="A=90-419"/>
</dbReference>
<dbReference type="PDB" id="5P87">
    <property type="method" value="X-ray"/>
    <property type="resolution" value="1.35 A"/>
    <property type="chains" value="A=90-419"/>
</dbReference>
<dbReference type="PDB" id="5P88">
    <property type="method" value="X-ray"/>
    <property type="resolution" value="1.22 A"/>
    <property type="chains" value="A=90-419"/>
</dbReference>
<dbReference type="PDB" id="5P89">
    <property type="method" value="X-ray"/>
    <property type="resolution" value="1.27 A"/>
    <property type="chains" value="A=90-419"/>
</dbReference>
<dbReference type="PDB" id="5P8A">
    <property type="method" value="X-ray"/>
    <property type="resolution" value="1.27 A"/>
    <property type="chains" value="A=90-419"/>
</dbReference>
<dbReference type="PDB" id="5P8B">
    <property type="method" value="X-ray"/>
    <property type="resolution" value="1.55 A"/>
    <property type="chains" value="A=90-419"/>
</dbReference>
<dbReference type="PDB" id="5P8C">
    <property type="method" value="X-ray"/>
    <property type="resolution" value="1.30 A"/>
    <property type="chains" value="A=90-419"/>
</dbReference>
<dbReference type="PDB" id="5P8D">
    <property type="method" value="X-ray"/>
    <property type="resolution" value="1.18 A"/>
    <property type="chains" value="A=90-419"/>
</dbReference>
<dbReference type="PDB" id="5P8E">
    <property type="method" value="X-ray"/>
    <property type="resolution" value="1.22 A"/>
    <property type="chains" value="A=90-419"/>
</dbReference>
<dbReference type="PDB" id="5P8F">
    <property type="method" value="X-ray"/>
    <property type="resolution" value="1.27 A"/>
    <property type="chains" value="A=90-419"/>
</dbReference>
<dbReference type="PDB" id="5P8G">
    <property type="method" value="X-ray"/>
    <property type="resolution" value="1.28 A"/>
    <property type="chains" value="A=90-419"/>
</dbReference>
<dbReference type="PDB" id="5P8H">
    <property type="method" value="X-ray"/>
    <property type="resolution" value="1.24 A"/>
    <property type="chains" value="A=90-419"/>
</dbReference>
<dbReference type="PDB" id="5P8I">
    <property type="method" value="X-ray"/>
    <property type="resolution" value="1.22 A"/>
    <property type="chains" value="A=90-419"/>
</dbReference>
<dbReference type="PDB" id="5P8J">
    <property type="method" value="X-ray"/>
    <property type="resolution" value="1.33 A"/>
    <property type="chains" value="A=90-419"/>
</dbReference>
<dbReference type="PDB" id="5P8K">
    <property type="method" value="X-ray"/>
    <property type="resolution" value="1.26 A"/>
    <property type="chains" value="A=90-419"/>
</dbReference>
<dbReference type="PDB" id="5P8L">
    <property type="method" value="X-ray"/>
    <property type="resolution" value="1.24 A"/>
    <property type="chains" value="A=90-419"/>
</dbReference>
<dbReference type="PDB" id="5P8M">
    <property type="method" value="X-ray"/>
    <property type="resolution" value="1.20 A"/>
    <property type="chains" value="A=90-419"/>
</dbReference>
<dbReference type="PDB" id="5P8N">
    <property type="method" value="X-ray"/>
    <property type="resolution" value="1.49 A"/>
    <property type="chains" value="A=90-419"/>
</dbReference>
<dbReference type="PDB" id="5P8O">
    <property type="method" value="X-ray"/>
    <property type="resolution" value="1.48 A"/>
    <property type="chains" value="A=90-419"/>
</dbReference>
<dbReference type="PDB" id="5P8P">
    <property type="method" value="X-ray"/>
    <property type="resolution" value="1.22 A"/>
    <property type="chains" value="A=90-419"/>
</dbReference>
<dbReference type="PDB" id="5P8Q">
    <property type="method" value="X-ray"/>
    <property type="resolution" value="1.14 A"/>
    <property type="chains" value="A=90-419"/>
</dbReference>
<dbReference type="PDB" id="5P8R">
    <property type="method" value="X-ray"/>
    <property type="resolution" value="1.07 A"/>
    <property type="chains" value="A=90-419"/>
</dbReference>
<dbReference type="PDB" id="5P8S">
    <property type="method" value="X-ray"/>
    <property type="resolution" value="1.11 A"/>
    <property type="chains" value="A=90-419"/>
</dbReference>
<dbReference type="PDB" id="5P8T">
    <property type="method" value="X-ray"/>
    <property type="resolution" value="1.03 A"/>
    <property type="chains" value="A=90-419"/>
</dbReference>
<dbReference type="PDB" id="5P8U">
    <property type="method" value="X-ray"/>
    <property type="resolution" value="1.44 A"/>
    <property type="chains" value="A=90-419"/>
</dbReference>
<dbReference type="PDB" id="5P8V">
    <property type="method" value="X-ray"/>
    <property type="resolution" value="1.58 A"/>
    <property type="chains" value="A=90-419"/>
</dbReference>
<dbReference type="PDB" id="5QB5">
    <property type="method" value="X-ray"/>
    <property type="resolution" value="1.20 A"/>
    <property type="chains" value="A=90-419"/>
</dbReference>
<dbReference type="PDB" id="5QB6">
    <property type="method" value="X-ray"/>
    <property type="resolution" value="1.54 A"/>
    <property type="chains" value="A=90-419"/>
</dbReference>
<dbReference type="PDB" id="5QB7">
    <property type="method" value="X-ray"/>
    <property type="resolution" value="1.50 A"/>
    <property type="chains" value="A=90-419"/>
</dbReference>
<dbReference type="PDB" id="5QB8">
    <property type="method" value="X-ray"/>
    <property type="resolution" value="1.24 A"/>
    <property type="chains" value="A=90-419"/>
</dbReference>
<dbReference type="PDB" id="5QB9">
    <property type="method" value="X-ray"/>
    <property type="resolution" value="1.48 A"/>
    <property type="chains" value="A=90-419"/>
</dbReference>
<dbReference type="PDB" id="5QBA">
    <property type="method" value="X-ray"/>
    <property type="resolution" value="1.34 A"/>
    <property type="chains" value="A=90-419"/>
</dbReference>
<dbReference type="PDB" id="5QBB">
    <property type="method" value="X-ray"/>
    <property type="resolution" value="1.76 A"/>
    <property type="chains" value="A=90-419"/>
</dbReference>
<dbReference type="PDB" id="5QBC">
    <property type="method" value="X-ray"/>
    <property type="resolution" value="1.45 A"/>
    <property type="chains" value="A=90-419"/>
</dbReference>
<dbReference type="PDB" id="5QBD">
    <property type="method" value="X-ray"/>
    <property type="resolution" value="1.42 A"/>
    <property type="chains" value="A=90-419"/>
</dbReference>
<dbReference type="PDB" id="5QBE">
    <property type="method" value="X-ray"/>
    <property type="resolution" value="1.50 A"/>
    <property type="chains" value="A=90-419"/>
</dbReference>
<dbReference type="PDB" id="5QBF">
    <property type="method" value="X-ray"/>
    <property type="resolution" value="1.27 A"/>
    <property type="chains" value="A=90-419"/>
</dbReference>
<dbReference type="PDB" id="5QBG">
    <property type="method" value="X-ray"/>
    <property type="resolution" value="1.70 A"/>
    <property type="chains" value="A=90-419"/>
</dbReference>
<dbReference type="PDB" id="5QBH">
    <property type="method" value="X-ray"/>
    <property type="resolution" value="1.47 A"/>
    <property type="chains" value="A=90-419"/>
</dbReference>
<dbReference type="PDB" id="5QBI">
    <property type="method" value="X-ray"/>
    <property type="resolution" value="1.62 A"/>
    <property type="chains" value="A=90-419"/>
</dbReference>
<dbReference type="PDB" id="5QBJ">
    <property type="method" value="X-ray"/>
    <property type="resolution" value="1.70 A"/>
    <property type="chains" value="A=90-419"/>
</dbReference>
<dbReference type="PDB" id="5QBK">
    <property type="method" value="X-ray"/>
    <property type="resolution" value="1.28 A"/>
    <property type="chains" value="A=90-419"/>
</dbReference>
<dbReference type="PDB" id="5QBL">
    <property type="method" value="X-ray"/>
    <property type="resolution" value="1.62 A"/>
    <property type="chains" value="A=90-419"/>
</dbReference>
<dbReference type="PDB" id="5QBM">
    <property type="method" value="X-ray"/>
    <property type="resolution" value="1.57 A"/>
    <property type="chains" value="A=90-419"/>
</dbReference>
<dbReference type="PDB" id="5QBN">
    <property type="method" value="X-ray"/>
    <property type="resolution" value="1.40 A"/>
    <property type="chains" value="A=90-419"/>
</dbReference>
<dbReference type="PDB" id="5QBO">
    <property type="method" value="X-ray"/>
    <property type="resolution" value="1.12 A"/>
    <property type="chains" value="A=90-419"/>
</dbReference>
<dbReference type="PDB" id="5QBP">
    <property type="method" value="X-ray"/>
    <property type="resolution" value="1.30 A"/>
    <property type="chains" value="A=90-419"/>
</dbReference>
<dbReference type="PDB" id="5QBQ">
    <property type="method" value="X-ray"/>
    <property type="resolution" value="1.70 A"/>
    <property type="chains" value="A=90-419"/>
</dbReference>
<dbReference type="PDB" id="5QBR">
    <property type="method" value="X-ray"/>
    <property type="resolution" value="1.42 A"/>
    <property type="chains" value="A=90-419"/>
</dbReference>
<dbReference type="PDB" id="5QBS">
    <property type="method" value="X-ray"/>
    <property type="resolution" value="1.53 A"/>
    <property type="chains" value="A=90-419"/>
</dbReference>
<dbReference type="PDB" id="5QBT">
    <property type="method" value="X-ray"/>
    <property type="resolution" value="1.30 A"/>
    <property type="chains" value="A=90-419"/>
</dbReference>
<dbReference type="PDB" id="5R1T">
    <property type="method" value="X-ray"/>
    <property type="resolution" value="1.19 A"/>
    <property type="chains" value="A=1-419"/>
</dbReference>
<dbReference type="PDB" id="5R1U">
    <property type="method" value="X-ray"/>
    <property type="resolution" value="1.04 A"/>
    <property type="chains" value="A=1-419"/>
</dbReference>
<dbReference type="PDB" id="5R1V">
    <property type="method" value="X-ray"/>
    <property type="resolution" value="0.94 A"/>
    <property type="chains" value="A=1-419"/>
</dbReference>
<dbReference type="PDB" id="5R1W">
    <property type="method" value="X-ray"/>
    <property type="resolution" value="1.08 A"/>
    <property type="chains" value="A=1-419"/>
</dbReference>
<dbReference type="PDB" id="5R1X">
    <property type="method" value="X-ray"/>
    <property type="resolution" value="1.07 A"/>
    <property type="chains" value="A=1-419"/>
</dbReference>
<dbReference type="PDB" id="5R1Y">
    <property type="method" value="X-ray"/>
    <property type="resolution" value="1.04 A"/>
    <property type="chains" value="A=1-419"/>
</dbReference>
<dbReference type="PDB" id="5R1Z">
    <property type="method" value="X-ray"/>
    <property type="resolution" value="1.07 A"/>
    <property type="chains" value="A=1-419"/>
</dbReference>
<dbReference type="PDB" id="5R20">
    <property type="method" value="X-ray"/>
    <property type="resolution" value="1.01 A"/>
    <property type="chains" value="A=1-419"/>
</dbReference>
<dbReference type="PDB" id="5R21">
    <property type="method" value="X-ray"/>
    <property type="resolution" value="1.05 A"/>
    <property type="chains" value="A=1-419"/>
</dbReference>
<dbReference type="PDB" id="5R22">
    <property type="method" value="X-ray"/>
    <property type="resolution" value="1.10 A"/>
    <property type="chains" value="A=1-419"/>
</dbReference>
<dbReference type="PDB" id="5R23">
    <property type="method" value="X-ray"/>
    <property type="resolution" value="1.03 A"/>
    <property type="chains" value="A=1-419"/>
</dbReference>
<dbReference type="PDB" id="5R24">
    <property type="method" value="X-ray"/>
    <property type="resolution" value="1.19 A"/>
    <property type="chains" value="A=1-419"/>
</dbReference>
<dbReference type="PDB" id="5R25">
    <property type="method" value="X-ray"/>
    <property type="resolution" value="1.08 A"/>
    <property type="chains" value="A=1-419"/>
</dbReference>
<dbReference type="PDB" id="5R26">
    <property type="method" value="X-ray"/>
    <property type="resolution" value="1.06 A"/>
    <property type="chains" value="A=1-419"/>
</dbReference>
<dbReference type="PDB" id="5R27">
    <property type="method" value="X-ray"/>
    <property type="resolution" value="1.03 A"/>
    <property type="chains" value="A=1-419"/>
</dbReference>
<dbReference type="PDB" id="5R28">
    <property type="method" value="X-ray"/>
    <property type="resolution" value="1.02 A"/>
    <property type="chains" value="A=1-419"/>
</dbReference>
<dbReference type="PDB" id="5R29">
    <property type="method" value="X-ray"/>
    <property type="resolution" value="1.10 A"/>
    <property type="chains" value="A=1-419"/>
</dbReference>
<dbReference type="PDB" id="5R2A">
    <property type="method" value="X-ray"/>
    <property type="resolution" value="1.05 A"/>
    <property type="chains" value="A=1-419"/>
</dbReference>
<dbReference type="PDB" id="5R2B">
    <property type="method" value="X-ray"/>
    <property type="resolution" value="1.02 A"/>
    <property type="chains" value="A=1-419"/>
</dbReference>
<dbReference type="PDB" id="5R2C">
    <property type="method" value="X-ray"/>
    <property type="resolution" value="1.18 A"/>
    <property type="chains" value="A=1-419"/>
</dbReference>
<dbReference type="PDB" id="5R2D">
    <property type="method" value="X-ray"/>
    <property type="resolution" value="0.92 A"/>
    <property type="chains" value="A=1-419"/>
</dbReference>
<dbReference type="PDB" id="5R2E">
    <property type="method" value="X-ray"/>
    <property type="resolution" value="1.10 A"/>
    <property type="chains" value="A=1-419"/>
</dbReference>
<dbReference type="PDB" id="5R2F">
    <property type="method" value="X-ray"/>
    <property type="resolution" value="1.12 A"/>
    <property type="chains" value="A=1-419"/>
</dbReference>
<dbReference type="PDB" id="5R2G">
    <property type="method" value="X-ray"/>
    <property type="resolution" value="1.00 A"/>
    <property type="chains" value="A=1-419"/>
</dbReference>
<dbReference type="PDB" id="5R2H">
    <property type="method" value="X-ray"/>
    <property type="resolution" value="1.02 A"/>
    <property type="chains" value="A=1-419"/>
</dbReference>
<dbReference type="PDB" id="5R2I">
    <property type="method" value="X-ray"/>
    <property type="resolution" value="1.01 A"/>
    <property type="chains" value="A=1-419"/>
</dbReference>
<dbReference type="PDB" id="5R2J">
    <property type="method" value="X-ray"/>
    <property type="resolution" value="1.01 A"/>
    <property type="chains" value="A=1-419"/>
</dbReference>
<dbReference type="PDB" id="5R2K">
    <property type="method" value="X-ray"/>
    <property type="resolution" value="1.03 A"/>
    <property type="chains" value="A=1-419"/>
</dbReference>
<dbReference type="PDB" id="5R2L">
    <property type="method" value="X-ray"/>
    <property type="resolution" value="1.00 A"/>
    <property type="chains" value="A=1-419"/>
</dbReference>
<dbReference type="PDB" id="5R2M">
    <property type="method" value="X-ray"/>
    <property type="resolution" value="1.01 A"/>
    <property type="chains" value="A=1-419"/>
</dbReference>
<dbReference type="PDB" id="5R2N">
    <property type="method" value="X-ray"/>
    <property type="resolution" value="1.08 A"/>
    <property type="chains" value="A=1-419"/>
</dbReference>
<dbReference type="PDB" id="5R2O">
    <property type="method" value="X-ray"/>
    <property type="resolution" value="0.97 A"/>
    <property type="chains" value="A=1-419"/>
</dbReference>
<dbReference type="PDB" id="5R2P">
    <property type="method" value="X-ray"/>
    <property type="resolution" value="1.18 A"/>
    <property type="chains" value="A=1-419"/>
</dbReference>
<dbReference type="PDB" id="5R2Q">
    <property type="method" value="X-ray"/>
    <property type="resolution" value="1.04 A"/>
    <property type="chains" value="A=1-419"/>
</dbReference>
<dbReference type="PDB" id="5R2R">
    <property type="method" value="X-ray"/>
    <property type="resolution" value="1.05 A"/>
    <property type="chains" value="A=1-419"/>
</dbReference>
<dbReference type="PDB" id="5R2S">
    <property type="method" value="X-ray"/>
    <property type="resolution" value="1.15 A"/>
    <property type="chains" value="A=1-419"/>
</dbReference>
<dbReference type="PDB" id="5R2T">
    <property type="method" value="X-ray"/>
    <property type="resolution" value="1.01 A"/>
    <property type="chains" value="A=1-419"/>
</dbReference>
<dbReference type="PDB" id="5R2U">
    <property type="method" value="X-ray"/>
    <property type="resolution" value="1.14 A"/>
    <property type="chains" value="A=1-419"/>
</dbReference>
<dbReference type="PDB" id="5R2V">
    <property type="method" value="X-ray"/>
    <property type="resolution" value="1.05 A"/>
    <property type="chains" value="A=1-419"/>
</dbReference>
<dbReference type="PDB" id="5R2W">
    <property type="method" value="X-ray"/>
    <property type="resolution" value="1.28 A"/>
    <property type="chains" value="A=1-419"/>
</dbReference>
<dbReference type="PDB" id="5R2X">
    <property type="method" value="X-ray"/>
    <property type="resolution" value="1.13 A"/>
    <property type="chains" value="A=1-419"/>
</dbReference>
<dbReference type="PDB" id="5R2Y">
    <property type="method" value="X-ray"/>
    <property type="resolution" value="1.01 A"/>
    <property type="chains" value="A=1-419"/>
</dbReference>
<dbReference type="PDB" id="5R2Z">
    <property type="method" value="X-ray"/>
    <property type="resolution" value="0.97 A"/>
    <property type="chains" value="A=1-419"/>
</dbReference>
<dbReference type="PDB" id="5R30">
    <property type="method" value="X-ray"/>
    <property type="resolution" value="1.04 A"/>
    <property type="chains" value="A=1-419"/>
</dbReference>
<dbReference type="PDB" id="5R31">
    <property type="method" value="X-ray"/>
    <property type="resolution" value="0.92 A"/>
    <property type="chains" value="A=1-419"/>
</dbReference>
<dbReference type="PDB" id="5R32">
    <property type="method" value="X-ray"/>
    <property type="resolution" value="0.90 A"/>
    <property type="chains" value="A=1-419"/>
</dbReference>
<dbReference type="PDB" id="5R33">
    <property type="method" value="X-ray"/>
    <property type="resolution" value="0.92 A"/>
    <property type="chains" value="A=1-419"/>
</dbReference>
<dbReference type="PDB" id="5R34">
    <property type="method" value="X-ray"/>
    <property type="resolution" value="1.00 A"/>
    <property type="chains" value="A=1-419"/>
</dbReference>
<dbReference type="PDB" id="5R35">
    <property type="method" value="X-ray"/>
    <property type="resolution" value="0.91 A"/>
    <property type="chains" value="A=1-419"/>
</dbReference>
<dbReference type="PDB" id="5R36">
    <property type="method" value="X-ray"/>
    <property type="resolution" value="1.01 A"/>
    <property type="chains" value="A=1-419"/>
</dbReference>
<dbReference type="PDB" id="5R37">
    <property type="method" value="X-ray"/>
    <property type="resolution" value="1.04 A"/>
    <property type="chains" value="A=1-419"/>
</dbReference>
<dbReference type="PDB" id="5R38">
    <property type="method" value="X-ray"/>
    <property type="resolution" value="1.08 A"/>
    <property type="chains" value="A=1-419"/>
</dbReference>
<dbReference type="PDB" id="5R39">
    <property type="method" value="X-ray"/>
    <property type="resolution" value="0.92 A"/>
    <property type="chains" value="A=1-419"/>
</dbReference>
<dbReference type="PDB" id="5R3A">
    <property type="method" value="X-ray"/>
    <property type="resolution" value="1.09 A"/>
    <property type="chains" value="A=1-419"/>
</dbReference>
<dbReference type="PDB" id="5R3B">
    <property type="method" value="X-ray"/>
    <property type="resolution" value="1.17 A"/>
    <property type="chains" value="A=1-419"/>
</dbReference>
<dbReference type="PDB" id="5R3C">
    <property type="method" value="X-ray"/>
    <property type="resolution" value="0.95 A"/>
    <property type="chains" value="A=1-419"/>
</dbReference>
<dbReference type="PDB" id="5R3D">
    <property type="method" value="X-ray"/>
    <property type="resolution" value="0.98 A"/>
    <property type="chains" value="A=1-419"/>
</dbReference>
<dbReference type="PDB" id="5R3E">
    <property type="method" value="X-ray"/>
    <property type="resolution" value="1.01 A"/>
    <property type="chains" value="A=1-419"/>
</dbReference>
<dbReference type="PDB" id="5R3F">
    <property type="method" value="X-ray"/>
    <property type="resolution" value="1.19 A"/>
    <property type="chains" value="A=1-419"/>
</dbReference>
<dbReference type="PDB" id="5R3G">
    <property type="method" value="X-ray"/>
    <property type="resolution" value="1.11 A"/>
    <property type="chains" value="A=1-419"/>
</dbReference>
<dbReference type="PDB" id="5R3H">
    <property type="method" value="X-ray"/>
    <property type="resolution" value="1.04 A"/>
    <property type="chains" value="A=1-419"/>
</dbReference>
<dbReference type="PDB" id="5R3I">
    <property type="method" value="X-ray"/>
    <property type="resolution" value="1.04 A"/>
    <property type="chains" value="A=1-419"/>
</dbReference>
<dbReference type="PDB" id="5R3J">
    <property type="method" value="X-ray"/>
    <property type="resolution" value="1.08 A"/>
    <property type="chains" value="A=1-419"/>
</dbReference>
<dbReference type="PDB" id="5R3K">
    <property type="method" value="X-ray"/>
    <property type="resolution" value="1.21 A"/>
    <property type="chains" value="A=1-419"/>
</dbReference>
<dbReference type="PDB" id="5R3L">
    <property type="method" value="X-ray"/>
    <property type="resolution" value="0.94 A"/>
    <property type="chains" value="A=1-419"/>
</dbReference>
<dbReference type="PDB" id="5R3M">
    <property type="method" value="X-ray"/>
    <property type="resolution" value="1.04 A"/>
    <property type="chains" value="A=1-419"/>
</dbReference>
<dbReference type="PDB" id="5R3N">
    <property type="method" value="X-ray"/>
    <property type="resolution" value="1.06 A"/>
    <property type="chains" value="A=1-419"/>
</dbReference>
<dbReference type="PDB" id="5R3O">
    <property type="method" value="X-ray"/>
    <property type="resolution" value="1.22 A"/>
    <property type="chains" value="A=1-419"/>
</dbReference>
<dbReference type="PDB" id="5R3P">
    <property type="method" value="X-ray"/>
    <property type="resolution" value="1.08 A"/>
    <property type="chains" value="A=1-419"/>
</dbReference>
<dbReference type="PDB" id="5R3Q">
    <property type="method" value="X-ray"/>
    <property type="resolution" value="1.01 A"/>
    <property type="chains" value="A=1-419"/>
</dbReference>
<dbReference type="PDB" id="5R3R">
    <property type="method" value="X-ray"/>
    <property type="resolution" value="0.98 A"/>
    <property type="chains" value="A=1-419"/>
</dbReference>
<dbReference type="PDB" id="5R3S">
    <property type="method" value="X-ray"/>
    <property type="resolution" value="1.05 A"/>
    <property type="chains" value="A=1-419"/>
</dbReference>
<dbReference type="PDB" id="5R3T">
    <property type="method" value="X-ray"/>
    <property type="resolution" value="1.07 A"/>
    <property type="chains" value="A=1-419"/>
</dbReference>
<dbReference type="PDB" id="5R3U">
    <property type="method" value="X-ray"/>
    <property type="resolution" value="1.09 A"/>
    <property type="chains" value="A=1-419"/>
</dbReference>
<dbReference type="PDB" id="5R3V">
    <property type="method" value="X-ray"/>
    <property type="resolution" value="1.12 A"/>
    <property type="chains" value="A=1-419"/>
</dbReference>
<dbReference type="PDB" id="5R3W">
    <property type="method" value="X-ray"/>
    <property type="resolution" value="1.19 A"/>
    <property type="chains" value="A=1-419"/>
</dbReference>
<dbReference type="PDB" id="5R3X">
    <property type="method" value="X-ray"/>
    <property type="resolution" value="1.17 A"/>
    <property type="chains" value="A=1-419"/>
</dbReference>
<dbReference type="PDB" id="5R3Y">
    <property type="method" value="X-ray"/>
    <property type="resolution" value="1.04 A"/>
    <property type="chains" value="A=1-419"/>
</dbReference>
<dbReference type="PDB" id="5R3Z">
    <property type="method" value="X-ray"/>
    <property type="resolution" value="1.07 A"/>
    <property type="chains" value="A=1-419"/>
</dbReference>
<dbReference type="PDB" id="5R40">
    <property type="method" value="X-ray"/>
    <property type="resolution" value="1.07 A"/>
    <property type="chains" value="A=1-419"/>
</dbReference>
<dbReference type="PDB" id="5R41">
    <property type="method" value="X-ray"/>
    <property type="resolution" value="1.08 A"/>
    <property type="chains" value="A=1-419"/>
</dbReference>
<dbReference type="PDB" id="5RBO">
    <property type="method" value="X-ray"/>
    <property type="resolution" value="1.08 A"/>
    <property type="chains" value="A=1-419"/>
</dbReference>
<dbReference type="PDB" id="5RBP">
    <property type="method" value="X-ray"/>
    <property type="resolution" value="1.05 A"/>
    <property type="chains" value="A=1-419"/>
</dbReference>
<dbReference type="PDB" id="5RBQ">
    <property type="method" value="X-ray"/>
    <property type="resolution" value="1.04 A"/>
    <property type="chains" value="A=1-419"/>
</dbReference>
<dbReference type="PDB" id="5RBR">
    <property type="method" value="X-ray"/>
    <property type="resolution" value="0.90 A"/>
    <property type="chains" value="A=1-419"/>
</dbReference>
<dbReference type="PDB" id="5RBS">
    <property type="method" value="X-ray"/>
    <property type="resolution" value="1.00 A"/>
    <property type="chains" value="A=1-419"/>
</dbReference>
<dbReference type="PDB" id="5RBT">
    <property type="method" value="X-ray"/>
    <property type="resolution" value="1.12 A"/>
    <property type="chains" value="A=1-419"/>
</dbReference>
<dbReference type="PDB" id="5RBU">
    <property type="method" value="X-ray"/>
    <property type="resolution" value="1.01 A"/>
    <property type="chains" value="A=1-419"/>
</dbReference>
<dbReference type="PDB" id="5RBV">
    <property type="method" value="X-ray"/>
    <property type="resolution" value="0.98 A"/>
    <property type="chains" value="A=1-419"/>
</dbReference>
<dbReference type="PDB" id="5RBW">
    <property type="method" value="X-ray"/>
    <property type="resolution" value="0.95 A"/>
    <property type="chains" value="A=1-419"/>
</dbReference>
<dbReference type="PDB" id="5RBX">
    <property type="method" value="X-ray"/>
    <property type="resolution" value="1.00 A"/>
    <property type="chains" value="A=1-419"/>
</dbReference>
<dbReference type="PDB" id="5RBY">
    <property type="method" value="X-ray"/>
    <property type="resolution" value="1.10 A"/>
    <property type="chains" value="A=1-419"/>
</dbReference>
<dbReference type="PDB" id="5RBZ">
    <property type="method" value="X-ray"/>
    <property type="resolution" value="1.14 A"/>
    <property type="chains" value="A=1-419"/>
</dbReference>
<dbReference type="PDB" id="5RC0">
    <property type="method" value="X-ray"/>
    <property type="resolution" value="1.03 A"/>
    <property type="chains" value="A=1-419"/>
</dbReference>
<dbReference type="PDB" id="5RC1">
    <property type="method" value="X-ray"/>
    <property type="resolution" value="1.05 A"/>
    <property type="chains" value="A=1-419"/>
</dbReference>
<dbReference type="PDB" id="5RC2">
    <property type="method" value="X-ray"/>
    <property type="resolution" value="0.97 A"/>
    <property type="chains" value="A=1-419"/>
</dbReference>
<dbReference type="PDB" id="5RC3">
    <property type="method" value="X-ray"/>
    <property type="resolution" value="0.98 A"/>
    <property type="chains" value="A=1-419"/>
</dbReference>
<dbReference type="PDB" id="5RC4">
    <property type="method" value="X-ray"/>
    <property type="resolution" value="1.00 A"/>
    <property type="chains" value="A=1-419"/>
</dbReference>
<dbReference type="PDB" id="5RC5">
    <property type="method" value="X-ray"/>
    <property type="resolution" value="1.03 A"/>
    <property type="chains" value="A=1-419"/>
</dbReference>
<dbReference type="PDB" id="5RC6">
    <property type="method" value="X-ray"/>
    <property type="resolution" value="1.18 A"/>
    <property type="chains" value="A=1-419"/>
</dbReference>
<dbReference type="PDB" id="5RC7">
    <property type="method" value="X-ray"/>
    <property type="resolution" value="0.97 A"/>
    <property type="chains" value="A=1-419"/>
</dbReference>
<dbReference type="PDB" id="5RC8">
    <property type="method" value="X-ray"/>
    <property type="resolution" value="1.04 A"/>
    <property type="chains" value="A=1-419"/>
</dbReference>
<dbReference type="PDB" id="5RC9">
    <property type="method" value="X-ray"/>
    <property type="resolution" value="1.08 A"/>
    <property type="chains" value="A=1-419"/>
</dbReference>
<dbReference type="PDB" id="5RCA">
    <property type="method" value="X-ray"/>
    <property type="resolution" value="1.04 A"/>
    <property type="chains" value="A=1-419"/>
</dbReference>
<dbReference type="PDB" id="5RCB">
    <property type="method" value="X-ray"/>
    <property type="resolution" value="0.99 A"/>
    <property type="chains" value="A=1-419"/>
</dbReference>
<dbReference type="PDB" id="5RCC">
    <property type="method" value="X-ray"/>
    <property type="resolution" value="1.04 A"/>
    <property type="chains" value="A=1-419"/>
</dbReference>
<dbReference type="PDB" id="5RCD">
    <property type="method" value="X-ray"/>
    <property type="resolution" value="1.02 A"/>
    <property type="chains" value="A=1-419"/>
</dbReference>
<dbReference type="PDB" id="5RCE">
    <property type="method" value="X-ray"/>
    <property type="resolution" value="1.05 A"/>
    <property type="chains" value="A=1-419"/>
</dbReference>
<dbReference type="PDB" id="5RCF">
    <property type="method" value="X-ray"/>
    <property type="resolution" value="1.00 A"/>
    <property type="chains" value="A=1-419"/>
</dbReference>
<dbReference type="PDB" id="5RCG">
    <property type="method" value="X-ray"/>
    <property type="resolution" value="1.23 A"/>
    <property type="chains" value="A=1-419"/>
</dbReference>
<dbReference type="PDB" id="5RCH">
    <property type="method" value="X-ray"/>
    <property type="resolution" value="1.22 A"/>
    <property type="chains" value="A=1-419"/>
</dbReference>
<dbReference type="PDB" id="5RCI">
    <property type="method" value="X-ray"/>
    <property type="resolution" value="1.23 A"/>
    <property type="chains" value="A=1-419"/>
</dbReference>
<dbReference type="PDB" id="5RCJ">
    <property type="method" value="X-ray"/>
    <property type="resolution" value="1.00 A"/>
    <property type="chains" value="A=1-419"/>
</dbReference>
<dbReference type="PDB" id="5RCK">
    <property type="method" value="X-ray"/>
    <property type="resolution" value="0.92 A"/>
    <property type="chains" value="A=1-419"/>
</dbReference>
<dbReference type="PDB" id="5RCL">
    <property type="method" value="X-ray"/>
    <property type="resolution" value="1.01 A"/>
    <property type="chains" value="A=1-419"/>
</dbReference>
<dbReference type="PDB" id="5RCM">
    <property type="method" value="X-ray"/>
    <property type="resolution" value="1.03 A"/>
    <property type="chains" value="A=1-419"/>
</dbReference>
<dbReference type="PDB" id="5RCN">
    <property type="method" value="X-ray"/>
    <property type="resolution" value="1.03 A"/>
    <property type="chains" value="A=1-419"/>
</dbReference>
<dbReference type="PDB" id="5RCO">
    <property type="method" value="X-ray"/>
    <property type="resolution" value="1.21 A"/>
    <property type="chains" value="A=1-419"/>
</dbReference>
<dbReference type="PDB" id="5RCP">
    <property type="method" value="X-ray"/>
    <property type="resolution" value="1.08 A"/>
    <property type="chains" value="A=1-419"/>
</dbReference>
<dbReference type="PDB" id="5RCQ">
    <property type="method" value="X-ray"/>
    <property type="resolution" value="1.34 A"/>
    <property type="chains" value="A=1-419"/>
</dbReference>
<dbReference type="PDB" id="5RCR">
    <property type="method" value="X-ray"/>
    <property type="resolution" value="1.05 A"/>
    <property type="chains" value="A=1-419"/>
</dbReference>
<dbReference type="PDB" id="5RCS">
    <property type="method" value="X-ray"/>
    <property type="resolution" value="0.97 A"/>
    <property type="chains" value="A=1-419"/>
</dbReference>
<dbReference type="PDB" id="5RCT">
    <property type="method" value="X-ray"/>
    <property type="resolution" value="1.01 A"/>
    <property type="chains" value="A=1-419"/>
</dbReference>
<dbReference type="PDB" id="5RCU">
    <property type="method" value="X-ray"/>
    <property type="resolution" value="1.10 A"/>
    <property type="chains" value="A=1-419"/>
</dbReference>
<dbReference type="PDB" id="5RCV">
    <property type="method" value="X-ray"/>
    <property type="resolution" value="0.95 A"/>
    <property type="chains" value="A=1-419"/>
</dbReference>
<dbReference type="PDB" id="5RCW">
    <property type="method" value="X-ray"/>
    <property type="resolution" value="1.04 A"/>
    <property type="chains" value="A=1-419"/>
</dbReference>
<dbReference type="PDB" id="5RCX">
    <property type="method" value="X-ray"/>
    <property type="resolution" value="1.04 A"/>
    <property type="chains" value="A=1-419"/>
</dbReference>
<dbReference type="PDB" id="5RCY">
    <property type="method" value="X-ray"/>
    <property type="resolution" value="1.11 A"/>
    <property type="chains" value="A=1-419"/>
</dbReference>
<dbReference type="PDB" id="5RCZ">
    <property type="method" value="X-ray"/>
    <property type="resolution" value="1.04 A"/>
    <property type="chains" value="A=1-419"/>
</dbReference>
<dbReference type="PDB" id="5RD0">
    <property type="method" value="X-ray"/>
    <property type="resolution" value="1.04 A"/>
    <property type="chains" value="A=1-419"/>
</dbReference>
<dbReference type="PDB" id="5RD1">
    <property type="method" value="X-ray"/>
    <property type="resolution" value="1.00 A"/>
    <property type="chains" value="A=1-419"/>
</dbReference>
<dbReference type="PDB" id="5RD2">
    <property type="method" value="X-ray"/>
    <property type="resolution" value="1.08 A"/>
    <property type="chains" value="A=1-419"/>
</dbReference>
<dbReference type="PDB" id="5RD3">
    <property type="method" value="X-ray"/>
    <property type="resolution" value="0.93 A"/>
    <property type="chains" value="A=1-419"/>
</dbReference>
<dbReference type="PDB" id="5RD4">
    <property type="method" value="X-ray"/>
    <property type="resolution" value="1.18 A"/>
    <property type="chains" value="A=1-419"/>
</dbReference>
<dbReference type="PDB" id="5RD5">
    <property type="method" value="X-ray"/>
    <property type="resolution" value="1.15 A"/>
    <property type="chains" value="A=1-419"/>
</dbReference>
<dbReference type="PDB" id="5RD6">
    <property type="method" value="X-ray"/>
    <property type="resolution" value="1.13 A"/>
    <property type="chains" value="A=1-419"/>
</dbReference>
<dbReference type="PDB" id="5RD7">
    <property type="method" value="X-ray"/>
    <property type="resolution" value="1.03 A"/>
    <property type="chains" value="A=1-419"/>
</dbReference>
<dbReference type="PDB" id="5RD8">
    <property type="method" value="X-ray"/>
    <property type="resolution" value="0.98 A"/>
    <property type="chains" value="A=1-419"/>
</dbReference>
<dbReference type="PDB" id="5RD9">
    <property type="method" value="X-ray"/>
    <property type="resolution" value="1.11 A"/>
    <property type="chains" value="A=1-419"/>
</dbReference>
<dbReference type="PDB" id="5RDA">
    <property type="method" value="X-ray"/>
    <property type="resolution" value="0.98 A"/>
    <property type="chains" value="A=1-419"/>
</dbReference>
<dbReference type="PDB" id="5RDB">
    <property type="method" value="X-ray"/>
    <property type="resolution" value="1.04 A"/>
    <property type="chains" value="A=1-419"/>
</dbReference>
<dbReference type="PDB" id="5RDC">
    <property type="method" value="X-ray"/>
    <property type="resolution" value="1.02 A"/>
    <property type="chains" value="A=1-419"/>
</dbReference>
<dbReference type="PDB" id="5RDD">
    <property type="method" value="X-ray"/>
    <property type="resolution" value="1.03 A"/>
    <property type="chains" value="A=1-419"/>
</dbReference>
<dbReference type="PDB" id="5RDE">
    <property type="method" value="X-ray"/>
    <property type="resolution" value="1.01 A"/>
    <property type="chains" value="A=1-419"/>
</dbReference>
<dbReference type="PDB" id="5RDF">
    <property type="method" value="X-ray"/>
    <property type="resolution" value="0.97 A"/>
    <property type="chains" value="A=1-419"/>
</dbReference>
<dbReference type="PDB" id="5RDG">
    <property type="method" value="X-ray"/>
    <property type="resolution" value="1.12 A"/>
    <property type="chains" value="A=1-419"/>
</dbReference>
<dbReference type="PDB" id="5RDH">
    <property type="method" value="X-ray"/>
    <property type="resolution" value="0.85 A"/>
    <property type="chains" value="A=1-419"/>
</dbReference>
<dbReference type="PDB" id="5RDI">
    <property type="method" value="X-ray"/>
    <property type="resolution" value="1.00 A"/>
    <property type="chains" value="A=1-419"/>
</dbReference>
<dbReference type="PDB" id="5RDJ">
    <property type="method" value="X-ray"/>
    <property type="resolution" value="0.93 A"/>
    <property type="chains" value="A=1-419"/>
</dbReference>
<dbReference type="PDB" id="5RDK">
    <property type="method" value="X-ray"/>
    <property type="resolution" value="1.03 A"/>
    <property type="chains" value="A=1-419"/>
</dbReference>
<dbReference type="PDB" id="5RDL">
    <property type="method" value="X-ray"/>
    <property type="resolution" value="1.09 A"/>
    <property type="chains" value="A=1-419"/>
</dbReference>
<dbReference type="PDB" id="5RDM">
    <property type="method" value="X-ray"/>
    <property type="resolution" value="1.01 A"/>
    <property type="chains" value="A=1-419"/>
</dbReference>
<dbReference type="PDB" id="5RDN">
    <property type="method" value="X-ray"/>
    <property type="resolution" value="0.98 A"/>
    <property type="chains" value="A=1-419"/>
</dbReference>
<dbReference type="PDB" id="5RDO">
    <property type="method" value="X-ray"/>
    <property type="resolution" value="1.06 A"/>
    <property type="chains" value="A=1-419"/>
</dbReference>
<dbReference type="PDB" id="5RDP">
    <property type="method" value="X-ray"/>
    <property type="resolution" value="0.97 A"/>
    <property type="chains" value="A=1-419"/>
</dbReference>
<dbReference type="PDB" id="5RDQ">
    <property type="method" value="X-ray"/>
    <property type="resolution" value="1.04 A"/>
    <property type="chains" value="A=1-419"/>
</dbReference>
<dbReference type="PDB" id="5RDR">
    <property type="method" value="X-ray"/>
    <property type="resolution" value="1.03 A"/>
    <property type="chains" value="A=1-419"/>
</dbReference>
<dbReference type="PDB" id="5RDS">
    <property type="method" value="X-ray"/>
    <property type="resolution" value="0.97 A"/>
    <property type="chains" value="A=1-419"/>
</dbReference>
<dbReference type="PDB" id="5RDT">
    <property type="method" value="X-ray"/>
    <property type="resolution" value="1.04 A"/>
    <property type="chains" value="A=1-419"/>
</dbReference>
<dbReference type="PDB" id="5RDU">
    <property type="method" value="X-ray"/>
    <property type="resolution" value="1.05 A"/>
    <property type="chains" value="A=1-419"/>
</dbReference>
<dbReference type="PDB" id="5RDV">
    <property type="method" value="X-ray"/>
    <property type="resolution" value="1.08 A"/>
    <property type="chains" value="A=1-419"/>
</dbReference>
<dbReference type="PDB" id="5RDW">
    <property type="method" value="X-ray"/>
    <property type="resolution" value="1.03 A"/>
    <property type="chains" value="A=1-419"/>
</dbReference>
<dbReference type="PDB" id="5RDX">
    <property type="method" value="X-ray"/>
    <property type="resolution" value="0.98 A"/>
    <property type="chains" value="A=1-419"/>
</dbReference>
<dbReference type="PDB" id="5RDY">
    <property type="method" value="X-ray"/>
    <property type="resolution" value="1.13 A"/>
    <property type="chains" value="A=1-419"/>
</dbReference>
<dbReference type="PDB" id="5RDZ">
    <property type="method" value="X-ray"/>
    <property type="resolution" value="1.14 A"/>
    <property type="chains" value="A=1-419"/>
</dbReference>
<dbReference type="PDB" id="5RE0">
    <property type="method" value="X-ray"/>
    <property type="resolution" value="1.03 A"/>
    <property type="chains" value="A=1-419"/>
</dbReference>
<dbReference type="PDB" id="5RE1">
    <property type="method" value="X-ray"/>
    <property type="resolution" value="0.97 A"/>
    <property type="chains" value="A=1-419"/>
</dbReference>
<dbReference type="PDB" id="5RE2">
    <property type="method" value="X-ray"/>
    <property type="resolution" value="1.00 A"/>
    <property type="chains" value="A=1-419"/>
</dbReference>
<dbReference type="PDB" id="5RE3">
    <property type="method" value="X-ray"/>
    <property type="resolution" value="1.09 A"/>
    <property type="chains" value="A=1-419"/>
</dbReference>
<dbReference type="PDB" id="5SAK">
    <property type="method" value="X-ray"/>
    <property type="resolution" value="1.10 A"/>
    <property type="chains" value="A=1-419"/>
</dbReference>
<dbReference type="PDB" id="5SAL">
    <property type="method" value="X-ray"/>
    <property type="resolution" value="1.00 A"/>
    <property type="chains" value="A=1-419"/>
</dbReference>
<dbReference type="PDB" id="5SAM">
    <property type="method" value="X-ray"/>
    <property type="resolution" value="1.20 A"/>
    <property type="chains" value="A=1-419"/>
</dbReference>
<dbReference type="PDB" id="5SAN">
    <property type="method" value="X-ray"/>
    <property type="resolution" value="0.94 A"/>
    <property type="chains" value="A=1-419"/>
</dbReference>
<dbReference type="PDB" id="5SAO">
    <property type="method" value="X-ray"/>
    <property type="resolution" value="1.00 A"/>
    <property type="chains" value="A=1-419"/>
</dbReference>
<dbReference type="PDB" id="5SAP">
    <property type="method" value="X-ray"/>
    <property type="resolution" value="1.04 A"/>
    <property type="chains" value="A=1-419"/>
</dbReference>
<dbReference type="PDB" id="5SAQ">
    <property type="method" value="X-ray"/>
    <property type="resolution" value="1.02 A"/>
    <property type="chains" value="A=1-419"/>
</dbReference>
<dbReference type="PDB" id="5SAR">
    <property type="method" value="X-ray"/>
    <property type="resolution" value="0.98 A"/>
    <property type="chains" value="A=1-419"/>
</dbReference>
<dbReference type="PDB" id="5SAS">
    <property type="method" value="X-ray"/>
    <property type="resolution" value="1.17 A"/>
    <property type="chains" value="A=1-419"/>
</dbReference>
<dbReference type="PDB" id="5SAT">
    <property type="method" value="X-ray"/>
    <property type="resolution" value="1.40 A"/>
    <property type="chains" value="A=1-419"/>
</dbReference>
<dbReference type="PDB" id="6RON">
    <property type="method" value="X-ray"/>
    <property type="resolution" value="1.15 A"/>
    <property type="chains" value="A=90-419"/>
</dbReference>
<dbReference type="PDB" id="6RSV">
    <property type="method" value="X-ray"/>
    <property type="resolution" value="1.10 A"/>
    <property type="chains" value="A=90-419"/>
</dbReference>
<dbReference type="PDB" id="6SCV">
    <property type="method" value="X-ray"/>
    <property type="resolution" value="1.70 A"/>
    <property type="chains" value="A=90-419"/>
</dbReference>
<dbReference type="PDB" id="6ZZ2">
    <property type="method" value="X-ray"/>
    <property type="resolution" value="1.15 A"/>
    <property type="chains" value="A=1-419"/>
</dbReference>
<dbReference type="PDB" id="7ADG">
    <property type="method" value="X-ray"/>
    <property type="resolution" value="1.08 A"/>
    <property type="chains" value="A=1-419"/>
</dbReference>
<dbReference type="PDB" id="7BKR">
    <property type="method" value="X-ray"/>
    <property type="resolution" value="2.10 A"/>
    <property type="chains" value="A=90-419"/>
</dbReference>
<dbReference type="PDB" id="7BKS">
    <property type="method" value="X-ray"/>
    <property type="resolution" value="1.24 A"/>
    <property type="chains" value="A=90-419"/>
</dbReference>
<dbReference type="PDB" id="7BKU">
    <property type="method" value="X-ray"/>
    <property type="resolution" value="1.40 A"/>
    <property type="chains" value="A=90-419"/>
</dbReference>
<dbReference type="PDB" id="7BKV">
    <property type="method" value="X-ray"/>
    <property type="resolution" value="1.24 A"/>
    <property type="chains" value="A=90-419"/>
</dbReference>
<dbReference type="PDB" id="7BKW">
    <property type="method" value="X-ray"/>
    <property type="resolution" value="1.43 A"/>
    <property type="chains" value="A=90-419"/>
</dbReference>
<dbReference type="PDB" id="7BKY">
    <property type="method" value="X-ray"/>
    <property type="resolution" value="1.90 A"/>
    <property type="chains" value="A=90-419"/>
</dbReference>
<dbReference type="PDB" id="7BKZ">
    <property type="method" value="X-ray"/>
    <property type="resolution" value="1.90 A"/>
    <property type="chains" value="A=90-419"/>
</dbReference>
<dbReference type="PDB" id="7H56">
    <property type="method" value="X-ray"/>
    <property type="resolution" value="1.99 A"/>
    <property type="chains" value="A=90-419"/>
</dbReference>
<dbReference type="PDB" id="7H57">
    <property type="method" value="X-ray"/>
    <property type="resolution" value="1.99 A"/>
    <property type="chains" value="A=90-419"/>
</dbReference>
<dbReference type="PDB" id="7H58">
    <property type="method" value="X-ray"/>
    <property type="resolution" value="1.98 A"/>
    <property type="chains" value="A=90-419"/>
</dbReference>
<dbReference type="PDB" id="7H59">
    <property type="method" value="X-ray"/>
    <property type="resolution" value="2.00 A"/>
    <property type="chains" value="A=90-419"/>
</dbReference>
<dbReference type="PDB" id="7H5A">
    <property type="method" value="X-ray"/>
    <property type="resolution" value="2.00 A"/>
    <property type="chains" value="A=90-419"/>
</dbReference>
<dbReference type="PDB" id="7H5B">
    <property type="method" value="X-ray"/>
    <property type="resolution" value="2.12 A"/>
    <property type="chains" value="A=90-419"/>
</dbReference>
<dbReference type="PDB" id="7H5C">
    <property type="method" value="X-ray"/>
    <property type="resolution" value="1.91 A"/>
    <property type="chains" value="A=90-419"/>
</dbReference>
<dbReference type="PDB" id="7H5D">
    <property type="method" value="X-ray"/>
    <property type="resolution" value="1.91 A"/>
    <property type="chains" value="A=90-419"/>
</dbReference>
<dbReference type="PDB" id="7H5E">
    <property type="method" value="X-ray"/>
    <property type="resolution" value="1.91 A"/>
    <property type="chains" value="A=90-419"/>
</dbReference>
<dbReference type="PDB" id="7H5F">
    <property type="method" value="X-ray"/>
    <property type="resolution" value="1.89 A"/>
    <property type="chains" value="A=90-419"/>
</dbReference>
<dbReference type="PDB" id="7H5G">
    <property type="method" value="X-ray"/>
    <property type="resolution" value="1.89 A"/>
    <property type="chains" value="A=90-419"/>
</dbReference>
<dbReference type="PDB" id="7H5H">
    <property type="method" value="X-ray"/>
    <property type="resolution" value="1.89 A"/>
    <property type="chains" value="A=90-419"/>
</dbReference>
<dbReference type="PDB" id="7H5I">
    <property type="method" value="X-ray"/>
    <property type="resolution" value="2.00 A"/>
    <property type="chains" value="A=90-419"/>
</dbReference>
<dbReference type="PDB" id="7H5J">
    <property type="method" value="X-ray"/>
    <property type="resolution" value="2.00 A"/>
    <property type="chains" value="A=90-419"/>
</dbReference>
<dbReference type="PDB" id="7H5K">
    <property type="method" value="X-ray"/>
    <property type="resolution" value="2.03 A"/>
    <property type="chains" value="A=90-419"/>
</dbReference>
<dbReference type="PDB" id="7H5L">
    <property type="method" value="X-ray"/>
    <property type="resolution" value="1.86 A"/>
    <property type="chains" value="A=90-419"/>
</dbReference>
<dbReference type="PDB" id="7H5M">
    <property type="method" value="X-ray"/>
    <property type="resolution" value="1.85 A"/>
    <property type="chains" value="A=90-419"/>
</dbReference>
<dbReference type="PDB" id="7H5N">
    <property type="method" value="X-ray"/>
    <property type="resolution" value="1.86 A"/>
    <property type="chains" value="A=90-419"/>
</dbReference>
<dbReference type="PDB" id="7H5O">
    <property type="method" value="X-ray"/>
    <property type="resolution" value="2.39 A"/>
    <property type="chains" value="A=90-419"/>
</dbReference>
<dbReference type="PDB" id="7H5P">
    <property type="method" value="X-ray"/>
    <property type="resolution" value="1.99 A"/>
    <property type="chains" value="A=90-419"/>
</dbReference>
<dbReference type="PDB" id="7H5Q">
    <property type="method" value="X-ray"/>
    <property type="resolution" value="1.99 A"/>
    <property type="chains" value="A=90-419"/>
</dbReference>
<dbReference type="PDB" id="7H5R">
    <property type="method" value="X-ray"/>
    <property type="resolution" value="2.00 A"/>
    <property type="chains" value="A=90-419"/>
</dbReference>
<dbReference type="PDB" id="7H5S">
    <property type="method" value="X-ray"/>
    <property type="resolution" value="2.00 A"/>
    <property type="chains" value="A=90-419"/>
</dbReference>
<dbReference type="PDB" id="7H5T">
    <property type="method" value="X-ray"/>
    <property type="resolution" value="2.00 A"/>
    <property type="chains" value="A=90-419"/>
</dbReference>
<dbReference type="PDB" id="7H5U">
    <property type="method" value="X-ray"/>
    <property type="resolution" value="1.99 A"/>
    <property type="chains" value="A=90-419"/>
</dbReference>
<dbReference type="PDB" id="7H5V">
    <property type="method" value="X-ray"/>
    <property type="resolution" value="1.99 A"/>
    <property type="chains" value="A=90-419"/>
</dbReference>
<dbReference type="PDB" id="7H5W">
    <property type="method" value="X-ray"/>
    <property type="resolution" value="1.98 A"/>
    <property type="chains" value="A=90-419"/>
</dbReference>
<dbReference type="PDB" id="7H5X">
    <property type="method" value="X-ray"/>
    <property type="resolution" value="1.95 A"/>
    <property type="chains" value="A=90-419"/>
</dbReference>
<dbReference type="PDB" id="7H5Y">
    <property type="method" value="X-ray"/>
    <property type="resolution" value="1.95 A"/>
    <property type="chains" value="A=90-419"/>
</dbReference>
<dbReference type="PDB" id="7H5Z">
    <property type="method" value="X-ray"/>
    <property type="resolution" value="1.95 A"/>
    <property type="chains" value="A=90-419"/>
</dbReference>
<dbReference type="PDB" id="7NKW">
    <property type="method" value="X-ray"/>
    <property type="resolution" value="2.27 A"/>
    <property type="chains" value="A=90-419"/>
</dbReference>
<dbReference type="PDB" id="7QLT">
    <property type="method" value="X-ray"/>
    <property type="resolution" value="1.39 A"/>
    <property type="chains" value="A=1-419"/>
</dbReference>
<dbReference type="PDB" id="7QLU">
    <property type="method" value="X-ray"/>
    <property type="resolution" value="1.41 A"/>
    <property type="chains" value="A=1-419"/>
</dbReference>
<dbReference type="PDB" id="7QLV">
    <property type="method" value="X-ray"/>
    <property type="resolution" value="1.41 A"/>
    <property type="chains" value="A=1-419"/>
</dbReference>
<dbReference type="PDB" id="7QLW">
    <property type="method" value="X-ray"/>
    <property type="resolution" value="1.41 A"/>
    <property type="chains" value="A=1-419"/>
</dbReference>
<dbReference type="PDB" id="7QLX">
    <property type="method" value="X-ray"/>
    <property type="resolution" value="1.39 A"/>
    <property type="chains" value="A=1-419"/>
</dbReference>
<dbReference type="PDB" id="7QLY">
    <property type="method" value="X-ray"/>
    <property type="resolution" value="1.79 A"/>
    <property type="chains" value="A=1-419"/>
</dbReference>
<dbReference type="PDB" id="7QLZ">
    <property type="method" value="X-ray"/>
    <property type="resolution" value="1.79 A"/>
    <property type="chains" value="A=1-419"/>
</dbReference>
<dbReference type="PDB" id="7QM0">
    <property type="method" value="X-ray"/>
    <property type="resolution" value="1.79 A"/>
    <property type="chains" value="A=1-419"/>
</dbReference>
<dbReference type="PDB" id="7QM1">
    <property type="method" value="X-ray"/>
    <property type="resolution" value="1.79 A"/>
    <property type="chains" value="A=1-419"/>
</dbReference>
<dbReference type="PDB" id="7QM3">
    <property type="method" value="X-ray"/>
    <property type="resolution" value="1.79 A"/>
    <property type="chains" value="A=1-419"/>
</dbReference>
<dbReference type="PDB" id="7QM4">
    <property type="method" value="X-ray"/>
    <property type="resolution" value="1.79 A"/>
    <property type="chains" value="A=1-419"/>
</dbReference>
<dbReference type="PDB" id="7QM5">
    <property type="method" value="X-ray"/>
    <property type="resolution" value="1.79 A"/>
    <property type="chains" value="A=1-419"/>
</dbReference>
<dbReference type="PDB" id="7QM6">
    <property type="method" value="X-ray"/>
    <property type="resolution" value="1.81 A"/>
    <property type="chains" value="A=1-419"/>
</dbReference>
<dbReference type="PDB" id="7QM7">
    <property type="method" value="X-ray"/>
    <property type="resolution" value="1.79 A"/>
    <property type="chains" value="A=1-419"/>
</dbReference>
<dbReference type="PDB" id="7QM8">
    <property type="method" value="X-ray"/>
    <property type="resolution" value="1.79 A"/>
    <property type="chains" value="A=1-419"/>
</dbReference>
<dbReference type="PDB" id="7QM9">
    <property type="method" value="X-ray"/>
    <property type="resolution" value="1.79 A"/>
    <property type="chains" value="A=1-419"/>
</dbReference>
<dbReference type="PDB" id="7QMA">
    <property type="method" value="X-ray"/>
    <property type="resolution" value="1.79 A"/>
    <property type="chains" value="A=1-419"/>
</dbReference>
<dbReference type="PDB" id="7QMB">
    <property type="method" value="X-ray"/>
    <property type="resolution" value="1.79 A"/>
    <property type="chains" value="A=1-419"/>
</dbReference>
<dbReference type="PDB" id="7QMC">
    <property type="method" value="X-ray"/>
    <property type="resolution" value="1.79 A"/>
    <property type="chains" value="A=1-419"/>
</dbReference>
<dbReference type="PDB" id="7QMD">
    <property type="method" value="X-ray"/>
    <property type="resolution" value="1.79 A"/>
    <property type="chains" value="A=1-419"/>
</dbReference>
<dbReference type="PDB" id="7QME">
    <property type="method" value="X-ray"/>
    <property type="resolution" value="1.79 A"/>
    <property type="chains" value="A=1-419"/>
</dbReference>
<dbReference type="PDB" id="7QMF">
    <property type="method" value="X-ray"/>
    <property type="resolution" value="1.79 A"/>
    <property type="chains" value="A=1-419"/>
</dbReference>
<dbReference type="PDB" id="7QMG">
    <property type="method" value="X-ray"/>
    <property type="resolution" value="1.79 A"/>
    <property type="chains" value="A=1-419"/>
</dbReference>
<dbReference type="PDB" id="7QMH">
    <property type="method" value="X-ray"/>
    <property type="resolution" value="1.79 A"/>
    <property type="chains" value="A=1-419"/>
</dbReference>
<dbReference type="PDB" id="7QMI">
    <property type="method" value="X-ray"/>
    <property type="resolution" value="1.79 A"/>
    <property type="chains" value="A=1-419"/>
</dbReference>
<dbReference type="PDB" id="7QMJ">
    <property type="method" value="X-ray"/>
    <property type="resolution" value="1.79 A"/>
    <property type="chains" value="A=1-419"/>
</dbReference>
<dbReference type="PDB" id="7QMK">
    <property type="method" value="X-ray"/>
    <property type="resolution" value="1.79 A"/>
    <property type="chains" value="A=1-419"/>
</dbReference>
<dbReference type="PDB" id="7QML">
    <property type="method" value="X-ray"/>
    <property type="resolution" value="1.79 A"/>
    <property type="chains" value="A=1-419"/>
</dbReference>
<dbReference type="PDB" id="7QMM">
    <property type="method" value="X-ray"/>
    <property type="resolution" value="1.79 A"/>
    <property type="chains" value="A=1-419"/>
</dbReference>
<dbReference type="PDB" id="7QMN">
    <property type="method" value="X-ray"/>
    <property type="resolution" value="1.79 A"/>
    <property type="chains" value="A=1-419"/>
</dbReference>
<dbReference type="PDB" id="7QMO">
    <property type="method" value="X-ray"/>
    <property type="resolution" value="1.79 A"/>
    <property type="chains" value="A=1-419"/>
</dbReference>
<dbReference type="PDB" id="7QMP">
    <property type="method" value="X-ray"/>
    <property type="resolution" value="1.79 A"/>
    <property type="chains" value="A=1-419"/>
</dbReference>
<dbReference type="PDB" id="7QMQ">
    <property type="method" value="X-ray"/>
    <property type="resolution" value="1.79 A"/>
    <property type="chains" value="A=1-419"/>
</dbReference>
<dbReference type="PDB" id="7QMR">
    <property type="method" value="X-ray"/>
    <property type="resolution" value="1.79 A"/>
    <property type="chains" value="A=1-419"/>
</dbReference>
<dbReference type="PDB" id="7QMS">
    <property type="method" value="X-ray"/>
    <property type="resolution" value="1.79 A"/>
    <property type="chains" value="A=1-419"/>
</dbReference>
<dbReference type="PDB" id="7QMT">
    <property type="method" value="X-ray"/>
    <property type="resolution" value="1.79 A"/>
    <property type="chains" value="A=1-419"/>
</dbReference>
<dbReference type="PDB" id="7QMU">
    <property type="method" value="X-ray"/>
    <property type="resolution" value="1.79 A"/>
    <property type="chains" value="A=1-419"/>
</dbReference>
<dbReference type="PDB" id="7QMV">
    <property type="method" value="X-ray"/>
    <property type="resolution" value="1.79 A"/>
    <property type="chains" value="A=1-419"/>
</dbReference>
<dbReference type="PDB" id="7QMW">
    <property type="method" value="X-ray"/>
    <property type="resolution" value="1.79 A"/>
    <property type="chains" value="A=1-419"/>
</dbReference>
<dbReference type="PDB" id="7QMX">
    <property type="method" value="X-ray"/>
    <property type="resolution" value="1.79 A"/>
    <property type="chains" value="A=1-419"/>
</dbReference>
<dbReference type="PDB" id="7QMY">
    <property type="method" value="X-ray"/>
    <property type="resolution" value="1.79 A"/>
    <property type="chains" value="A=1-419"/>
</dbReference>
<dbReference type="PDB" id="7QMZ">
    <property type="method" value="X-ray"/>
    <property type="resolution" value="1.79 A"/>
    <property type="chains" value="A=1-419"/>
</dbReference>
<dbReference type="PDB" id="7QN0">
    <property type="method" value="X-ray"/>
    <property type="resolution" value="1.79 A"/>
    <property type="chains" value="A=1-419"/>
</dbReference>
<dbReference type="PDB" id="7QN1">
    <property type="method" value="X-ray"/>
    <property type="resolution" value="1.79 A"/>
    <property type="chains" value="A=1-419"/>
</dbReference>
<dbReference type="PDB" id="7QN2">
    <property type="method" value="X-ray"/>
    <property type="resolution" value="1.79 A"/>
    <property type="chains" value="A=1-419"/>
</dbReference>
<dbReference type="PDB" id="7QN3">
    <property type="method" value="X-ray"/>
    <property type="resolution" value="1.79 A"/>
    <property type="chains" value="A=1-419"/>
</dbReference>
<dbReference type="PDB" id="7QN4">
    <property type="method" value="X-ray"/>
    <property type="resolution" value="1.79 A"/>
    <property type="chains" value="A=1-419"/>
</dbReference>
<dbReference type="PDB" id="8C6P">
    <property type="method" value="X-ray"/>
    <property type="resolution" value="1.10 A"/>
    <property type="chains" value="A=1-419"/>
</dbReference>
<dbReference type="PDB" id="8C6Q">
    <property type="method" value="X-ray"/>
    <property type="resolution" value="1.25 A"/>
    <property type="chains" value="A=1-419"/>
</dbReference>
<dbReference type="PDB" id="8C6S">
    <property type="method" value="X-ray"/>
    <property type="resolution" value="1.10 A"/>
    <property type="chains" value="A=1-419"/>
</dbReference>
<dbReference type="PDB" id="8C6T">
    <property type="method" value="X-ray"/>
    <property type="resolution" value="1.15 A"/>
    <property type="chains" value="A=1-419"/>
</dbReference>
<dbReference type="PDB" id="8C70">
    <property type="method" value="X-ray"/>
    <property type="resolution" value="1.65 A"/>
    <property type="chains" value="A=1-419"/>
</dbReference>
<dbReference type="PDB" id="8C71">
    <property type="method" value="X-ray"/>
    <property type="resolution" value="1.10 A"/>
    <property type="chains" value="A=1-419"/>
</dbReference>
<dbReference type="PDB" id="8C72">
    <property type="method" value="X-ray"/>
    <property type="resolution" value="1.20 A"/>
    <property type="chains" value="A=1-419"/>
</dbReference>
<dbReference type="PDB" id="8C74">
    <property type="method" value="X-ray"/>
    <property type="resolution" value="1.15 A"/>
    <property type="chains" value="A=1-419"/>
</dbReference>
<dbReference type="PDB" id="8PXI">
    <property type="method" value="X-ray"/>
    <property type="resolution" value="1.20 A"/>
    <property type="chains" value="A=90-419"/>
</dbReference>
<dbReference type="PDB" id="8Q0V">
    <property type="method" value="X-ray"/>
    <property type="resolution" value="1.28 A"/>
    <property type="chains" value="B=90-419"/>
</dbReference>
<dbReference type="PDB" id="8Q0W">
    <property type="method" value="X-ray"/>
    <property type="resolution" value="1.49 A"/>
    <property type="chains" value="A=90-419"/>
</dbReference>
<dbReference type="PDB" id="8Q0X">
    <property type="method" value="X-ray"/>
    <property type="resolution" value="1.27 A"/>
    <property type="chains" value="A=90-419"/>
</dbReference>
<dbReference type="PDB" id="8Q0Y">
    <property type="method" value="X-ray"/>
    <property type="resolution" value="1.23 A"/>
    <property type="chains" value="A=90-419"/>
</dbReference>
<dbReference type="PDB" id="8Q0Z">
    <property type="method" value="X-ray"/>
    <property type="resolution" value="1.21 A"/>
    <property type="chains" value="A=90-419"/>
</dbReference>
<dbReference type="PDB" id="8Q10">
    <property type="method" value="X-ray"/>
    <property type="resolution" value="1.27 A"/>
    <property type="chains" value="A=90-419"/>
</dbReference>
<dbReference type="PDB" id="8Q11">
    <property type="method" value="X-ray"/>
    <property type="resolution" value="1.30 A"/>
    <property type="chains" value="A=90-419"/>
</dbReference>
<dbReference type="PDB" id="8Q12">
    <property type="method" value="X-ray"/>
    <property type="resolution" value="1.17 A"/>
    <property type="chains" value="A=90-419"/>
</dbReference>
<dbReference type="PDB" id="8Q13">
    <property type="method" value="X-ray"/>
    <property type="resolution" value="1.26 A"/>
    <property type="chains" value="A=90-419"/>
</dbReference>
<dbReference type="PDB" id="8Q14">
    <property type="method" value="X-ray"/>
    <property type="resolution" value="1.13 A"/>
    <property type="chains" value="A=90-419"/>
</dbReference>
<dbReference type="PDB" id="8Q4B">
    <property type="method" value="X-ray"/>
    <property type="resolution" value="1.28 A"/>
    <property type="chains" value="A=90-419"/>
</dbReference>
<dbReference type="PDB" id="9FVO">
    <property type="method" value="X-ray"/>
    <property type="resolution" value="1.80 A"/>
    <property type="chains" value="A=90-419"/>
</dbReference>
<dbReference type="PDB" id="9G34">
    <property type="method" value="X-ray"/>
    <property type="resolution" value="1.30 A"/>
    <property type="chains" value="A/B=90-419"/>
</dbReference>
<dbReference type="PDB" id="9G35">
    <property type="method" value="X-ray"/>
    <property type="resolution" value="1.50 A"/>
    <property type="chains" value="A=90-419"/>
</dbReference>
<dbReference type="PDBsum" id="1E5O"/>
<dbReference type="PDBsum" id="1E80"/>
<dbReference type="PDBsum" id="1E81"/>
<dbReference type="PDBsum" id="1E82"/>
<dbReference type="PDBsum" id="1EED"/>
<dbReference type="PDBsum" id="1ENT"/>
<dbReference type="PDBsum" id="1EPL"/>
<dbReference type="PDBsum" id="1EPM"/>
<dbReference type="PDBsum" id="1EPN"/>
<dbReference type="PDBsum" id="1EPO"/>
<dbReference type="PDBsum" id="1EPP"/>
<dbReference type="PDBsum" id="1EPQ"/>
<dbReference type="PDBsum" id="1EPR"/>
<dbReference type="PDBsum" id="1ER8"/>
<dbReference type="PDBsum" id="1GKT"/>
<dbReference type="PDBsum" id="1GVT"/>
<dbReference type="PDBsum" id="1GVU"/>
<dbReference type="PDBsum" id="1GVV"/>
<dbReference type="PDBsum" id="1GVW"/>
<dbReference type="PDBsum" id="1GVX"/>
<dbReference type="PDBsum" id="1OD1"/>
<dbReference type="PDBsum" id="1OEW"/>
<dbReference type="PDBsum" id="1OEX"/>
<dbReference type="PDBsum" id="2ER0"/>
<dbReference type="PDBsum" id="2ER6"/>
<dbReference type="PDBsum" id="2ER7"/>
<dbReference type="PDBsum" id="2ER9"/>
<dbReference type="PDBsum" id="2JJI"/>
<dbReference type="PDBsum" id="2JJJ"/>
<dbReference type="PDBsum" id="2V00"/>
<dbReference type="PDBsum" id="2VS2"/>
<dbReference type="PDBsum" id="3ER3"/>
<dbReference type="PDBsum" id="3ER5"/>
<dbReference type="PDBsum" id="3LZY"/>
<dbReference type="PDBsum" id="3PB5"/>
<dbReference type="PDBsum" id="3PBD"/>
<dbReference type="PDBsum" id="3PBZ"/>
<dbReference type="PDBsum" id="3PCW"/>
<dbReference type="PDBsum" id="3PCZ"/>
<dbReference type="PDBsum" id="3PGI"/>
<dbReference type="PDBsum" id="3PI0"/>
<dbReference type="PDBsum" id="3PLD"/>
<dbReference type="PDBsum" id="3PLL"/>
<dbReference type="PDBsum" id="3PM4"/>
<dbReference type="PDBsum" id="3PMU"/>
<dbReference type="PDBsum" id="3PMY"/>
<dbReference type="PDBsum" id="3PRS"/>
<dbReference type="PDBsum" id="3PSY"/>
<dbReference type="PDBsum" id="3PWW"/>
<dbReference type="PDBsum" id="3Q6Y"/>
<dbReference type="PDBsum" id="3T6I"/>
<dbReference type="PDBsum" id="3T7P"/>
<dbReference type="PDBsum" id="3T7Q"/>
<dbReference type="PDBsum" id="3T7X"/>
<dbReference type="PDBsum" id="3URI"/>
<dbReference type="PDBsum" id="3URJ"/>
<dbReference type="PDBsum" id="3URL"/>
<dbReference type="PDBsum" id="3WZ6"/>
<dbReference type="PDBsum" id="3WZ7"/>
<dbReference type="PDBsum" id="3WZ8"/>
<dbReference type="PDBsum" id="4APE"/>
<dbReference type="PDBsum" id="4ER1"/>
<dbReference type="PDBsum" id="4ER2"/>
<dbReference type="PDBsum" id="4ER4"/>
<dbReference type="PDBsum" id="4KUP"/>
<dbReference type="PDBsum" id="4L6B"/>
<dbReference type="PDBsum" id="4LAP"/>
<dbReference type="PDBsum" id="4LBT"/>
<dbReference type="PDBsum" id="4LHH"/>
<dbReference type="PDBsum" id="4LP9"/>
<dbReference type="PDBsum" id="4Y35"/>
<dbReference type="PDBsum" id="4Y36"/>
<dbReference type="PDBsum" id="4Y37"/>
<dbReference type="PDBsum" id="4Y38"/>
<dbReference type="PDBsum" id="4Y39"/>
<dbReference type="PDBsum" id="4Y3A"/>
<dbReference type="PDBsum" id="4Y3D"/>
<dbReference type="PDBsum" id="4Y3E"/>
<dbReference type="PDBsum" id="4Y3F"/>
<dbReference type="PDBsum" id="4Y3G"/>
<dbReference type="PDBsum" id="4Y3H"/>
<dbReference type="PDBsum" id="4Y3J"/>
<dbReference type="PDBsum" id="4Y3L"/>
<dbReference type="PDBsum" id="4Y3M"/>
<dbReference type="PDBsum" id="4Y3N"/>
<dbReference type="PDBsum" id="4Y3P"/>
<dbReference type="PDBsum" id="4Y3Q"/>
<dbReference type="PDBsum" id="4Y3R"/>
<dbReference type="PDBsum" id="4Y3S"/>
<dbReference type="PDBsum" id="4Y3T"/>
<dbReference type="PDBsum" id="4Y3W"/>
<dbReference type="PDBsum" id="4Y3X"/>
<dbReference type="PDBsum" id="4Y3Y"/>
<dbReference type="PDBsum" id="4Y3Z"/>
<dbReference type="PDBsum" id="4Y41"/>
<dbReference type="PDBsum" id="4Y43"/>
<dbReference type="PDBsum" id="4Y44"/>
<dbReference type="PDBsum" id="4Y45"/>
<dbReference type="PDBsum" id="4Y47"/>
<dbReference type="PDBsum" id="4Y48"/>
<dbReference type="PDBsum" id="4Y4A"/>
<dbReference type="PDBsum" id="4Y4B"/>
<dbReference type="PDBsum" id="4Y4D"/>
<dbReference type="PDBsum" id="4Y4E"/>
<dbReference type="PDBsum" id="4Y4G"/>
<dbReference type="PDBsum" id="4Y4J"/>
<dbReference type="PDBsum" id="4Y4T"/>
<dbReference type="PDBsum" id="4Y4U"/>
<dbReference type="PDBsum" id="4Y4W"/>
<dbReference type="PDBsum" id="4Y4X"/>
<dbReference type="PDBsum" id="4Y4Z"/>
<dbReference type="PDBsum" id="4Y50"/>
<dbReference type="PDBsum" id="4Y51"/>
<dbReference type="PDBsum" id="4Y53"/>
<dbReference type="PDBsum" id="4Y54"/>
<dbReference type="PDBsum" id="4Y56"/>
<dbReference type="PDBsum" id="4Y57"/>
<dbReference type="PDBsum" id="4Y58"/>
<dbReference type="PDBsum" id="4Y5A"/>
<dbReference type="PDBsum" id="4Y5B"/>
<dbReference type="PDBsum" id="4Y5C"/>
<dbReference type="PDBsum" id="4Y5E"/>
<dbReference type="PDBsum" id="4Y5G"/>
<dbReference type="PDBsum" id="4Y5K"/>
<dbReference type="PDBsum" id="4Y5L"/>
<dbReference type="PDBsum" id="4Y5M"/>
<dbReference type="PDBsum" id="4Y5N"/>
<dbReference type="PDBsum" id="4Y5P"/>
<dbReference type="PDBsum" id="4YCK"/>
<dbReference type="PDBsum" id="4YCT"/>
<dbReference type="PDBsum" id="4YCY"/>
<dbReference type="PDBsum" id="4YD3"/>
<dbReference type="PDBsum" id="4YD4"/>
<dbReference type="PDBsum" id="4YD5"/>
<dbReference type="PDBsum" id="4YD6"/>
<dbReference type="PDBsum" id="4YD7"/>
<dbReference type="PDBsum" id="4ZE6"/>
<dbReference type="PDBsum" id="4ZEA"/>
<dbReference type="PDBsum" id="5DPZ"/>
<dbReference type="PDBsum" id="5DQ1"/>
<dbReference type="PDBsum" id="5DQ2"/>
<dbReference type="PDBsum" id="5DQ4"/>
<dbReference type="PDBsum" id="5DQ5"/>
<dbReference type="PDBsum" id="5DR0"/>
<dbReference type="PDBsum" id="5DR1"/>
<dbReference type="PDBsum" id="5DR3"/>
<dbReference type="PDBsum" id="5DR4"/>
<dbReference type="PDBsum" id="5DR7"/>
<dbReference type="PDBsum" id="5DR8"/>
<dbReference type="PDBsum" id="5ER1"/>
<dbReference type="PDBsum" id="5ER2"/>
<dbReference type="PDBsum" id="5HCO"/>
<dbReference type="PDBsum" id="5HCT"/>
<dbReference type="PDBsum" id="5IS4"/>
<dbReference type="PDBsum" id="5ISJ"/>
<dbReference type="PDBsum" id="5ISK"/>
<dbReference type="PDBsum" id="5J25"/>
<dbReference type="PDBsum" id="5LWR"/>
<dbReference type="PDBsum" id="5LWS"/>
<dbReference type="PDBsum" id="5LWT"/>
<dbReference type="PDBsum" id="5LWU"/>
<dbReference type="PDBsum" id="5MB0"/>
<dbReference type="PDBsum" id="5MB3"/>
<dbReference type="PDBsum" id="5MB5"/>
<dbReference type="PDBsum" id="5MB6"/>
<dbReference type="PDBsum" id="5MB7"/>
<dbReference type="PDBsum" id="5OG7"/>
<dbReference type="PDBsum" id="5OJE"/>
<dbReference type="PDBsum" id="5OYQ"/>
<dbReference type="PDBsum" id="5OYR"/>
<dbReference type="PDBsum" id="5OYS"/>
<dbReference type="PDBsum" id="5OYT"/>
<dbReference type="PDBsum" id="5OYU"/>
<dbReference type="PDBsum" id="5OYV"/>
<dbReference type="PDBsum" id="5OYW"/>
<dbReference type="PDBsum" id="5OYX"/>
<dbReference type="PDBsum" id="5OYY"/>
<dbReference type="PDBsum" id="5OYZ"/>
<dbReference type="PDBsum" id="5OZ0"/>
<dbReference type="PDBsum" id="5OZ1"/>
<dbReference type="PDBsum" id="5OZ2"/>
<dbReference type="PDBsum" id="5OZ3"/>
<dbReference type="PDBsum" id="5OZ4"/>
<dbReference type="PDBsum" id="5OZ5"/>
<dbReference type="PDBsum" id="5OZ6"/>
<dbReference type="PDBsum" id="5OZ7"/>
<dbReference type="PDBsum" id="5OZ8"/>
<dbReference type="PDBsum" id="5OZ9"/>
<dbReference type="PDBsum" id="5OZA"/>
<dbReference type="PDBsum" id="5OZB"/>
<dbReference type="PDBsum" id="5OZC"/>
<dbReference type="PDBsum" id="5OZD"/>
<dbReference type="PDBsum" id="5OZE"/>
<dbReference type="PDBsum" id="5OZF"/>
<dbReference type="PDBsum" id="5OZG"/>
<dbReference type="PDBsum" id="5OZH"/>
<dbReference type="PDBsum" id="5OZI"/>
<dbReference type="PDBsum" id="5OZJ"/>
<dbReference type="PDBsum" id="5OZK"/>
<dbReference type="PDBsum" id="5OZL"/>
<dbReference type="PDBsum" id="5OZM"/>
<dbReference type="PDBsum" id="5OZN"/>
<dbReference type="PDBsum" id="5OZO"/>
<dbReference type="PDBsum" id="5OZP"/>
<dbReference type="PDBsum" id="5OZQ"/>
<dbReference type="PDBsum" id="5OZR"/>
<dbReference type="PDBsum" id="5OZS"/>
<dbReference type="PDBsum" id="5OZT"/>
<dbReference type="PDBsum" id="5OZU"/>
<dbReference type="PDBsum" id="5OZV"/>
<dbReference type="PDBsum" id="5OZW"/>
<dbReference type="PDBsum" id="5OZX"/>
<dbReference type="PDBsum" id="5OZY"/>
<dbReference type="PDBsum" id="5OZZ"/>
<dbReference type="PDBsum" id="5P00"/>
<dbReference type="PDBsum" id="5P01"/>
<dbReference type="PDBsum" id="5P02"/>
<dbReference type="PDBsum" id="5P03"/>
<dbReference type="PDBsum" id="5P04"/>
<dbReference type="PDBsum" id="5P05"/>
<dbReference type="PDBsum" id="5P06"/>
<dbReference type="PDBsum" id="5P07"/>
<dbReference type="PDBsum" id="5P08"/>
<dbReference type="PDBsum" id="5P09"/>
<dbReference type="PDBsum" id="5P0A"/>
<dbReference type="PDBsum" id="5P0B"/>
<dbReference type="PDBsum" id="5P0C"/>
<dbReference type="PDBsum" id="5P0D"/>
<dbReference type="PDBsum" id="5P0E"/>
<dbReference type="PDBsum" id="5P0F"/>
<dbReference type="PDBsum" id="5P0G"/>
<dbReference type="PDBsum" id="5P0H"/>
<dbReference type="PDBsum" id="5P0I"/>
<dbReference type="PDBsum" id="5P0J"/>
<dbReference type="PDBsum" id="5P0K"/>
<dbReference type="PDBsum" id="5P0L"/>
<dbReference type="PDBsum" id="5P0M"/>
<dbReference type="PDBsum" id="5P0N"/>
<dbReference type="PDBsum" id="5P0O"/>
<dbReference type="PDBsum" id="5P0P"/>
<dbReference type="PDBsum" id="5P0Q"/>
<dbReference type="PDBsum" id="5P0R"/>
<dbReference type="PDBsum" id="5P0S"/>
<dbReference type="PDBsum" id="5P0T"/>
<dbReference type="PDBsum" id="5P0U"/>
<dbReference type="PDBsum" id="5P0V"/>
<dbReference type="PDBsum" id="5P0W"/>
<dbReference type="PDBsum" id="5P0X"/>
<dbReference type="PDBsum" id="5P0Y"/>
<dbReference type="PDBsum" id="5P0Z"/>
<dbReference type="PDBsum" id="5P10"/>
<dbReference type="PDBsum" id="5P11"/>
<dbReference type="PDBsum" id="5P12"/>
<dbReference type="PDBsum" id="5P13"/>
<dbReference type="PDBsum" id="5P14"/>
<dbReference type="PDBsum" id="5P15"/>
<dbReference type="PDBsum" id="5P16"/>
<dbReference type="PDBsum" id="5P17"/>
<dbReference type="PDBsum" id="5P18"/>
<dbReference type="PDBsum" id="5P19"/>
<dbReference type="PDBsum" id="5P1A"/>
<dbReference type="PDBsum" id="5P1B"/>
<dbReference type="PDBsum" id="5P1C"/>
<dbReference type="PDBsum" id="5P1D"/>
<dbReference type="PDBsum" id="5P1E"/>
<dbReference type="PDBsum" id="5P1F"/>
<dbReference type="PDBsum" id="5P1G"/>
<dbReference type="PDBsum" id="5P1H"/>
<dbReference type="PDBsum" id="5P1I"/>
<dbReference type="PDBsum" id="5P1J"/>
<dbReference type="PDBsum" id="5P1K"/>
<dbReference type="PDBsum" id="5P1L"/>
<dbReference type="PDBsum" id="5P1M"/>
<dbReference type="PDBsum" id="5P1N"/>
<dbReference type="PDBsum" id="5P1O"/>
<dbReference type="PDBsum" id="5P1P"/>
<dbReference type="PDBsum" id="5P1Q"/>
<dbReference type="PDBsum" id="5P1R"/>
<dbReference type="PDBsum" id="5P1S"/>
<dbReference type="PDBsum" id="5P1T"/>
<dbReference type="PDBsum" id="5P1U"/>
<dbReference type="PDBsum" id="5P1V"/>
<dbReference type="PDBsum" id="5P1W"/>
<dbReference type="PDBsum" id="5P1X"/>
<dbReference type="PDBsum" id="5P1Y"/>
<dbReference type="PDBsum" id="5P1Z"/>
<dbReference type="PDBsum" id="5P20"/>
<dbReference type="PDBsum" id="5P22"/>
<dbReference type="PDBsum" id="5P23"/>
<dbReference type="PDBsum" id="5P24"/>
<dbReference type="PDBsum" id="5P25"/>
<dbReference type="PDBsum" id="5P26"/>
<dbReference type="PDBsum" id="5P27"/>
<dbReference type="PDBsum" id="5P28"/>
<dbReference type="PDBsum" id="5P29"/>
<dbReference type="PDBsum" id="5P2A"/>
<dbReference type="PDBsum" id="5P2B"/>
<dbReference type="PDBsum" id="5P2C"/>
<dbReference type="PDBsum" id="5P2D"/>
<dbReference type="PDBsum" id="5P2E"/>
<dbReference type="PDBsum" id="5P2F"/>
<dbReference type="PDBsum" id="5P2G"/>
<dbReference type="PDBsum" id="5P2H"/>
<dbReference type="PDBsum" id="5P2I"/>
<dbReference type="PDBsum" id="5P2J"/>
<dbReference type="PDBsum" id="5P2K"/>
<dbReference type="PDBsum" id="5P2L"/>
<dbReference type="PDBsum" id="5P2M"/>
<dbReference type="PDBsum" id="5P2N"/>
<dbReference type="PDBsum" id="5P2O"/>
<dbReference type="PDBsum" id="5P2Q"/>
<dbReference type="PDBsum" id="5P2R"/>
<dbReference type="PDBsum" id="5P2S"/>
<dbReference type="PDBsum" id="5P2T"/>
<dbReference type="PDBsum" id="5P2U"/>
<dbReference type="PDBsum" id="5P2V"/>
<dbReference type="PDBsum" id="5P2W"/>
<dbReference type="PDBsum" id="5P2X"/>
<dbReference type="PDBsum" id="5P2Y"/>
<dbReference type="PDBsum" id="5P2Z"/>
<dbReference type="PDBsum" id="5P30"/>
<dbReference type="PDBsum" id="5P31"/>
<dbReference type="PDBsum" id="5P32"/>
<dbReference type="PDBsum" id="5P33"/>
<dbReference type="PDBsum" id="5P34"/>
<dbReference type="PDBsum" id="5P35"/>
<dbReference type="PDBsum" id="5P36"/>
<dbReference type="PDBsum" id="5P37"/>
<dbReference type="PDBsum" id="5P38"/>
<dbReference type="PDBsum" id="5P39"/>
<dbReference type="PDBsum" id="5P3A"/>
<dbReference type="PDBsum" id="5P3B"/>
<dbReference type="PDBsum" id="5P3C"/>
<dbReference type="PDBsum" id="5P3D"/>
<dbReference type="PDBsum" id="5P3E"/>
<dbReference type="PDBsum" id="5P3F"/>
<dbReference type="PDBsum" id="5P3G"/>
<dbReference type="PDBsum" id="5P3H"/>
<dbReference type="PDBsum" id="5P3I"/>
<dbReference type="PDBsum" id="5P3J"/>
<dbReference type="PDBsum" id="5P3K"/>
<dbReference type="PDBsum" id="5P3L"/>
<dbReference type="PDBsum" id="5P3M"/>
<dbReference type="PDBsum" id="5P3N"/>
<dbReference type="PDBsum" id="5P3O"/>
<dbReference type="PDBsum" id="5P3P"/>
<dbReference type="PDBsum" id="5P3Q"/>
<dbReference type="PDBsum" id="5P3R"/>
<dbReference type="PDBsum" id="5P3S"/>
<dbReference type="PDBsum" id="5P3T"/>
<dbReference type="PDBsum" id="5P3U"/>
<dbReference type="PDBsum" id="5P3V"/>
<dbReference type="PDBsum" id="5P3W"/>
<dbReference type="PDBsum" id="5P3X"/>
<dbReference type="PDBsum" id="5P3Y"/>
<dbReference type="PDBsum" id="5P3Z"/>
<dbReference type="PDBsum" id="5P40"/>
<dbReference type="PDBsum" id="5P41"/>
<dbReference type="PDBsum" id="5P42"/>
<dbReference type="PDBsum" id="5P43"/>
<dbReference type="PDBsum" id="5P44"/>
<dbReference type="PDBsum" id="5P45"/>
<dbReference type="PDBsum" id="5P46"/>
<dbReference type="PDBsum" id="5P47"/>
<dbReference type="PDBsum" id="5P48"/>
<dbReference type="PDBsum" id="5P49"/>
<dbReference type="PDBsum" id="5P4A"/>
<dbReference type="PDBsum" id="5P4B"/>
<dbReference type="PDBsum" id="5P4C"/>
<dbReference type="PDBsum" id="5P4D"/>
<dbReference type="PDBsum" id="5P4E"/>
<dbReference type="PDBsum" id="5P4F"/>
<dbReference type="PDBsum" id="5P4G"/>
<dbReference type="PDBsum" id="5P4H"/>
<dbReference type="PDBsum" id="5P4I"/>
<dbReference type="PDBsum" id="5P4J"/>
<dbReference type="PDBsum" id="5P4K"/>
<dbReference type="PDBsum" id="5P4L"/>
<dbReference type="PDBsum" id="5P4M"/>
<dbReference type="PDBsum" id="5P4N"/>
<dbReference type="PDBsum" id="5P4O"/>
<dbReference type="PDBsum" id="5P4P"/>
<dbReference type="PDBsum" id="5P4Q"/>
<dbReference type="PDBsum" id="5P4R"/>
<dbReference type="PDBsum" id="5P4S"/>
<dbReference type="PDBsum" id="5P4T"/>
<dbReference type="PDBsum" id="5P4U"/>
<dbReference type="PDBsum" id="5P4V"/>
<dbReference type="PDBsum" id="5P4W"/>
<dbReference type="PDBsum" id="5P4X"/>
<dbReference type="PDBsum" id="5P4Y"/>
<dbReference type="PDBsum" id="5P4Z"/>
<dbReference type="PDBsum" id="5P50"/>
<dbReference type="PDBsum" id="5P51"/>
<dbReference type="PDBsum" id="5P52"/>
<dbReference type="PDBsum" id="5P53"/>
<dbReference type="PDBsum" id="5P54"/>
<dbReference type="PDBsum" id="5P55"/>
<dbReference type="PDBsum" id="5P56"/>
<dbReference type="PDBsum" id="5P57"/>
<dbReference type="PDBsum" id="5P58"/>
<dbReference type="PDBsum" id="5P59"/>
<dbReference type="PDBsum" id="5P5A"/>
<dbReference type="PDBsum" id="5P5B"/>
<dbReference type="PDBsum" id="5P5C"/>
<dbReference type="PDBsum" id="5P5D"/>
<dbReference type="PDBsum" id="5P5E"/>
<dbReference type="PDBsum" id="5P5F"/>
<dbReference type="PDBsum" id="5P5G"/>
<dbReference type="PDBsum" id="5P5H"/>
<dbReference type="PDBsum" id="5P5I"/>
<dbReference type="PDBsum" id="5P5J"/>
<dbReference type="PDBsum" id="5P5K"/>
<dbReference type="PDBsum" id="5P5L"/>
<dbReference type="PDBsum" id="5P5M"/>
<dbReference type="PDBsum" id="5P5N"/>
<dbReference type="PDBsum" id="5P5O"/>
<dbReference type="PDBsum" id="5P5P"/>
<dbReference type="PDBsum" id="5P5Q"/>
<dbReference type="PDBsum" id="5P5R"/>
<dbReference type="PDBsum" id="5P5S"/>
<dbReference type="PDBsum" id="5P5T"/>
<dbReference type="PDBsum" id="5P5U"/>
<dbReference type="PDBsum" id="5P5V"/>
<dbReference type="PDBsum" id="5P5W"/>
<dbReference type="PDBsum" id="5P5X"/>
<dbReference type="PDBsum" id="5P5Y"/>
<dbReference type="PDBsum" id="5P5Z"/>
<dbReference type="PDBsum" id="5P60"/>
<dbReference type="PDBsum" id="5P61"/>
<dbReference type="PDBsum" id="5P62"/>
<dbReference type="PDBsum" id="5P63"/>
<dbReference type="PDBsum" id="5P64"/>
<dbReference type="PDBsum" id="5P65"/>
<dbReference type="PDBsum" id="5P66"/>
<dbReference type="PDBsum" id="5P67"/>
<dbReference type="PDBsum" id="5P68"/>
<dbReference type="PDBsum" id="5P69"/>
<dbReference type="PDBsum" id="5P6A"/>
<dbReference type="PDBsum" id="5P6B"/>
<dbReference type="PDBsum" id="5P6C"/>
<dbReference type="PDBsum" id="5P6D"/>
<dbReference type="PDBsum" id="5P6E"/>
<dbReference type="PDBsum" id="5P6F"/>
<dbReference type="PDBsum" id="5P6G"/>
<dbReference type="PDBsum" id="5P6H"/>
<dbReference type="PDBsum" id="5P6I"/>
<dbReference type="PDBsum" id="5P6J"/>
<dbReference type="PDBsum" id="5P6K"/>
<dbReference type="PDBsum" id="5P6L"/>
<dbReference type="PDBsum" id="5P6M"/>
<dbReference type="PDBsum" id="5P6N"/>
<dbReference type="PDBsum" id="5P6O"/>
<dbReference type="PDBsum" id="5P6P"/>
<dbReference type="PDBsum" id="5P6Q"/>
<dbReference type="PDBsum" id="5P6R"/>
<dbReference type="PDBsum" id="5P6S"/>
<dbReference type="PDBsum" id="5P6T"/>
<dbReference type="PDBsum" id="5P6U"/>
<dbReference type="PDBsum" id="5P6V"/>
<dbReference type="PDBsum" id="5P6W"/>
<dbReference type="PDBsum" id="5P6X"/>
<dbReference type="PDBsum" id="5P6Y"/>
<dbReference type="PDBsum" id="5P6Z"/>
<dbReference type="PDBsum" id="5P70"/>
<dbReference type="PDBsum" id="5P71"/>
<dbReference type="PDBsum" id="5P72"/>
<dbReference type="PDBsum" id="5P73"/>
<dbReference type="PDBsum" id="5P74"/>
<dbReference type="PDBsum" id="5P75"/>
<dbReference type="PDBsum" id="5P76"/>
<dbReference type="PDBsum" id="5P77"/>
<dbReference type="PDBsum" id="5P78"/>
<dbReference type="PDBsum" id="5P79"/>
<dbReference type="PDBsum" id="5P7A"/>
<dbReference type="PDBsum" id="5P7B"/>
<dbReference type="PDBsum" id="5P7C"/>
<dbReference type="PDBsum" id="5P7D"/>
<dbReference type="PDBsum" id="5P7E"/>
<dbReference type="PDBsum" id="5P7F"/>
<dbReference type="PDBsum" id="5P7G"/>
<dbReference type="PDBsum" id="5P7H"/>
<dbReference type="PDBsum" id="5P7I"/>
<dbReference type="PDBsum" id="5P7J"/>
<dbReference type="PDBsum" id="5P7K"/>
<dbReference type="PDBsum" id="5P7L"/>
<dbReference type="PDBsum" id="5P7M"/>
<dbReference type="PDBsum" id="5P7N"/>
<dbReference type="PDBsum" id="5P7O"/>
<dbReference type="PDBsum" id="5P7P"/>
<dbReference type="PDBsum" id="5P7Q"/>
<dbReference type="PDBsum" id="5P7R"/>
<dbReference type="PDBsum" id="5P7S"/>
<dbReference type="PDBsum" id="5P7T"/>
<dbReference type="PDBsum" id="5P7U"/>
<dbReference type="PDBsum" id="5P7V"/>
<dbReference type="PDBsum" id="5P7W"/>
<dbReference type="PDBsum" id="5P7X"/>
<dbReference type="PDBsum" id="5P7Y"/>
<dbReference type="PDBsum" id="5P7Z"/>
<dbReference type="PDBsum" id="5P80"/>
<dbReference type="PDBsum" id="5P81"/>
<dbReference type="PDBsum" id="5P82"/>
<dbReference type="PDBsum" id="5P83"/>
<dbReference type="PDBsum" id="5P84"/>
<dbReference type="PDBsum" id="5P85"/>
<dbReference type="PDBsum" id="5P86"/>
<dbReference type="PDBsum" id="5P87"/>
<dbReference type="PDBsum" id="5P88"/>
<dbReference type="PDBsum" id="5P89"/>
<dbReference type="PDBsum" id="5P8A"/>
<dbReference type="PDBsum" id="5P8B"/>
<dbReference type="PDBsum" id="5P8C"/>
<dbReference type="PDBsum" id="5P8D"/>
<dbReference type="PDBsum" id="5P8E"/>
<dbReference type="PDBsum" id="5P8F"/>
<dbReference type="PDBsum" id="5P8G"/>
<dbReference type="PDBsum" id="5P8H"/>
<dbReference type="PDBsum" id="5P8I"/>
<dbReference type="PDBsum" id="5P8J"/>
<dbReference type="PDBsum" id="5P8K"/>
<dbReference type="PDBsum" id="5P8L"/>
<dbReference type="PDBsum" id="5P8M"/>
<dbReference type="PDBsum" id="5P8N"/>
<dbReference type="PDBsum" id="5P8O"/>
<dbReference type="PDBsum" id="5P8P"/>
<dbReference type="PDBsum" id="5P8Q"/>
<dbReference type="PDBsum" id="5P8R"/>
<dbReference type="PDBsum" id="5P8S"/>
<dbReference type="PDBsum" id="5P8T"/>
<dbReference type="PDBsum" id="5P8U"/>
<dbReference type="PDBsum" id="5P8V"/>
<dbReference type="PDBsum" id="5QB5"/>
<dbReference type="PDBsum" id="5QB6"/>
<dbReference type="PDBsum" id="5QB7"/>
<dbReference type="PDBsum" id="5QB8"/>
<dbReference type="PDBsum" id="5QB9"/>
<dbReference type="PDBsum" id="5QBA"/>
<dbReference type="PDBsum" id="5QBB"/>
<dbReference type="PDBsum" id="5QBC"/>
<dbReference type="PDBsum" id="5QBD"/>
<dbReference type="PDBsum" id="5QBE"/>
<dbReference type="PDBsum" id="5QBF"/>
<dbReference type="PDBsum" id="5QBG"/>
<dbReference type="PDBsum" id="5QBH"/>
<dbReference type="PDBsum" id="5QBI"/>
<dbReference type="PDBsum" id="5QBJ"/>
<dbReference type="PDBsum" id="5QBK"/>
<dbReference type="PDBsum" id="5QBL"/>
<dbReference type="PDBsum" id="5QBM"/>
<dbReference type="PDBsum" id="5QBN"/>
<dbReference type="PDBsum" id="5QBO"/>
<dbReference type="PDBsum" id="5QBP"/>
<dbReference type="PDBsum" id="5QBQ"/>
<dbReference type="PDBsum" id="5QBR"/>
<dbReference type="PDBsum" id="5QBS"/>
<dbReference type="PDBsum" id="5QBT"/>
<dbReference type="PDBsum" id="5R1T"/>
<dbReference type="PDBsum" id="5R1U"/>
<dbReference type="PDBsum" id="5R1V"/>
<dbReference type="PDBsum" id="5R1W"/>
<dbReference type="PDBsum" id="5R1X"/>
<dbReference type="PDBsum" id="5R1Y"/>
<dbReference type="PDBsum" id="5R1Z"/>
<dbReference type="PDBsum" id="5R20"/>
<dbReference type="PDBsum" id="5R21"/>
<dbReference type="PDBsum" id="5R22"/>
<dbReference type="PDBsum" id="5R23"/>
<dbReference type="PDBsum" id="5R24"/>
<dbReference type="PDBsum" id="5R25"/>
<dbReference type="PDBsum" id="5R26"/>
<dbReference type="PDBsum" id="5R27"/>
<dbReference type="PDBsum" id="5R28"/>
<dbReference type="PDBsum" id="5R29"/>
<dbReference type="PDBsum" id="5R2A"/>
<dbReference type="PDBsum" id="5R2B"/>
<dbReference type="PDBsum" id="5R2C"/>
<dbReference type="PDBsum" id="5R2D"/>
<dbReference type="PDBsum" id="5R2E"/>
<dbReference type="PDBsum" id="5R2F"/>
<dbReference type="PDBsum" id="5R2G"/>
<dbReference type="PDBsum" id="5R2H"/>
<dbReference type="PDBsum" id="5R2I"/>
<dbReference type="PDBsum" id="5R2J"/>
<dbReference type="PDBsum" id="5R2K"/>
<dbReference type="PDBsum" id="5R2L"/>
<dbReference type="PDBsum" id="5R2M"/>
<dbReference type="PDBsum" id="5R2N"/>
<dbReference type="PDBsum" id="5R2O"/>
<dbReference type="PDBsum" id="5R2P"/>
<dbReference type="PDBsum" id="5R2Q"/>
<dbReference type="PDBsum" id="5R2R"/>
<dbReference type="PDBsum" id="5R2S"/>
<dbReference type="PDBsum" id="5R2T"/>
<dbReference type="PDBsum" id="5R2U"/>
<dbReference type="PDBsum" id="5R2V"/>
<dbReference type="PDBsum" id="5R2W"/>
<dbReference type="PDBsum" id="5R2X"/>
<dbReference type="PDBsum" id="5R2Y"/>
<dbReference type="PDBsum" id="5R2Z"/>
<dbReference type="PDBsum" id="5R30"/>
<dbReference type="PDBsum" id="5R31"/>
<dbReference type="PDBsum" id="5R32"/>
<dbReference type="PDBsum" id="5R33"/>
<dbReference type="PDBsum" id="5R34"/>
<dbReference type="PDBsum" id="5R35"/>
<dbReference type="PDBsum" id="5R36"/>
<dbReference type="PDBsum" id="5R37"/>
<dbReference type="PDBsum" id="5R38"/>
<dbReference type="PDBsum" id="5R39"/>
<dbReference type="PDBsum" id="5R3A"/>
<dbReference type="PDBsum" id="5R3B"/>
<dbReference type="PDBsum" id="5R3C"/>
<dbReference type="PDBsum" id="5R3D"/>
<dbReference type="PDBsum" id="5R3E"/>
<dbReference type="PDBsum" id="5R3F"/>
<dbReference type="PDBsum" id="5R3G"/>
<dbReference type="PDBsum" id="5R3H"/>
<dbReference type="PDBsum" id="5R3I"/>
<dbReference type="PDBsum" id="5R3J"/>
<dbReference type="PDBsum" id="5R3K"/>
<dbReference type="PDBsum" id="5R3L"/>
<dbReference type="PDBsum" id="5R3M"/>
<dbReference type="PDBsum" id="5R3N"/>
<dbReference type="PDBsum" id="5R3O"/>
<dbReference type="PDBsum" id="5R3P"/>
<dbReference type="PDBsum" id="5R3Q"/>
<dbReference type="PDBsum" id="5R3R"/>
<dbReference type="PDBsum" id="5R3S"/>
<dbReference type="PDBsum" id="5R3T"/>
<dbReference type="PDBsum" id="5R3U"/>
<dbReference type="PDBsum" id="5R3V"/>
<dbReference type="PDBsum" id="5R3W"/>
<dbReference type="PDBsum" id="5R3X"/>
<dbReference type="PDBsum" id="5R3Y"/>
<dbReference type="PDBsum" id="5R3Z"/>
<dbReference type="PDBsum" id="5R40"/>
<dbReference type="PDBsum" id="5R41"/>
<dbReference type="PDBsum" id="5RBO"/>
<dbReference type="PDBsum" id="5RBP"/>
<dbReference type="PDBsum" id="5RBQ"/>
<dbReference type="PDBsum" id="5RBR"/>
<dbReference type="PDBsum" id="5RBS"/>
<dbReference type="PDBsum" id="5RBT"/>
<dbReference type="PDBsum" id="5RBU"/>
<dbReference type="PDBsum" id="5RBV"/>
<dbReference type="PDBsum" id="5RBW"/>
<dbReference type="PDBsum" id="5RBX"/>
<dbReference type="PDBsum" id="5RBY"/>
<dbReference type="PDBsum" id="5RBZ"/>
<dbReference type="PDBsum" id="5RC0"/>
<dbReference type="PDBsum" id="5RC1"/>
<dbReference type="PDBsum" id="5RC2"/>
<dbReference type="PDBsum" id="5RC3"/>
<dbReference type="PDBsum" id="5RC4"/>
<dbReference type="PDBsum" id="5RC5"/>
<dbReference type="PDBsum" id="5RC6"/>
<dbReference type="PDBsum" id="5RC7"/>
<dbReference type="PDBsum" id="5RC8"/>
<dbReference type="PDBsum" id="5RC9"/>
<dbReference type="PDBsum" id="5RCA"/>
<dbReference type="PDBsum" id="5RCB"/>
<dbReference type="PDBsum" id="5RCC"/>
<dbReference type="PDBsum" id="5RCD"/>
<dbReference type="PDBsum" id="5RCE"/>
<dbReference type="PDBsum" id="5RCF"/>
<dbReference type="PDBsum" id="5RCG"/>
<dbReference type="PDBsum" id="5RCH"/>
<dbReference type="PDBsum" id="5RCI"/>
<dbReference type="PDBsum" id="5RCJ"/>
<dbReference type="PDBsum" id="5RCK"/>
<dbReference type="PDBsum" id="5RCL"/>
<dbReference type="PDBsum" id="5RCM"/>
<dbReference type="PDBsum" id="5RCN"/>
<dbReference type="PDBsum" id="5RCO"/>
<dbReference type="PDBsum" id="5RCP"/>
<dbReference type="PDBsum" id="5RCQ"/>
<dbReference type="PDBsum" id="5RCR"/>
<dbReference type="PDBsum" id="5RCS"/>
<dbReference type="PDBsum" id="5RCT"/>
<dbReference type="PDBsum" id="5RCU"/>
<dbReference type="PDBsum" id="5RCV"/>
<dbReference type="PDBsum" id="5RCW"/>
<dbReference type="PDBsum" id="5RCX"/>
<dbReference type="PDBsum" id="5RCY"/>
<dbReference type="PDBsum" id="5RCZ"/>
<dbReference type="PDBsum" id="5RD0"/>
<dbReference type="PDBsum" id="5RD1"/>
<dbReference type="PDBsum" id="5RD2"/>
<dbReference type="PDBsum" id="5RD3"/>
<dbReference type="PDBsum" id="5RD4"/>
<dbReference type="PDBsum" id="5RD5"/>
<dbReference type="PDBsum" id="5RD6"/>
<dbReference type="PDBsum" id="5RD7"/>
<dbReference type="PDBsum" id="5RD8"/>
<dbReference type="PDBsum" id="5RD9"/>
<dbReference type="PDBsum" id="5RDA"/>
<dbReference type="PDBsum" id="5RDB"/>
<dbReference type="PDBsum" id="5RDC"/>
<dbReference type="PDBsum" id="5RDD"/>
<dbReference type="PDBsum" id="5RDE"/>
<dbReference type="PDBsum" id="5RDF"/>
<dbReference type="PDBsum" id="5RDG"/>
<dbReference type="PDBsum" id="5RDH"/>
<dbReference type="PDBsum" id="5RDI"/>
<dbReference type="PDBsum" id="5RDJ"/>
<dbReference type="PDBsum" id="5RDK"/>
<dbReference type="PDBsum" id="5RDL"/>
<dbReference type="PDBsum" id="5RDM"/>
<dbReference type="PDBsum" id="5RDN"/>
<dbReference type="PDBsum" id="5RDO"/>
<dbReference type="PDBsum" id="5RDP"/>
<dbReference type="PDBsum" id="5RDQ"/>
<dbReference type="PDBsum" id="5RDR"/>
<dbReference type="PDBsum" id="5RDS"/>
<dbReference type="PDBsum" id="5RDT"/>
<dbReference type="PDBsum" id="5RDU"/>
<dbReference type="PDBsum" id="5RDV"/>
<dbReference type="PDBsum" id="5RDW"/>
<dbReference type="PDBsum" id="5RDX"/>
<dbReference type="PDBsum" id="5RDY"/>
<dbReference type="PDBsum" id="5RDZ"/>
<dbReference type="PDBsum" id="5RE0"/>
<dbReference type="PDBsum" id="5RE1"/>
<dbReference type="PDBsum" id="5RE2"/>
<dbReference type="PDBsum" id="5RE3"/>
<dbReference type="PDBsum" id="5SAK"/>
<dbReference type="PDBsum" id="5SAL"/>
<dbReference type="PDBsum" id="5SAM"/>
<dbReference type="PDBsum" id="5SAN"/>
<dbReference type="PDBsum" id="5SAO"/>
<dbReference type="PDBsum" id="5SAP"/>
<dbReference type="PDBsum" id="5SAQ"/>
<dbReference type="PDBsum" id="5SAR"/>
<dbReference type="PDBsum" id="5SAS"/>
<dbReference type="PDBsum" id="5SAT"/>
<dbReference type="PDBsum" id="6RON"/>
<dbReference type="PDBsum" id="6RSV"/>
<dbReference type="PDBsum" id="6SCV"/>
<dbReference type="PDBsum" id="6ZZ2"/>
<dbReference type="PDBsum" id="7ADG"/>
<dbReference type="PDBsum" id="7BKR"/>
<dbReference type="PDBsum" id="7BKS"/>
<dbReference type="PDBsum" id="7BKU"/>
<dbReference type="PDBsum" id="7BKV"/>
<dbReference type="PDBsum" id="7BKW"/>
<dbReference type="PDBsum" id="7BKY"/>
<dbReference type="PDBsum" id="7BKZ"/>
<dbReference type="PDBsum" id="7H56"/>
<dbReference type="PDBsum" id="7H57"/>
<dbReference type="PDBsum" id="7H58"/>
<dbReference type="PDBsum" id="7H59"/>
<dbReference type="PDBsum" id="7H5A"/>
<dbReference type="PDBsum" id="7H5B"/>
<dbReference type="PDBsum" id="7H5C"/>
<dbReference type="PDBsum" id="7H5D"/>
<dbReference type="PDBsum" id="7H5E"/>
<dbReference type="PDBsum" id="7H5F"/>
<dbReference type="PDBsum" id="7H5G"/>
<dbReference type="PDBsum" id="7H5H"/>
<dbReference type="PDBsum" id="7H5I"/>
<dbReference type="PDBsum" id="7H5J"/>
<dbReference type="PDBsum" id="7H5K"/>
<dbReference type="PDBsum" id="7H5L"/>
<dbReference type="PDBsum" id="7H5M"/>
<dbReference type="PDBsum" id="7H5N"/>
<dbReference type="PDBsum" id="7H5O"/>
<dbReference type="PDBsum" id="7H5P"/>
<dbReference type="PDBsum" id="7H5Q"/>
<dbReference type="PDBsum" id="7H5R"/>
<dbReference type="PDBsum" id="7H5S"/>
<dbReference type="PDBsum" id="7H5T"/>
<dbReference type="PDBsum" id="7H5U"/>
<dbReference type="PDBsum" id="7H5V"/>
<dbReference type="PDBsum" id="7H5W"/>
<dbReference type="PDBsum" id="7H5X"/>
<dbReference type="PDBsum" id="7H5Y"/>
<dbReference type="PDBsum" id="7H5Z"/>
<dbReference type="PDBsum" id="7NKW"/>
<dbReference type="PDBsum" id="7QLT"/>
<dbReference type="PDBsum" id="7QLU"/>
<dbReference type="PDBsum" id="7QLV"/>
<dbReference type="PDBsum" id="7QLW"/>
<dbReference type="PDBsum" id="7QLX"/>
<dbReference type="PDBsum" id="7QLY"/>
<dbReference type="PDBsum" id="7QLZ"/>
<dbReference type="PDBsum" id="7QM0"/>
<dbReference type="PDBsum" id="7QM1"/>
<dbReference type="PDBsum" id="7QM3"/>
<dbReference type="PDBsum" id="7QM4"/>
<dbReference type="PDBsum" id="7QM5"/>
<dbReference type="PDBsum" id="7QM6"/>
<dbReference type="PDBsum" id="7QM7"/>
<dbReference type="PDBsum" id="7QM8"/>
<dbReference type="PDBsum" id="7QM9"/>
<dbReference type="PDBsum" id="7QMA"/>
<dbReference type="PDBsum" id="7QMB"/>
<dbReference type="PDBsum" id="7QMC"/>
<dbReference type="PDBsum" id="7QMD"/>
<dbReference type="PDBsum" id="7QME"/>
<dbReference type="PDBsum" id="7QMF"/>
<dbReference type="PDBsum" id="7QMG"/>
<dbReference type="PDBsum" id="7QMH"/>
<dbReference type="PDBsum" id="7QMI"/>
<dbReference type="PDBsum" id="7QMJ"/>
<dbReference type="PDBsum" id="7QMK"/>
<dbReference type="PDBsum" id="7QML"/>
<dbReference type="PDBsum" id="7QMM"/>
<dbReference type="PDBsum" id="7QMN"/>
<dbReference type="PDBsum" id="7QMO"/>
<dbReference type="PDBsum" id="7QMP"/>
<dbReference type="PDBsum" id="7QMQ"/>
<dbReference type="PDBsum" id="7QMR"/>
<dbReference type="PDBsum" id="7QMS"/>
<dbReference type="PDBsum" id="7QMT"/>
<dbReference type="PDBsum" id="7QMU"/>
<dbReference type="PDBsum" id="7QMV"/>
<dbReference type="PDBsum" id="7QMW"/>
<dbReference type="PDBsum" id="7QMX"/>
<dbReference type="PDBsum" id="7QMY"/>
<dbReference type="PDBsum" id="7QMZ"/>
<dbReference type="PDBsum" id="7QN0"/>
<dbReference type="PDBsum" id="7QN1"/>
<dbReference type="PDBsum" id="7QN2"/>
<dbReference type="PDBsum" id="7QN3"/>
<dbReference type="PDBsum" id="7QN4"/>
<dbReference type="PDBsum" id="8C6P"/>
<dbReference type="PDBsum" id="8C6Q"/>
<dbReference type="PDBsum" id="8C6S"/>
<dbReference type="PDBsum" id="8C6T"/>
<dbReference type="PDBsum" id="8C70"/>
<dbReference type="PDBsum" id="8C71"/>
<dbReference type="PDBsum" id="8C72"/>
<dbReference type="PDBsum" id="8C74"/>
<dbReference type="PDBsum" id="8PXI"/>
<dbReference type="PDBsum" id="8Q0V"/>
<dbReference type="PDBsum" id="8Q0W"/>
<dbReference type="PDBsum" id="8Q0X"/>
<dbReference type="PDBsum" id="8Q0Y"/>
<dbReference type="PDBsum" id="8Q0Z"/>
<dbReference type="PDBsum" id="8Q10"/>
<dbReference type="PDBsum" id="8Q11"/>
<dbReference type="PDBsum" id="8Q12"/>
<dbReference type="PDBsum" id="8Q13"/>
<dbReference type="PDBsum" id="8Q14"/>
<dbReference type="PDBsum" id="8Q4B"/>
<dbReference type="PDBsum" id="9FVO"/>
<dbReference type="PDBsum" id="9G34"/>
<dbReference type="PDBsum" id="9G35"/>
<dbReference type="SMR" id="P11838"/>
<dbReference type="BindingDB" id="P11838"/>
<dbReference type="ChEMBL" id="CHEMBL1075067"/>
<dbReference type="Allergome" id="3881">
    <property type="allergen name" value="Cry p AP"/>
</dbReference>
<dbReference type="MEROPS" id="A01.017"/>
<dbReference type="KEGG" id="ag:CAA44952"/>
<dbReference type="OMA" id="PGRFINY"/>
<dbReference type="BRENDA" id="3.4.23.22">
    <property type="organism ID" value="2077"/>
</dbReference>
<dbReference type="EvolutionaryTrace" id="P11838"/>
<dbReference type="GO" id="GO:0004190">
    <property type="term" value="F:aspartic-type endopeptidase activity"/>
    <property type="evidence" value="ECO:0007669"/>
    <property type="project" value="UniProtKB-KW"/>
</dbReference>
<dbReference type="GO" id="GO:0006508">
    <property type="term" value="P:proteolysis"/>
    <property type="evidence" value="ECO:0007669"/>
    <property type="project" value="UniProtKB-KW"/>
</dbReference>
<dbReference type="CDD" id="cd06097">
    <property type="entry name" value="Aspergillopepsin_like"/>
    <property type="match status" value="1"/>
</dbReference>
<dbReference type="FunFam" id="2.40.70.10:FF:000024">
    <property type="entry name" value="Endothiapepsin"/>
    <property type="match status" value="1"/>
</dbReference>
<dbReference type="FunFam" id="2.40.70.10:FF:000026">
    <property type="entry name" value="Endothiapepsin"/>
    <property type="match status" value="1"/>
</dbReference>
<dbReference type="Gene3D" id="2.40.70.10">
    <property type="entry name" value="Acid Proteases"/>
    <property type="match status" value="2"/>
</dbReference>
<dbReference type="InterPro" id="IPR001461">
    <property type="entry name" value="Aspartic_peptidase_A1"/>
</dbReference>
<dbReference type="InterPro" id="IPR001969">
    <property type="entry name" value="Aspartic_peptidase_AS"/>
</dbReference>
<dbReference type="InterPro" id="IPR034163">
    <property type="entry name" value="Aspergillopepsin-like_cat_dom"/>
</dbReference>
<dbReference type="InterPro" id="IPR033121">
    <property type="entry name" value="PEPTIDASE_A1"/>
</dbReference>
<dbReference type="InterPro" id="IPR021109">
    <property type="entry name" value="Peptidase_aspartic_dom_sf"/>
</dbReference>
<dbReference type="PANTHER" id="PTHR47966:SF2">
    <property type="entry name" value="ASPERGILLOPEPSIN-1-RELATED"/>
    <property type="match status" value="1"/>
</dbReference>
<dbReference type="PANTHER" id="PTHR47966">
    <property type="entry name" value="BETA-SITE APP-CLEAVING ENZYME, ISOFORM A-RELATED"/>
    <property type="match status" value="1"/>
</dbReference>
<dbReference type="Pfam" id="PF00026">
    <property type="entry name" value="Asp"/>
    <property type="match status" value="1"/>
</dbReference>
<dbReference type="PRINTS" id="PR00792">
    <property type="entry name" value="PEPSIN"/>
</dbReference>
<dbReference type="SUPFAM" id="SSF50630">
    <property type="entry name" value="Acid proteases"/>
    <property type="match status" value="1"/>
</dbReference>
<dbReference type="PROSITE" id="PS00141">
    <property type="entry name" value="ASP_PROTEASE"/>
    <property type="match status" value="2"/>
</dbReference>
<dbReference type="PROSITE" id="PS51767">
    <property type="entry name" value="PEPTIDASE_A1"/>
    <property type="match status" value="1"/>
</dbReference>
<accession>P11838</accession>
<comment type="catalytic activity">
    <reaction>
        <text>Hydrolysis of proteins with specificity similar to that of pepsin A, prefers hydrophobic residues at P1 and P1', but does not cleave 14-Ala-|-Leu-15 in the B chain of insulin or Z-Glu-Tyr. Clots milk.</text>
        <dbReference type="EC" id="3.4.23.22"/>
    </reaction>
</comment>
<comment type="similarity">
    <text evidence="4">Belongs to the peptidase A1 family.</text>
</comment>
<reference key="1">
    <citation type="journal article" date="1992" name="Curr. Genet.">
        <title>Cloning and mutation of the gene encoding endothiapepsin from Cryphonectria parasitica.</title>
        <authorList>
            <person name="Razanamparany V."/>
            <person name="Jara P."/>
            <person name="Legoux R."/>
            <person name="Delmas P."/>
            <person name="Msayeh F."/>
            <person name="Kaghad M."/>
            <person name="Loison G."/>
        </authorList>
    </citation>
    <scope>NUCLEOTIDE SEQUENCE [GENOMIC DNA]</scope>
</reference>
<reference key="2">
    <citation type="journal article" date="1993" name="Gene">
        <title>Molecular analysis and overexpression of the gene encoding endothiapepsin, an aspartic protease from Cryphonectria parasitica.</title>
        <authorList>
            <person name="Choi G.H."/>
            <person name="Pawlyk D.M."/>
            <person name="Rae B."/>
            <person name="Shapira R."/>
            <person name="Nuss D.L."/>
        </authorList>
    </citation>
    <scope>NUCLEOTIDE SEQUENCE [GENOMIC DNA]</scope>
    <source>
        <strain>ATCC 38755 / EP155</strain>
    </source>
</reference>
<reference key="3">
    <citation type="journal article" date="1987" name="Eur. J. Biochem.">
        <title>Amino acid sequence of endothiapepsin. Complete primary structure of the aspartic protease from Endothia parasitica.</title>
        <authorList>
            <person name="Barkholt V."/>
        </authorList>
    </citation>
    <scope>PROTEIN SEQUENCE OF 90-419</scope>
</reference>
<reference key="4">
    <citation type="journal article" date="1977" name="Proc. Natl. Acad. Sci. U.S.A.">
        <title>Homology among acid proteases: comparison of crystal structures at 3-A resolution of acid proteases from Rhizopus chinensis and Endothia parasitica.</title>
        <authorList>
            <person name="Subramanian E."/>
            <person name="Swan I.D.A."/>
            <person name="Liu M."/>
            <person name="Davies D.R."/>
            <person name="Jenkins J.A."/>
            <person name="Tickle I.J."/>
            <person name="Blundell T.L."/>
        </authorList>
    </citation>
    <scope>X-RAY CRYSTALLOGRAPHY (3.0 ANGSTROMS) OF 90-419</scope>
</reference>
<reference key="5">
    <citation type="journal article" date="1990" name="J. Mol. Biol.">
        <title>X-ray analyses of aspartic proteinases. The three-dimensional structure at 2.1-A resolution of endothiapepsin.</title>
        <authorList>
            <person name="Blundell T.L."/>
            <person name="Jenkins J.A."/>
            <person name="Sewell B.T."/>
            <person name="Pearl L.H."/>
            <person name="Cooper J.B."/>
            <person name="Tickle I.J."/>
            <person name="Veerapandian B."/>
            <person name="Wood S.P."/>
        </authorList>
    </citation>
    <scope>X-RAY CRYSTALLOGRAPHY (2.1 ANGSTROMS) OF 90-419</scope>
</reference>
<reference key="6">
    <citation type="journal article" date="1989" name="EMBO J.">
        <title>High-resolution X-ray diffraction study of the complex between endothiapepsin and an oligopeptide inhibitor: the analysis of the inhibitor binding and description of the rigid body shift in the enzyme.</title>
        <authorList>
            <person name="Sali A."/>
            <person name="Veerapandian B."/>
            <person name="Cooper J.B."/>
            <person name="Foundling S.I."/>
            <person name="Hoover D.J."/>
            <person name="Blundell T.L."/>
        </authorList>
    </citation>
    <scope>X-RAY CRYSTALLOGRAPHY (1.8 ANGSTROMS) OF 90-419</scope>
</reference>
<reference key="7">
    <citation type="journal article" date="2002" name="J. Mol. Biol.">
        <title>Five atomic resolution structures of endothiapepsin inhibitor complexes: implications for the aspartic proteinase mechanism.</title>
        <authorList>
            <person name="Coates L."/>
            <person name="Erskine P.T."/>
            <person name="Crump M.P."/>
            <person name="Wood S.P."/>
            <person name="Cooper J.B."/>
        </authorList>
    </citation>
    <scope>X-RAY CRYSTALLOGRAPHY (0.94 ANGSTROMS) OF 90-419</scope>
</reference>
<proteinExistence type="evidence at protein level"/>
<evidence type="ECO:0000255" key="1"/>
<evidence type="ECO:0000255" key="2">
    <source>
        <dbReference type="PROSITE-ProRule" id="PRU01103"/>
    </source>
</evidence>
<evidence type="ECO:0000269" key="3">
    <source>
    </source>
</evidence>
<evidence type="ECO:0000305" key="4"/>
<evidence type="ECO:0007829" key="5">
    <source>
        <dbReference type="PDB" id="1GVX"/>
    </source>
</evidence>
<evidence type="ECO:0007829" key="6">
    <source>
        <dbReference type="PDB" id="4APE"/>
    </source>
</evidence>
<evidence type="ECO:0007829" key="7">
    <source>
        <dbReference type="PDB" id="5R27"/>
    </source>
</evidence>
<evidence type="ECO:0007829" key="8">
    <source>
        <dbReference type="PDB" id="5RDH"/>
    </source>
</evidence>
<evidence type="ECO:0007829" key="9">
    <source>
        <dbReference type="PDB" id="7NKW"/>
    </source>
</evidence>
<keyword id="KW-0002">3D-structure</keyword>
<keyword id="KW-0064">Aspartyl protease</keyword>
<keyword id="KW-0903">Direct protein sequencing</keyword>
<keyword id="KW-1015">Disulfide bond</keyword>
<keyword id="KW-0378">Hydrolase</keyword>
<keyword id="KW-0645">Protease</keyword>
<keyword id="KW-0732">Signal</keyword>
<keyword id="KW-0865">Zymogen</keyword>
<protein>
    <recommendedName>
        <fullName>Endothiapepsin</fullName>
        <ecNumber>3.4.23.22</ecNumber>
    </recommendedName>
    <alternativeName>
        <fullName>Aspartate protease</fullName>
    </alternativeName>
</protein>
<sequence>MSSPLKNALVTAMLAGGALSSPTKQHVGIPVNASPEVGPGKYSFKQVRNPNYKFNGPLSVKKTYLKYGVPIPAWLEDAVQNSTSGLAERSTGSATTTPIDSLDDAYITPVQIGTPAQTLNLDFDTGSSDLWVFSSETTASEVDGQTIYTPSKSTTAKLLSGATWSISYGDGSSSSGDVYTDTVSVGGLTVTGQAVESAKKVSSSFTEDSTIDGLLGLAFSTLNTVSPTQQKTFFDNAKASLDSPVFTADLGYHAPGTYNFGFIDTTAYTGSITYTAVSTKQGFWEWTSTGYAVGSGTFKSTSIDGIADTGTTLLYLPATVVSAYWAQVSGAKSSSSVGGYVFPCSATLPSFTFGVGSARIVIPGDYIDFGPISTGSSSCFGGIQSSAGIGINIFGDVALKAAFVVFNGATTPTLGFASK</sequence>
<gene>
    <name type="primary">EAPA</name>
    <name type="synonym">EPN-1</name>
</gene>